<name>LRRK2_HUMAN</name>
<proteinExistence type="evidence at protein level"/>
<dbReference type="EC" id="2.7.11.1" evidence="55 58 59 60 61 63 64"/>
<dbReference type="EC" id="3.6.5.-" evidence="42 55 58 59 61"/>
<dbReference type="EMBL" id="AY792511">
    <property type="protein sequence ID" value="AAV63975.1"/>
    <property type="molecule type" value="mRNA"/>
</dbReference>
<dbReference type="EMBL" id="AC079630">
    <property type="status" value="NOT_ANNOTATED_CDS"/>
    <property type="molecule type" value="Genomic_DNA"/>
</dbReference>
<dbReference type="EMBL" id="AC084290">
    <property type="status" value="NOT_ANNOTATED_CDS"/>
    <property type="molecule type" value="Genomic_DNA"/>
</dbReference>
<dbReference type="EMBL" id="AC107023">
    <property type="status" value="NOT_ANNOTATED_CDS"/>
    <property type="molecule type" value="Genomic_DNA"/>
</dbReference>
<dbReference type="EMBL" id="AL834529">
    <property type="protein sequence ID" value="CAD39185.1"/>
    <property type="molecule type" value="mRNA"/>
</dbReference>
<dbReference type="CCDS" id="CCDS31774.1"/>
<dbReference type="RefSeq" id="NP_940980.3">
    <property type="nucleotide sequence ID" value="NM_198578.3"/>
</dbReference>
<dbReference type="PDB" id="2ZEJ">
    <property type="method" value="X-ray"/>
    <property type="resolution" value="2.00 A"/>
    <property type="chains" value="A/B=1333-1516"/>
</dbReference>
<dbReference type="PDB" id="3D6T">
    <property type="method" value="X-ray"/>
    <property type="resolution" value="2.43 A"/>
    <property type="chains" value="B=1335-1505"/>
</dbReference>
<dbReference type="PDB" id="5MY9">
    <property type="method" value="X-ray"/>
    <property type="resolution" value="1.33 A"/>
    <property type="chains" value="P=929-941"/>
</dbReference>
<dbReference type="PDB" id="5MYC">
    <property type="method" value="X-ray"/>
    <property type="resolution" value="1.46 A"/>
    <property type="chains" value="P=904-941"/>
</dbReference>
<dbReference type="PDB" id="6DLO">
    <property type="method" value="X-ray"/>
    <property type="resolution" value="2.70 A"/>
    <property type="chains" value="A/B=2142-2527"/>
</dbReference>
<dbReference type="PDB" id="6DLP">
    <property type="method" value="X-ray"/>
    <property type="resolution" value="4.00 A"/>
    <property type="chains" value="A/B=2142-2527"/>
</dbReference>
<dbReference type="PDB" id="6OJE">
    <property type="method" value="X-ray"/>
    <property type="resolution" value="1.95 A"/>
    <property type="chains" value="A/B=1329-1520"/>
</dbReference>
<dbReference type="PDB" id="6OJF">
    <property type="method" value="X-ray"/>
    <property type="resolution" value="1.60 A"/>
    <property type="chains" value="A/B=1329-1520"/>
</dbReference>
<dbReference type="PDB" id="6VNO">
    <property type="method" value="EM"/>
    <property type="resolution" value="3.50 A"/>
    <property type="chains" value="A=1327-2527"/>
</dbReference>
<dbReference type="PDB" id="6VP6">
    <property type="method" value="EM"/>
    <property type="resolution" value="3.47 A"/>
    <property type="chains" value="A/B/C=1327-2527"/>
</dbReference>
<dbReference type="PDB" id="6VP7">
    <property type="method" value="EM"/>
    <property type="resolution" value="3.50 A"/>
    <property type="chains" value="A=1327-2527"/>
</dbReference>
<dbReference type="PDB" id="6XAF">
    <property type="method" value="X-ray"/>
    <property type="resolution" value="1.97 A"/>
    <property type="chains" value="A/B=1329-1520"/>
</dbReference>
<dbReference type="PDB" id="6XR4">
    <property type="method" value="EM"/>
    <property type="resolution" value="14.00 A"/>
    <property type="chains" value="A/B=1-2527"/>
</dbReference>
<dbReference type="PDB" id="7LHT">
    <property type="method" value="EM"/>
    <property type="resolution" value="3.50 A"/>
    <property type="chains" value="A/B=1-2527"/>
</dbReference>
<dbReference type="PDB" id="7LHW">
    <property type="method" value="EM"/>
    <property type="resolution" value="3.70 A"/>
    <property type="chains" value="A=1-2527"/>
</dbReference>
<dbReference type="PDB" id="7LI3">
    <property type="method" value="EM"/>
    <property type="resolution" value="3.80 A"/>
    <property type="chains" value="A=1-2527"/>
</dbReference>
<dbReference type="PDB" id="7LI4">
    <property type="method" value="EM"/>
    <property type="resolution" value="3.10 A"/>
    <property type="chains" value="A=1-2527"/>
</dbReference>
<dbReference type="PDB" id="7THY">
    <property type="method" value="EM"/>
    <property type="resolution" value="5.20 A"/>
    <property type="chains" value="A=1332-1525"/>
</dbReference>
<dbReference type="PDB" id="7THZ">
    <property type="method" value="EM"/>
    <property type="resolution" value="5.00 A"/>
    <property type="chains" value="A=1332-1525"/>
</dbReference>
<dbReference type="PDB" id="8FO2">
    <property type="method" value="EM"/>
    <property type="resolution" value="4.13 A"/>
    <property type="chains" value="E=1-2527"/>
</dbReference>
<dbReference type="PDB" id="8FO7">
    <property type="method" value="EM"/>
    <property type="resolution" value="3.52 A"/>
    <property type="chains" value="C=1327-2527"/>
</dbReference>
<dbReference type="PDB" id="8FO8">
    <property type="method" value="EM"/>
    <property type="resolution" value="3.88 A"/>
    <property type="chains" value="C/E=1-2527"/>
</dbReference>
<dbReference type="PDB" id="8FO9">
    <property type="method" value="EM"/>
    <property type="resolution" value="3.48 A"/>
    <property type="chains" value="A/C/E/F=1-2527"/>
</dbReference>
<dbReference type="PDB" id="8SMC">
    <property type="method" value="EM"/>
    <property type="resolution" value="4.02 A"/>
    <property type="chains" value="C=1327-2527"/>
</dbReference>
<dbReference type="PDB" id="8TXZ">
    <property type="method" value="EM"/>
    <property type="resolution" value="3.05 A"/>
    <property type="chains" value="A=1334-2527"/>
</dbReference>
<dbReference type="PDB" id="8TYQ">
    <property type="method" value="EM"/>
    <property type="resolution" value="2.99 A"/>
    <property type="chains" value="A=1-2527"/>
</dbReference>
<dbReference type="PDB" id="8TZB">
    <property type="method" value="EM"/>
    <property type="resolution" value="3.10 A"/>
    <property type="chains" value="A=1-2527"/>
</dbReference>
<dbReference type="PDB" id="8TZC">
    <property type="method" value="EM"/>
    <property type="resolution" value="2.70 A"/>
    <property type="chains" value="A=1333-2527"/>
</dbReference>
<dbReference type="PDB" id="8TZE">
    <property type="method" value="EM"/>
    <property type="resolution" value="2.90 A"/>
    <property type="chains" value="A=1-2527"/>
</dbReference>
<dbReference type="PDB" id="8TZF">
    <property type="method" value="EM"/>
    <property type="resolution" value="3.40 A"/>
    <property type="chains" value="A=1-2527"/>
</dbReference>
<dbReference type="PDB" id="8TZG">
    <property type="method" value="EM"/>
    <property type="resolution" value="2.70 A"/>
    <property type="chains" value="A=1333-2522"/>
</dbReference>
<dbReference type="PDB" id="8TZH">
    <property type="method" value="EM"/>
    <property type="resolution" value="3.90 A"/>
    <property type="chains" value="A=1-2527"/>
</dbReference>
<dbReference type="PDB" id="8U1B">
    <property type="method" value="EM"/>
    <property type="resolution" value="3.70 A"/>
    <property type="chains" value="A=1334-2527"/>
</dbReference>
<dbReference type="PDB" id="8U7H">
    <property type="method" value="EM"/>
    <property type="resolution" value="3.80 A"/>
    <property type="chains" value="C=1327-2527"/>
</dbReference>
<dbReference type="PDB" id="8U7L">
    <property type="method" value="EM"/>
    <property type="resolution" value="3.60 A"/>
    <property type="chains" value="A/B=1-2527"/>
</dbReference>
<dbReference type="PDB" id="8U8A">
    <property type="method" value="EM"/>
    <property type="resolution" value="3.40 A"/>
    <property type="chains" value="B/C=1-2527"/>
</dbReference>
<dbReference type="PDB" id="8U8B">
    <property type="method" value="EM"/>
    <property type="resolution" value="3.70 A"/>
    <property type="chains" value="A/B=1-2527"/>
</dbReference>
<dbReference type="PDB" id="8VH4">
    <property type="method" value="EM"/>
    <property type="resolution" value="4.10 A"/>
    <property type="chains" value="A=1-2527"/>
</dbReference>
<dbReference type="PDB" id="8VH5">
    <property type="method" value="EM"/>
    <property type="resolution" value="4.00 A"/>
    <property type="chains" value="A/C=1-2527"/>
</dbReference>
<dbReference type="PDB" id="9C76">
    <property type="method" value="X-ray"/>
    <property type="resolution" value="2.30 A"/>
    <property type="chains" value="A/B=1329-1516"/>
</dbReference>
<dbReference type="PDB" id="9CHO">
    <property type="method" value="EM"/>
    <property type="resolution" value="7.80 A"/>
    <property type="chains" value="A=543-2527"/>
</dbReference>
<dbReference type="PDBsum" id="2ZEJ"/>
<dbReference type="PDBsum" id="3D6T"/>
<dbReference type="PDBsum" id="5MY9"/>
<dbReference type="PDBsum" id="5MYC"/>
<dbReference type="PDBsum" id="6DLO"/>
<dbReference type="PDBsum" id="6DLP"/>
<dbReference type="PDBsum" id="6OJE"/>
<dbReference type="PDBsum" id="6OJF"/>
<dbReference type="PDBsum" id="6VNO"/>
<dbReference type="PDBsum" id="6VP6"/>
<dbReference type="PDBsum" id="6VP7"/>
<dbReference type="PDBsum" id="6XAF"/>
<dbReference type="PDBsum" id="6XR4"/>
<dbReference type="PDBsum" id="7LHT"/>
<dbReference type="PDBsum" id="7LHW"/>
<dbReference type="PDBsum" id="7LI3"/>
<dbReference type="PDBsum" id="7LI4"/>
<dbReference type="PDBsum" id="7THY"/>
<dbReference type="PDBsum" id="7THZ"/>
<dbReference type="PDBsum" id="8FO2"/>
<dbReference type="PDBsum" id="8FO7"/>
<dbReference type="PDBsum" id="8FO8"/>
<dbReference type="PDBsum" id="8FO9"/>
<dbReference type="PDBsum" id="8SMC"/>
<dbReference type="PDBsum" id="8TXZ"/>
<dbReference type="PDBsum" id="8TYQ"/>
<dbReference type="PDBsum" id="8TZB"/>
<dbReference type="PDBsum" id="8TZC"/>
<dbReference type="PDBsum" id="8TZE"/>
<dbReference type="PDBsum" id="8TZF"/>
<dbReference type="PDBsum" id="8TZG"/>
<dbReference type="PDBsum" id="8TZH"/>
<dbReference type="PDBsum" id="8U1B"/>
<dbReference type="PDBsum" id="8U7H"/>
<dbReference type="PDBsum" id="8U7L"/>
<dbReference type="PDBsum" id="8U8A"/>
<dbReference type="PDBsum" id="8U8B"/>
<dbReference type="PDBsum" id="8VH4"/>
<dbReference type="PDBsum" id="8VH5"/>
<dbReference type="PDBsum" id="9C76"/>
<dbReference type="PDBsum" id="9CHO"/>
<dbReference type="EMDB" id="EMD-20825"/>
<dbReference type="EMDB" id="EMD-20826"/>
<dbReference type="EMDB" id="EMD-21250"/>
<dbReference type="EMDB" id="EMD-21306"/>
<dbReference type="EMDB" id="EMD-21309"/>
<dbReference type="EMDB" id="EMD-21310"/>
<dbReference type="EMDB" id="EMD-21311"/>
<dbReference type="EMDB" id="EMD-21312"/>
<dbReference type="EMDB" id="EMD-23350"/>
<dbReference type="EMDB" id="EMD-23352"/>
<dbReference type="EMDB" id="EMD-23359"/>
<dbReference type="EMDB" id="EMD-23360"/>
<dbReference type="EMDB" id="EMD-25649"/>
<dbReference type="EMDB" id="EMD-25658"/>
<dbReference type="EMDB" id="EMD-25664"/>
<dbReference type="EMDB" id="EMD-25674"/>
<dbReference type="EMDB" id="EMD-25897"/>
<dbReference type="EMDB" id="EMD-25906"/>
<dbReference type="EMDB" id="EMD-25907"/>
<dbReference type="EMDB" id="EMD-29339"/>
<dbReference type="EMDB" id="EMD-29340"/>
<dbReference type="EMDB" id="EMD-29341"/>
<dbReference type="EMDB" id="EMD-29342"/>
<dbReference type="EMDB" id="EMD-41709"/>
<dbReference type="EMDB" id="EMD-41728"/>
<dbReference type="EMDB" id="EMD-41753"/>
<dbReference type="EMDB" id="EMD-41754"/>
<dbReference type="EMDB" id="EMD-41756"/>
<dbReference type="EMDB" id="EMD-41757"/>
<dbReference type="EMDB" id="EMD-41758"/>
<dbReference type="EMDB" id="EMD-41759"/>
<dbReference type="EMDB" id="EMD-41794"/>
<dbReference type="EMDB" id="EMD-41795"/>
<dbReference type="EMDB" id="EMD-41798"/>
<dbReference type="EMDB" id="EMD-41799"/>
<dbReference type="EMDB" id="EMD-41806"/>
<dbReference type="EMDB" id="EMD-41985"/>
<dbReference type="EMDB" id="EMD-42019"/>
<dbReference type="EMDB" id="EMD-42020"/>
<dbReference type="EMDB" id="EMD-43234"/>
<dbReference type="EMDB" id="EMD-43235"/>
<dbReference type="EMDB" id="EMD-45591"/>
<dbReference type="SMR" id="Q5S007"/>
<dbReference type="BioGRID" id="125700">
    <property type="interactions" value="511"/>
</dbReference>
<dbReference type="CORUM" id="Q5S007"/>
<dbReference type="DIP" id="DIP-29684N"/>
<dbReference type="FunCoup" id="Q5S007">
    <property type="interactions" value="660"/>
</dbReference>
<dbReference type="IntAct" id="Q5S007">
    <property type="interactions" value="2315"/>
</dbReference>
<dbReference type="MINT" id="Q5S007"/>
<dbReference type="STRING" id="9606.ENSP00000298910"/>
<dbReference type="BindingDB" id="Q5S007"/>
<dbReference type="ChEMBL" id="CHEMBL1075104"/>
<dbReference type="DrugBank" id="DB12010">
    <property type="generic name" value="Fostamatinib"/>
</dbReference>
<dbReference type="DrugCentral" id="Q5S007"/>
<dbReference type="GuidetoPHARMACOLOGY" id="2059"/>
<dbReference type="TCDB" id="8.A.23.1.54">
    <property type="family name" value="the basigin (basigin) family"/>
</dbReference>
<dbReference type="GlyGen" id="Q5S007">
    <property type="glycosylation" value="2 sites, 1 O-linked glycan (1 site)"/>
</dbReference>
<dbReference type="iPTMnet" id="Q5S007"/>
<dbReference type="PhosphoSitePlus" id="Q5S007"/>
<dbReference type="BioMuta" id="LRRK2"/>
<dbReference type="DMDM" id="294862450"/>
<dbReference type="jPOST" id="Q5S007"/>
<dbReference type="MassIVE" id="Q5S007"/>
<dbReference type="PaxDb" id="9606-ENSP00000298910"/>
<dbReference type="PeptideAtlas" id="Q5S007"/>
<dbReference type="ProteomicsDB" id="63755"/>
<dbReference type="ABCD" id="Q5S007">
    <property type="antibodies" value="2 sequenced antibodies"/>
</dbReference>
<dbReference type="Antibodypedia" id="2109">
    <property type="antibodies" value="875 antibodies from 46 providers"/>
</dbReference>
<dbReference type="DNASU" id="120892"/>
<dbReference type="Ensembl" id="ENST00000298910.12">
    <property type="protein sequence ID" value="ENSP00000298910.7"/>
    <property type="gene ID" value="ENSG00000188906.17"/>
</dbReference>
<dbReference type="GeneID" id="120892"/>
<dbReference type="KEGG" id="hsa:120892"/>
<dbReference type="MANE-Select" id="ENST00000298910.12">
    <property type="protein sequence ID" value="ENSP00000298910.7"/>
    <property type="RefSeq nucleotide sequence ID" value="NM_198578.4"/>
    <property type="RefSeq protein sequence ID" value="NP_940980.4"/>
</dbReference>
<dbReference type="UCSC" id="uc001rmg.5">
    <property type="organism name" value="human"/>
</dbReference>
<dbReference type="AGR" id="HGNC:18618"/>
<dbReference type="CTD" id="120892"/>
<dbReference type="DisGeNET" id="120892"/>
<dbReference type="GeneCards" id="LRRK2"/>
<dbReference type="GeneReviews" id="LRRK2"/>
<dbReference type="HGNC" id="HGNC:18618">
    <property type="gene designation" value="LRRK2"/>
</dbReference>
<dbReference type="HPA" id="ENSG00000188906">
    <property type="expression patterns" value="Tissue enriched (lung)"/>
</dbReference>
<dbReference type="MalaCards" id="LRRK2"/>
<dbReference type="MIM" id="168600">
    <property type="type" value="phenotype"/>
</dbReference>
<dbReference type="MIM" id="607060">
    <property type="type" value="phenotype"/>
</dbReference>
<dbReference type="MIM" id="609007">
    <property type="type" value="gene"/>
</dbReference>
<dbReference type="neXtProt" id="NX_Q5S007"/>
<dbReference type="OpenTargets" id="ENSG00000188906"/>
<dbReference type="Orphanet" id="411602">
    <property type="disease" value="Hereditary late-onset Parkinson disease"/>
</dbReference>
<dbReference type="Orphanet" id="2828">
    <property type="disease" value="Young-onset Parkinson disease"/>
</dbReference>
<dbReference type="PharmGKB" id="PA134968052"/>
<dbReference type="VEuPathDB" id="HostDB:ENSG00000188906"/>
<dbReference type="eggNOG" id="KOG0192">
    <property type="taxonomic scope" value="Eukaryota"/>
</dbReference>
<dbReference type="eggNOG" id="KOG0618">
    <property type="taxonomic scope" value="Eukaryota"/>
</dbReference>
<dbReference type="eggNOG" id="KOG0619">
    <property type="taxonomic scope" value="Eukaryota"/>
</dbReference>
<dbReference type="GeneTree" id="ENSGT00940000158267"/>
<dbReference type="HOGENOM" id="CLU_000815_0_0_1"/>
<dbReference type="InParanoid" id="Q5S007"/>
<dbReference type="OMA" id="FIVECMV"/>
<dbReference type="OrthoDB" id="8940716at2759"/>
<dbReference type="PAN-GO" id="Q5S007">
    <property type="GO annotations" value="31 GO annotations based on evolutionary models"/>
</dbReference>
<dbReference type="PhylomeDB" id="Q5S007"/>
<dbReference type="TreeFam" id="TF313679"/>
<dbReference type="PathwayCommons" id="Q5S007"/>
<dbReference type="Reactome" id="R-HSA-8857538">
    <property type="pathway name" value="PTK6 promotes HIF1A stabilization"/>
</dbReference>
<dbReference type="SignaLink" id="Q5S007"/>
<dbReference type="SIGNOR" id="Q5S007"/>
<dbReference type="BioGRID-ORCS" id="120892">
    <property type="hits" value="21 hits in 1183 CRISPR screens"/>
</dbReference>
<dbReference type="CD-CODE" id="91857CE7">
    <property type="entry name" value="Nucleolus"/>
</dbReference>
<dbReference type="ChiTaRS" id="LRRK2">
    <property type="organism name" value="human"/>
</dbReference>
<dbReference type="EvolutionaryTrace" id="Q5S007"/>
<dbReference type="GeneWiki" id="LRRK2"/>
<dbReference type="GenomeRNAi" id="120892"/>
<dbReference type="Pharos" id="Q5S007">
    <property type="development level" value="Tchem"/>
</dbReference>
<dbReference type="PRO" id="PR:Q5S007"/>
<dbReference type="Proteomes" id="UP000005640">
    <property type="component" value="Chromosome 12"/>
</dbReference>
<dbReference type="RNAct" id="Q5S007">
    <property type="molecule type" value="protein"/>
</dbReference>
<dbReference type="Bgee" id="ENSG00000188906">
    <property type="expression patterns" value="Expressed in buccal mucosa cell and 154 other cell types or tissues"/>
</dbReference>
<dbReference type="ExpressionAtlas" id="Q5S007">
    <property type="expression patterns" value="baseline and differential"/>
</dbReference>
<dbReference type="GO" id="GO:0044753">
    <property type="term" value="C:amphisome"/>
    <property type="evidence" value="ECO:0000314"/>
    <property type="project" value="ParkinsonsUK-UCL"/>
</dbReference>
<dbReference type="GO" id="GO:0044754">
    <property type="term" value="C:autolysosome"/>
    <property type="evidence" value="ECO:0000314"/>
    <property type="project" value="ParkinsonsUK-UCL"/>
</dbReference>
<dbReference type="GO" id="GO:0030424">
    <property type="term" value="C:axon"/>
    <property type="evidence" value="ECO:0000314"/>
    <property type="project" value="UniProtKB"/>
</dbReference>
<dbReference type="GO" id="GO:0099400">
    <property type="term" value="C:caveola neck"/>
    <property type="evidence" value="ECO:0000314"/>
    <property type="project" value="ParkinsonsUK-UCL"/>
</dbReference>
<dbReference type="GO" id="GO:0036064">
    <property type="term" value="C:ciliary basal body"/>
    <property type="evidence" value="ECO:0000314"/>
    <property type="project" value="HPA"/>
</dbReference>
<dbReference type="GO" id="GO:0005737">
    <property type="term" value="C:cytoplasm"/>
    <property type="evidence" value="ECO:0000314"/>
    <property type="project" value="UniProtKB"/>
</dbReference>
<dbReference type="GO" id="GO:0032473">
    <property type="term" value="C:cytoplasmic side of mitochondrial outer membrane"/>
    <property type="evidence" value="ECO:0000314"/>
    <property type="project" value="UniProtKB"/>
</dbReference>
<dbReference type="GO" id="GO:0031410">
    <property type="term" value="C:cytoplasmic vesicle"/>
    <property type="evidence" value="ECO:0000250"/>
    <property type="project" value="UniProtKB"/>
</dbReference>
<dbReference type="GO" id="GO:0005829">
    <property type="term" value="C:cytosol"/>
    <property type="evidence" value="ECO:0000314"/>
    <property type="project" value="ParkinsonsUK-UCL"/>
</dbReference>
<dbReference type="GO" id="GO:0030425">
    <property type="term" value="C:dendrite"/>
    <property type="evidence" value="ECO:0000314"/>
    <property type="project" value="UniProtKB"/>
</dbReference>
<dbReference type="GO" id="GO:0032839">
    <property type="term" value="C:dendrite cytoplasm"/>
    <property type="evidence" value="ECO:0000314"/>
    <property type="project" value="BHF-UCL"/>
</dbReference>
<dbReference type="GO" id="GO:0005783">
    <property type="term" value="C:endoplasmic reticulum"/>
    <property type="evidence" value="ECO:0000314"/>
    <property type="project" value="ParkinsonsUK-UCL"/>
</dbReference>
<dbReference type="GO" id="GO:0070971">
    <property type="term" value="C:endoplasmic reticulum exit site"/>
    <property type="evidence" value="ECO:0000314"/>
    <property type="project" value="UniProtKB"/>
</dbReference>
<dbReference type="GO" id="GO:0005789">
    <property type="term" value="C:endoplasmic reticulum membrane"/>
    <property type="evidence" value="ECO:0007669"/>
    <property type="project" value="UniProtKB-SubCell"/>
</dbReference>
<dbReference type="GO" id="GO:0005768">
    <property type="term" value="C:endosome"/>
    <property type="evidence" value="ECO:0000250"/>
    <property type="project" value="UniProtKB"/>
</dbReference>
<dbReference type="GO" id="GO:0070062">
    <property type="term" value="C:extracellular exosome"/>
    <property type="evidence" value="ECO:0007005"/>
    <property type="project" value="UniProtKB"/>
</dbReference>
<dbReference type="GO" id="GO:0005615">
    <property type="term" value="C:extracellular space"/>
    <property type="evidence" value="ECO:0007005"/>
    <property type="project" value="UniProtKB"/>
</dbReference>
<dbReference type="GO" id="GO:0098978">
    <property type="term" value="C:glutamatergic synapse"/>
    <property type="evidence" value="ECO:0007669"/>
    <property type="project" value="Ensembl"/>
</dbReference>
<dbReference type="GO" id="GO:0005794">
    <property type="term" value="C:Golgi apparatus"/>
    <property type="evidence" value="ECO:0000314"/>
    <property type="project" value="ParkinsonsUK-UCL"/>
</dbReference>
<dbReference type="GO" id="GO:0000139">
    <property type="term" value="C:Golgi membrane"/>
    <property type="evidence" value="ECO:0007669"/>
    <property type="project" value="UniProtKB-SubCell"/>
</dbReference>
<dbReference type="GO" id="GO:0005798">
    <property type="term" value="C:Golgi-associated vesicle"/>
    <property type="evidence" value="ECO:0000314"/>
    <property type="project" value="ParkinsonsUK-UCL"/>
</dbReference>
<dbReference type="GO" id="GO:0030426">
    <property type="term" value="C:growth cone"/>
    <property type="evidence" value="ECO:0000314"/>
    <property type="project" value="ParkinsonsUK-UCL"/>
</dbReference>
<dbReference type="GO" id="GO:0043231">
    <property type="term" value="C:intracellular membrane-bounded organelle"/>
    <property type="evidence" value="ECO:0000314"/>
    <property type="project" value="HPA"/>
</dbReference>
<dbReference type="GO" id="GO:0005764">
    <property type="term" value="C:lysosome"/>
    <property type="evidence" value="ECO:0000250"/>
    <property type="project" value="UniProtKB"/>
</dbReference>
<dbReference type="GO" id="GO:0005902">
    <property type="term" value="C:microvillus"/>
    <property type="evidence" value="ECO:0000314"/>
    <property type="project" value="ParkinsonsUK-UCL"/>
</dbReference>
<dbReference type="GO" id="GO:0005743">
    <property type="term" value="C:mitochondrial inner membrane"/>
    <property type="evidence" value="ECO:0000250"/>
    <property type="project" value="UniProtKB"/>
</dbReference>
<dbReference type="GO" id="GO:0005759">
    <property type="term" value="C:mitochondrial matrix"/>
    <property type="evidence" value="ECO:0000250"/>
    <property type="project" value="UniProtKB"/>
</dbReference>
<dbReference type="GO" id="GO:0031966">
    <property type="term" value="C:mitochondrial membrane"/>
    <property type="evidence" value="ECO:0000314"/>
    <property type="project" value="ParkinsonsUK-UCL"/>
</dbReference>
<dbReference type="GO" id="GO:0005741">
    <property type="term" value="C:mitochondrial outer membrane"/>
    <property type="evidence" value="ECO:0000250"/>
    <property type="project" value="UniProtKB"/>
</dbReference>
<dbReference type="GO" id="GO:0005739">
    <property type="term" value="C:mitochondrion"/>
    <property type="evidence" value="ECO:0000314"/>
    <property type="project" value="UniProtKB"/>
</dbReference>
<dbReference type="GO" id="GO:0097487">
    <property type="term" value="C:multivesicular body, internal vesicle"/>
    <property type="evidence" value="ECO:0000314"/>
    <property type="project" value="ParkinsonsUK-UCL"/>
</dbReference>
<dbReference type="GO" id="GO:0043005">
    <property type="term" value="C:neuron projection"/>
    <property type="evidence" value="ECO:0000314"/>
    <property type="project" value="ParkinsonsUK-UCL"/>
</dbReference>
<dbReference type="GO" id="GO:0043025">
    <property type="term" value="C:neuronal cell body"/>
    <property type="evidence" value="ECO:0000314"/>
    <property type="project" value="BHF-UCL"/>
</dbReference>
<dbReference type="GO" id="GO:0031965">
    <property type="term" value="C:nuclear membrane"/>
    <property type="evidence" value="ECO:0000314"/>
    <property type="project" value="HPA"/>
</dbReference>
<dbReference type="GO" id="GO:0005654">
    <property type="term" value="C:nucleoplasm"/>
    <property type="evidence" value="ECO:0000314"/>
    <property type="project" value="HPA"/>
</dbReference>
<dbReference type="GO" id="GO:0043204">
    <property type="term" value="C:perikaryon"/>
    <property type="evidence" value="ECO:0000314"/>
    <property type="project" value="UniProtKB"/>
</dbReference>
<dbReference type="GO" id="GO:0045335">
    <property type="term" value="C:phagocytic vesicle"/>
    <property type="evidence" value="ECO:0007669"/>
    <property type="project" value="UniProtKB-SubCell"/>
</dbReference>
<dbReference type="GO" id="GO:0005886">
    <property type="term" value="C:plasma membrane"/>
    <property type="evidence" value="ECO:0000314"/>
    <property type="project" value="ParkinsonsUK-UCL"/>
</dbReference>
<dbReference type="GO" id="GO:0098794">
    <property type="term" value="C:postsynapse"/>
    <property type="evidence" value="ECO:0007669"/>
    <property type="project" value="GOC"/>
</dbReference>
<dbReference type="GO" id="GO:0099523">
    <property type="term" value="C:presynaptic cytosol"/>
    <property type="evidence" value="ECO:0007669"/>
    <property type="project" value="Ensembl"/>
</dbReference>
<dbReference type="GO" id="GO:1990904">
    <property type="term" value="C:ribonucleoprotein complex"/>
    <property type="evidence" value="ECO:0007669"/>
    <property type="project" value="Ensembl"/>
</dbReference>
<dbReference type="GO" id="GO:0030672">
    <property type="term" value="C:synaptic vesicle membrane"/>
    <property type="evidence" value="ECO:0007669"/>
    <property type="project" value="UniProtKB-SubCell"/>
</dbReference>
<dbReference type="GO" id="GO:0043195">
    <property type="term" value="C:terminal bouton"/>
    <property type="evidence" value="ECO:0000304"/>
    <property type="project" value="ParkinsonsUK-UCL"/>
</dbReference>
<dbReference type="GO" id="GO:0005802">
    <property type="term" value="C:trans-Golgi network"/>
    <property type="evidence" value="ECO:0007669"/>
    <property type="project" value="Ensembl"/>
</dbReference>
<dbReference type="GO" id="GO:1990909">
    <property type="term" value="C:Wnt signalosome"/>
    <property type="evidence" value="ECO:0000314"/>
    <property type="project" value="ParkinsonsUK-UCL"/>
</dbReference>
<dbReference type="GO" id="GO:0003779">
    <property type="term" value="F:actin binding"/>
    <property type="evidence" value="ECO:0000353"/>
    <property type="project" value="ParkinsonsUK-UCL"/>
</dbReference>
<dbReference type="GO" id="GO:0005524">
    <property type="term" value="F:ATP binding"/>
    <property type="evidence" value="ECO:0007669"/>
    <property type="project" value="UniProtKB-KW"/>
</dbReference>
<dbReference type="GO" id="GO:1904713">
    <property type="term" value="F:beta-catenin destruction complex binding"/>
    <property type="evidence" value="ECO:0000303"/>
    <property type="project" value="ParkinsonsUK-UCL"/>
</dbReference>
<dbReference type="GO" id="GO:0030276">
    <property type="term" value="F:clathrin binding"/>
    <property type="evidence" value="ECO:0000353"/>
    <property type="project" value="ParkinsonsUK-UCL"/>
</dbReference>
<dbReference type="GO" id="GO:0039706">
    <property type="term" value="F:co-receptor binding"/>
    <property type="evidence" value="ECO:0000304"/>
    <property type="project" value="ParkinsonsUK-UCL"/>
</dbReference>
<dbReference type="GO" id="GO:0005525">
    <property type="term" value="F:GTP binding"/>
    <property type="evidence" value="ECO:0000314"/>
    <property type="project" value="UniProtKB"/>
</dbReference>
<dbReference type="GO" id="GO:0034211">
    <property type="term" value="F:GTP-dependent protein kinase activity"/>
    <property type="evidence" value="ECO:0000314"/>
    <property type="project" value="BHF-UCL"/>
</dbReference>
<dbReference type="GO" id="GO:0005096">
    <property type="term" value="F:GTPase activator activity"/>
    <property type="evidence" value="ECO:0000314"/>
    <property type="project" value="UniProtKB"/>
</dbReference>
<dbReference type="GO" id="GO:0003924">
    <property type="term" value="F:GTPase activity"/>
    <property type="evidence" value="ECO:0000314"/>
    <property type="project" value="BHF-UCL"/>
</dbReference>
<dbReference type="GO" id="GO:0042802">
    <property type="term" value="F:identical protein binding"/>
    <property type="evidence" value="ECO:0000353"/>
    <property type="project" value="UniProtKB"/>
</dbReference>
<dbReference type="GO" id="GO:0004706">
    <property type="term" value="F:JUN kinase kinase kinase activity"/>
    <property type="evidence" value="ECO:0000314"/>
    <property type="project" value="BHF-UCL"/>
</dbReference>
<dbReference type="GO" id="GO:0016301">
    <property type="term" value="F:kinase activity"/>
    <property type="evidence" value="ECO:0000314"/>
    <property type="project" value="UniProtKB"/>
</dbReference>
<dbReference type="GO" id="GO:0000287">
    <property type="term" value="F:magnesium ion binding"/>
    <property type="evidence" value="ECO:0000315"/>
    <property type="project" value="UniProtKB"/>
</dbReference>
<dbReference type="GO" id="GO:0004709">
    <property type="term" value="F:MAP kinase kinase kinase activity"/>
    <property type="evidence" value="ECO:0000314"/>
    <property type="project" value="BHF-UCL"/>
</dbReference>
<dbReference type="GO" id="GO:0008017">
    <property type="term" value="F:microtubule binding"/>
    <property type="evidence" value="ECO:0000304"/>
    <property type="project" value="ParkinsonsUK-UCL"/>
</dbReference>
<dbReference type="GO" id="GO:0036479">
    <property type="term" value="F:peroxidase inhibitor activity"/>
    <property type="evidence" value="ECO:0000314"/>
    <property type="project" value="ParkinsonsUK-UCL"/>
</dbReference>
<dbReference type="GO" id="GO:0042803">
    <property type="term" value="F:protein homodimerization activity"/>
    <property type="evidence" value="ECO:0000353"/>
    <property type="project" value="UniProtKB"/>
</dbReference>
<dbReference type="GO" id="GO:0051018">
    <property type="term" value="F:protein kinase A binding"/>
    <property type="evidence" value="ECO:0000353"/>
    <property type="project" value="ParkinsonsUK-UCL"/>
</dbReference>
<dbReference type="GO" id="GO:0004672">
    <property type="term" value="F:protein kinase activity"/>
    <property type="evidence" value="ECO:0000314"/>
    <property type="project" value="UniProtKB"/>
</dbReference>
<dbReference type="GO" id="GO:0106310">
    <property type="term" value="F:protein serine kinase activity"/>
    <property type="evidence" value="ECO:0007669"/>
    <property type="project" value="RHEA"/>
</dbReference>
<dbReference type="GO" id="GO:0004674">
    <property type="term" value="F:protein serine/threonine kinase activity"/>
    <property type="evidence" value="ECO:0000314"/>
    <property type="project" value="UniProtKB"/>
</dbReference>
<dbReference type="GO" id="GO:0030159">
    <property type="term" value="F:signaling receptor complex adaptor activity"/>
    <property type="evidence" value="ECO:0000314"/>
    <property type="project" value="ParkinsonsUK-UCL"/>
</dbReference>
<dbReference type="GO" id="GO:0031267">
    <property type="term" value="F:small GTPase binding"/>
    <property type="evidence" value="ECO:0000353"/>
    <property type="project" value="BHF-UCL"/>
</dbReference>
<dbReference type="GO" id="GO:0000149">
    <property type="term" value="F:SNARE binding"/>
    <property type="evidence" value="ECO:0000353"/>
    <property type="project" value="ParkinsonsUK-UCL"/>
</dbReference>
<dbReference type="GO" id="GO:0017075">
    <property type="term" value="F:syntaxin-1 binding"/>
    <property type="evidence" value="ECO:0000353"/>
    <property type="project" value="ParkinsonsUK-UCL"/>
</dbReference>
<dbReference type="GO" id="GO:0044325">
    <property type="term" value="F:transmembrane transporter binding"/>
    <property type="evidence" value="ECO:0000353"/>
    <property type="project" value="UniProtKB"/>
</dbReference>
<dbReference type="GO" id="GO:0015631">
    <property type="term" value="F:tubulin binding"/>
    <property type="evidence" value="ECO:0000314"/>
    <property type="project" value="BHF-UCL"/>
</dbReference>
<dbReference type="GO" id="GO:0006914">
    <property type="term" value="P:autophagy"/>
    <property type="evidence" value="ECO:0007669"/>
    <property type="project" value="UniProtKB-KW"/>
</dbReference>
<dbReference type="GO" id="GO:0019722">
    <property type="term" value="P:calcium-mediated signaling"/>
    <property type="evidence" value="ECO:0000315"/>
    <property type="project" value="ParkinsonsUK-UCL"/>
</dbReference>
<dbReference type="GO" id="GO:0060070">
    <property type="term" value="P:canonical Wnt signaling pathway"/>
    <property type="evidence" value="ECO:0000304"/>
    <property type="project" value="ParkinsonsUK-UCL"/>
</dbReference>
<dbReference type="GO" id="GO:1903351">
    <property type="term" value="P:cellular response to dopamine"/>
    <property type="evidence" value="ECO:0000315"/>
    <property type="project" value="ParkinsonsUK-UCL"/>
</dbReference>
<dbReference type="GO" id="GO:0071287">
    <property type="term" value="P:cellular response to manganese ion"/>
    <property type="evidence" value="ECO:0000315"/>
    <property type="project" value="ParkinsonsUK-UCL"/>
</dbReference>
<dbReference type="GO" id="GO:0034599">
    <property type="term" value="P:cellular response to oxidative stress"/>
    <property type="evidence" value="ECO:0000315"/>
    <property type="project" value="ParkinsonsUK-UCL"/>
</dbReference>
<dbReference type="GO" id="GO:0034614">
    <property type="term" value="P:cellular response to reactive oxygen species"/>
    <property type="evidence" value="ECO:0000315"/>
    <property type="project" value="ParkinsonsUK-UCL"/>
</dbReference>
<dbReference type="GO" id="GO:0009267">
    <property type="term" value="P:cellular response to starvation"/>
    <property type="evidence" value="ECO:0000315"/>
    <property type="project" value="ParkinsonsUK-UCL"/>
</dbReference>
<dbReference type="GO" id="GO:0008340">
    <property type="term" value="P:determination of adult lifespan"/>
    <property type="evidence" value="ECO:0000315"/>
    <property type="project" value="BHF-UCL"/>
</dbReference>
<dbReference type="GO" id="GO:0006897">
    <property type="term" value="P:endocytosis"/>
    <property type="evidence" value="ECO:0000315"/>
    <property type="project" value="ParkinsonsUK-UCL"/>
</dbReference>
<dbReference type="GO" id="GO:0007029">
    <property type="term" value="P:endoplasmic reticulum organization"/>
    <property type="evidence" value="ECO:0000315"/>
    <property type="project" value="UniProtKB"/>
</dbReference>
<dbReference type="GO" id="GO:0060079">
    <property type="term" value="P:excitatory postsynaptic potential"/>
    <property type="evidence" value="ECO:0000250"/>
    <property type="project" value="ParkinsonsUK-UCL"/>
</dbReference>
<dbReference type="GO" id="GO:0035640">
    <property type="term" value="P:exploration behavior"/>
    <property type="evidence" value="ECO:0000315"/>
    <property type="project" value="BHF-UCL"/>
</dbReference>
<dbReference type="GO" id="GO:0007030">
    <property type="term" value="P:Golgi organization"/>
    <property type="evidence" value="ECO:0000315"/>
    <property type="project" value="ParkinsonsUK-UCL"/>
</dbReference>
<dbReference type="GO" id="GO:0046039">
    <property type="term" value="P:GTP metabolic process"/>
    <property type="evidence" value="ECO:0000314"/>
    <property type="project" value="BHF-UCL"/>
</dbReference>
<dbReference type="GO" id="GO:0048312">
    <property type="term" value="P:intracellular distribution of mitochondria"/>
    <property type="evidence" value="ECO:0000315"/>
    <property type="project" value="BHF-UCL"/>
</dbReference>
<dbReference type="GO" id="GO:0035556">
    <property type="term" value="P:intracellular signal transduction"/>
    <property type="evidence" value="ECO:0000250"/>
    <property type="project" value="ParkinsonsUK-UCL"/>
</dbReference>
<dbReference type="GO" id="GO:0007254">
    <property type="term" value="P:JNK cascade"/>
    <property type="evidence" value="ECO:0000314"/>
    <property type="project" value="BHF-UCL"/>
</dbReference>
<dbReference type="GO" id="GO:0035641">
    <property type="term" value="P:locomotory exploration behavior"/>
    <property type="evidence" value="ECO:0007669"/>
    <property type="project" value="Ensembl"/>
</dbReference>
<dbReference type="GO" id="GO:0007040">
    <property type="term" value="P:lysosome organization"/>
    <property type="evidence" value="ECO:0000315"/>
    <property type="project" value="ParkinsonsUK-UCL"/>
</dbReference>
<dbReference type="GO" id="GO:0000165">
    <property type="term" value="P:MAPK cascade"/>
    <property type="evidence" value="ECO:0000314"/>
    <property type="project" value="UniProtKB"/>
</dbReference>
<dbReference type="GO" id="GO:0051646">
    <property type="term" value="P:mitochondrion localization"/>
    <property type="evidence" value="ECO:0000315"/>
    <property type="project" value="ParkinsonsUK-UCL"/>
</dbReference>
<dbReference type="GO" id="GO:0007005">
    <property type="term" value="P:mitochondrion organization"/>
    <property type="evidence" value="ECO:0000315"/>
    <property type="project" value="ParkinsonsUK-UCL"/>
</dbReference>
<dbReference type="GO" id="GO:1902902">
    <property type="term" value="P:negative regulation of autophagosome assembly"/>
    <property type="evidence" value="ECO:0000315"/>
    <property type="project" value="ParkinsonsUK-UCL"/>
</dbReference>
<dbReference type="GO" id="GO:1902236">
    <property type="term" value="P:negative regulation of endoplasmic reticulum stress-induced intrinsic apoptotic signaling pathway"/>
    <property type="evidence" value="ECO:0000315"/>
    <property type="project" value="ParkinsonsUK-UCL"/>
</dbReference>
<dbReference type="GO" id="GO:0090394">
    <property type="term" value="P:negative regulation of excitatory postsynaptic potential"/>
    <property type="evidence" value="ECO:0000250"/>
    <property type="project" value="ParkinsonsUK-UCL"/>
</dbReference>
<dbReference type="GO" id="GO:0034260">
    <property type="term" value="P:negative regulation of GTPase activity"/>
    <property type="evidence" value="ECO:0000314"/>
    <property type="project" value="MGI"/>
</dbReference>
<dbReference type="GO" id="GO:1902823">
    <property type="term" value="P:negative regulation of late endosome to lysosome transport"/>
    <property type="evidence" value="ECO:0000304"/>
    <property type="project" value="ParkinsonsUK-UCL"/>
</dbReference>
<dbReference type="GO" id="GO:0016242">
    <property type="term" value="P:negative regulation of macroautophagy"/>
    <property type="evidence" value="ECO:0000315"/>
    <property type="project" value="ParkinsonsUK-UCL"/>
</dbReference>
<dbReference type="GO" id="GO:0010977">
    <property type="term" value="P:negative regulation of neuron projection development"/>
    <property type="evidence" value="ECO:0007669"/>
    <property type="project" value="Ensembl"/>
</dbReference>
<dbReference type="GO" id="GO:0045746">
    <property type="term" value="P:negative regulation of Notch signaling pathway"/>
    <property type="evidence" value="ECO:0007669"/>
    <property type="project" value="Ensembl"/>
</dbReference>
<dbReference type="GO" id="GO:0010955">
    <property type="term" value="P:negative regulation of protein processing"/>
    <property type="evidence" value="ECO:0000314"/>
    <property type="project" value="ParkinsonsUK-UCL"/>
</dbReference>
<dbReference type="GO" id="GO:1903217">
    <property type="term" value="P:negative regulation of protein processing involved in protein targeting to mitochondrion"/>
    <property type="evidence" value="ECO:0000305"/>
    <property type="project" value="ParkinsonsUK-UCL"/>
</dbReference>
<dbReference type="GO" id="GO:1903215">
    <property type="term" value="P:negative regulation of protein targeting to mitochondrion"/>
    <property type="evidence" value="ECO:0000314"/>
    <property type="project" value="ParkinsonsUK-UCL"/>
</dbReference>
<dbReference type="GO" id="GO:0007528">
    <property type="term" value="P:neuromuscular junction development"/>
    <property type="evidence" value="ECO:0000315"/>
    <property type="project" value="BHF-UCL"/>
</dbReference>
<dbReference type="GO" id="GO:0140058">
    <property type="term" value="P:neuron projection arborization"/>
    <property type="evidence" value="ECO:0007669"/>
    <property type="project" value="Ensembl"/>
</dbReference>
<dbReference type="GO" id="GO:0048812">
    <property type="term" value="P:neuron projection morphogenesis"/>
    <property type="evidence" value="ECO:0000315"/>
    <property type="project" value="UniProtKB"/>
</dbReference>
<dbReference type="GO" id="GO:0021772">
    <property type="term" value="P:olfactory bulb development"/>
    <property type="evidence" value="ECO:0000315"/>
    <property type="project" value="ParkinsonsUK-UCL"/>
</dbReference>
<dbReference type="GO" id="GO:0010508">
    <property type="term" value="P:positive regulation of autophagy"/>
    <property type="evidence" value="ECO:0000315"/>
    <property type="project" value="UniProtKB"/>
</dbReference>
<dbReference type="GO" id="GO:0090263">
    <property type="term" value="P:positive regulation of canonical Wnt signaling pathway"/>
    <property type="evidence" value="ECO:0000316"/>
    <property type="project" value="ParkinsonsUK-UCL"/>
</dbReference>
<dbReference type="GO" id="GO:0060161">
    <property type="term" value="P:positive regulation of dopamine receptor signaling pathway"/>
    <property type="evidence" value="ECO:0000315"/>
    <property type="project" value="BHF-UCL"/>
</dbReference>
<dbReference type="GO" id="GO:0043410">
    <property type="term" value="P:positive regulation of MAPK cascade"/>
    <property type="evidence" value="ECO:0000315"/>
    <property type="project" value="ParkinsonsUK-UCL"/>
</dbReference>
<dbReference type="GO" id="GO:1903980">
    <property type="term" value="P:positive regulation of microglial cell activation"/>
    <property type="evidence" value="ECO:0007669"/>
    <property type="project" value="Ensembl"/>
</dbReference>
<dbReference type="GO" id="GO:1901030">
    <property type="term" value="P:positive regulation of mitochondrial outer membrane permeabilization involved in apoptotic signaling pathway"/>
    <property type="evidence" value="ECO:0000314"/>
    <property type="project" value="ParkinsonsUK-UCL"/>
</dbReference>
<dbReference type="GO" id="GO:0043068">
    <property type="term" value="P:positive regulation of programmed cell death"/>
    <property type="evidence" value="ECO:0000314"/>
    <property type="project" value="UniProtKB"/>
</dbReference>
<dbReference type="GO" id="GO:0032436">
    <property type="term" value="P:positive regulation of proteasomal ubiquitin-dependent protein catabolic process"/>
    <property type="evidence" value="ECO:0000250"/>
    <property type="project" value="BHF-UCL"/>
</dbReference>
<dbReference type="GO" id="GO:1902499">
    <property type="term" value="P:positive regulation of protein autoubiquitination"/>
    <property type="evidence" value="ECO:0000314"/>
    <property type="project" value="ParkinsonsUK-UCL"/>
</dbReference>
<dbReference type="GO" id="GO:0031398">
    <property type="term" value="P:positive regulation of protein ubiquitination"/>
    <property type="evidence" value="ECO:0000314"/>
    <property type="project" value="UniProtKB"/>
</dbReference>
<dbReference type="GO" id="GO:1900244">
    <property type="term" value="P:positive regulation of synaptic vesicle endocytosis"/>
    <property type="evidence" value="ECO:0007669"/>
    <property type="project" value="Ensembl"/>
</dbReference>
<dbReference type="GO" id="GO:0032760">
    <property type="term" value="P:positive regulation of tumor necrosis factor production"/>
    <property type="evidence" value="ECO:0007669"/>
    <property type="project" value="Ensembl"/>
</dbReference>
<dbReference type="GO" id="GO:0046777">
    <property type="term" value="P:protein autophosphorylation"/>
    <property type="evidence" value="ECO:0000314"/>
    <property type="project" value="UniProtKB"/>
</dbReference>
<dbReference type="GO" id="GO:0006606">
    <property type="term" value="P:protein import into nucleus"/>
    <property type="evidence" value="ECO:0007669"/>
    <property type="project" value="Ensembl"/>
</dbReference>
<dbReference type="GO" id="GO:0008104">
    <property type="term" value="P:protein localization"/>
    <property type="evidence" value="ECO:0000250"/>
    <property type="project" value="ParkinsonsUK-UCL"/>
</dbReference>
<dbReference type="GO" id="GO:0070973">
    <property type="term" value="P:protein localization to endoplasmic reticulum exit site"/>
    <property type="evidence" value="ECO:0000315"/>
    <property type="project" value="UniProtKB"/>
</dbReference>
<dbReference type="GO" id="GO:0070585">
    <property type="term" value="P:protein localization to mitochondrion"/>
    <property type="evidence" value="ECO:0000304"/>
    <property type="project" value="ParkinsonsUK-UCL"/>
</dbReference>
<dbReference type="GO" id="GO:0006468">
    <property type="term" value="P:protein phosphorylation"/>
    <property type="evidence" value="ECO:0000315"/>
    <property type="project" value="UniProtKB"/>
</dbReference>
<dbReference type="GO" id="GO:0010506">
    <property type="term" value="P:regulation of autophagy"/>
    <property type="evidence" value="ECO:0000315"/>
    <property type="project" value="ParkinsonsUK-UCL"/>
</dbReference>
<dbReference type="GO" id="GO:2000172">
    <property type="term" value="P:regulation of branching morphogenesis of a nerve"/>
    <property type="evidence" value="ECO:0000315"/>
    <property type="project" value="ParkinsonsUK-UCL"/>
</dbReference>
<dbReference type="GO" id="GO:1905289">
    <property type="term" value="P:regulation of CAMKK-AMPK signaling cascade"/>
    <property type="evidence" value="ECO:0000315"/>
    <property type="project" value="ParkinsonsUK-UCL"/>
</dbReference>
<dbReference type="GO" id="GO:0141161">
    <property type="term" value="P:regulation of cAMP/PKA signal transduction"/>
    <property type="evidence" value="ECO:0000250"/>
    <property type="project" value="ParkinsonsUK-UCL"/>
</dbReference>
<dbReference type="GO" id="GO:0060828">
    <property type="term" value="P:regulation of canonical Wnt signaling pathway"/>
    <property type="evidence" value="ECO:0000318"/>
    <property type="project" value="GO_Central"/>
</dbReference>
<dbReference type="GO" id="GO:0031344">
    <property type="term" value="P:regulation of cell projection organization"/>
    <property type="evidence" value="ECO:0000318"/>
    <property type="project" value="GO_Central"/>
</dbReference>
<dbReference type="GO" id="GO:0061001">
    <property type="term" value="P:regulation of dendritic spine morphogenesis"/>
    <property type="evidence" value="ECO:0000315"/>
    <property type="project" value="ParkinsonsUK-UCL"/>
</dbReference>
<dbReference type="GO" id="GO:0060159">
    <property type="term" value="P:regulation of dopamine receptor signaling pathway"/>
    <property type="evidence" value="ECO:0000250"/>
    <property type="project" value="ParkinsonsUK-UCL"/>
</dbReference>
<dbReference type="GO" id="GO:0060628">
    <property type="term" value="P:regulation of ER to Golgi vesicle-mediated transport"/>
    <property type="evidence" value="ECO:0000250"/>
    <property type="project" value="UniProtKB"/>
</dbReference>
<dbReference type="GO" id="GO:0035564">
    <property type="term" value="P:regulation of kidney size"/>
    <property type="evidence" value="ECO:0000250"/>
    <property type="project" value="BHF-UCL"/>
</dbReference>
<dbReference type="GO" id="GO:0040012">
    <property type="term" value="P:regulation of locomotion"/>
    <property type="evidence" value="ECO:0000315"/>
    <property type="project" value="BHF-UCL"/>
</dbReference>
<dbReference type="GO" id="GO:0035751">
    <property type="term" value="P:regulation of lysosomal lumen pH"/>
    <property type="evidence" value="ECO:0000315"/>
    <property type="project" value="ParkinsonsUK-UCL"/>
</dbReference>
<dbReference type="GO" id="GO:0042391">
    <property type="term" value="P:regulation of membrane potential"/>
    <property type="evidence" value="ECO:0000315"/>
    <property type="project" value="BHF-UCL"/>
</dbReference>
<dbReference type="GO" id="GO:0051900">
    <property type="term" value="P:regulation of mitochondrial depolarization"/>
    <property type="evidence" value="ECO:0000315"/>
    <property type="project" value="ParkinsonsUK-UCL"/>
</dbReference>
<dbReference type="GO" id="GO:0090140">
    <property type="term" value="P:regulation of mitochondrial fission"/>
    <property type="evidence" value="ECO:0000304"/>
    <property type="project" value="ParkinsonsUK-UCL"/>
</dbReference>
<dbReference type="GO" id="GO:1902692">
    <property type="term" value="P:regulation of neuroblast proliferation"/>
    <property type="evidence" value="ECO:0000315"/>
    <property type="project" value="ParkinsonsUK-UCL"/>
</dbReference>
<dbReference type="GO" id="GO:0014041">
    <property type="term" value="P:regulation of neuron maturation"/>
    <property type="evidence" value="ECO:0000315"/>
    <property type="project" value="ParkinsonsUK-UCL"/>
</dbReference>
<dbReference type="GO" id="GO:0031647">
    <property type="term" value="P:regulation of protein stability"/>
    <property type="evidence" value="ECO:0000315"/>
    <property type="project" value="UniProtKB"/>
</dbReference>
<dbReference type="GO" id="GO:2000377">
    <property type="term" value="P:regulation of reactive oxygen species metabolic process"/>
    <property type="evidence" value="ECO:0000315"/>
    <property type="project" value="ParkinsonsUK-UCL"/>
</dbReference>
<dbReference type="GO" id="GO:1905279">
    <property type="term" value="P:regulation of retrograde transport, endosome to Golgi"/>
    <property type="evidence" value="ECO:0000316"/>
    <property type="project" value="ParkinsonsUK-UCL"/>
</dbReference>
<dbReference type="GO" id="GO:0035542">
    <property type="term" value="P:regulation of SNARE complex assembly"/>
    <property type="evidence" value="ECO:0000315"/>
    <property type="project" value="ParkinsonsUK-UCL"/>
</dbReference>
<dbReference type="GO" id="GO:0051966">
    <property type="term" value="P:regulation of synaptic transmission, glutamatergic"/>
    <property type="evidence" value="ECO:0000250"/>
    <property type="project" value="ParkinsonsUK-UCL"/>
</dbReference>
<dbReference type="GO" id="GO:1900242">
    <property type="term" value="P:regulation of synaptic vesicle endocytosis"/>
    <property type="evidence" value="ECO:0000318"/>
    <property type="project" value="GO_Central"/>
</dbReference>
<dbReference type="GO" id="GO:2000300">
    <property type="term" value="P:regulation of synaptic vesicle exocytosis"/>
    <property type="evidence" value="ECO:0000315"/>
    <property type="project" value="ParkinsonsUK-UCL"/>
</dbReference>
<dbReference type="GO" id="GO:1902803">
    <property type="term" value="P:regulation of synaptic vesicle transport"/>
    <property type="evidence" value="ECO:0000250"/>
    <property type="project" value="ParkinsonsUK-UCL"/>
</dbReference>
<dbReference type="GO" id="GO:0006979">
    <property type="term" value="P:response to oxidative stress"/>
    <property type="evidence" value="ECO:0000315"/>
    <property type="project" value="BHF-UCL"/>
</dbReference>
<dbReference type="GO" id="GO:0007266">
    <property type="term" value="P:Rho protein signal transduction"/>
    <property type="evidence" value="ECO:0000314"/>
    <property type="project" value="ParkinsonsUK-UCL"/>
</dbReference>
<dbReference type="GO" id="GO:0007283">
    <property type="term" value="P:spermatogenesis"/>
    <property type="evidence" value="ECO:0007669"/>
    <property type="project" value="Ensembl"/>
</dbReference>
<dbReference type="GO" id="GO:0021756">
    <property type="term" value="P:striatum development"/>
    <property type="evidence" value="ECO:0007669"/>
    <property type="project" value="Ensembl"/>
</dbReference>
<dbReference type="GO" id="GO:0022028">
    <property type="term" value="P:tangential migration from the subventricular zone to the olfactory bulb"/>
    <property type="evidence" value="ECO:0000315"/>
    <property type="project" value="ParkinsonsUK-UCL"/>
</dbReference>
<dbReference type="GO" id="GO:1904887">
    <property type="term" value="P:Wnt signalosome assembly"/>
    <property type="evidence" value="ECO:0000353"/>
    <property type="project" value="ParkinsonsUK-UCL"/>
</dbReference>
<dbReference type="CDD" id="cd09914">
    <property type="entry name" value="RocCOR"/>
    <property type="match status" value="1"/>
</dbReference>
<dbReference type="CDD" id="cd14068">
    <property type="entry name" value="STKc_LRRK2"/>
    <property type="match status" value="1"/>
</dbReference>
<dbReference type="FunFam" id="1.10.510.10:FF:001216">
    <property type="entry name" value="Leucine-rich repeat kinase 2"/>
    <property type="match status" value="1"/>
</dbReference>
<dbReference type="FunFam" id="1.25.40.20:FF:000219">
    <property type="entry name" value="Leucine-rich repeat serine/threonine-protein kinase 2"/>
    <property type="match status" value="1"/>
</dbReference>
<dbReference type="FunFam" id="2.130.10.10:FF:000481">
    <property type="entry name" value="Leucine-rich repeat serine/threonine-protein kinase 2"/>
    <property type="match status" value="1"/>
</dbReference>
<dbReference type="FunFam" id="3.30.200.20:FF:000313">
    <property type="entry name" value="Leucine-rich repeat serine/threonine-protein kinase 2"/>
    <property type="match status" value="1"/>
</dbReference>
<dbReference type="FunFam" id="3.30.70.1390:FF:000001">
    <property type="entry name" value="Leucine-rich repeat serine/threonine-protein kinase 2"/>
    <property type="match status" value="1"/>
</dbReference>
<dbReference type="FunFam" id="3.40.50.300:FF:000656">
    <property type="entry name" value="Leucine-rich repeat serine/threonine-protein kinase 2"/>
    <property type="match status" value="1"/>
</dbReference>
<dbReference type="FunFam" id="3.80.10.10:FF:000110">
    <property type="entry name" value="Leucine-rich repeat serine/threonine-protein kinase 2"/>
    <property type="match status" value="1"/>
</dbReference>
<dbReference type="FunFam" id="1.25.10.10:FF:000215">
    <property type="entry name" value="leucine-rich repeat serine/threonine-protein kinase 2"/>
    <property type="match status" value="1"/>
</dbReference>
<dbReference type="FunFam" id="3.80.10.10:FF:000179">
    <property type="entry name" value="leucine-rich repeat serine/threonine-protein kinase 2"/>
    <property type="match status" value="1"/>
</dbReference>
<dbReference type="FunFam" id="1.25.10.10:FF:000232">
    <property type="entry name" value="leucine-rich repeat serine/threonine-protein kinase 2 isoform X1"/>
    <property type="match status" value="1"/>
</dbReference>
<dbReference type="Gene3D" id="1.25.40.20">
    <property type="entry name" value="Ankyrin repeat-containing domain"/>
    <property type="match status" value="1"/>
</dbReference>
<dbReference type="Gene3D" id="1.25.10.10">
    <property type="entry name" value="Leucine-rich Repeat Variant"/>
    <property type="match status" value="2"/>
</dbReference>
<dbReference type="Gene3D" id="3.40.50.300">
    <property type="entry name" value="P-loop containing nucleotide triphosphate hydrolases"/>
    <property type="match status" value="1"/>
</dbReference>
<dbReference type="Gene3D" id="3.30.200.20">
    <property type="entry name" value="Phosphorylase Kinase, domain 1"/>
    <property type="match status" value="1"/>
</dbReference>
<dbReference type="Gene3D" id="3.80.10.10">
    <property type="entry name" value="Ribonuclease Inhibitor"/>
    <property type="match status" value="2"/>
</dbReference>
<dbReference type="Gene3D" id="3.30.70.1390">
    <property type="entry name" value="ROC domain from the Parkinson's disease-associated leucine-rich repeat kinase 2"/>
    <property type="match status" value="1"/>
</dbReference>
<dbReference type="Gene3D" id="1.10.510.10">
    <property type="entry name" value="Transferase(Phosphotransferase) domain 1"/>
    <property type="match status" value="1"/>
</dbReference>
<dbReference type="Gene3D" id="2.130.10.10">
    <property type="entry name" value="YVTN repeat-like/Quinoprotein amine dehydrogenase"/>
    <property type="match status" value="1"/>
</dbReference>
<dbReference type="InterPro" id="IPR056593">
    <property type="entry name" value="ANK_LRRK2"/>
</dbReference>
<dbReference type="InterPro" id="IPR036770">
    <property type="entry name" value="Ankyrin_rpt-contain_sf"/>
</dbReference>
<dbReference type="InterPro" id="IPR011989">
    <property type="entry name" value="ARM-like"/>
</dbReference>
<dbReference type="InterPro" id="IPR016024">
    <property type="entry name" value="ARM-type_fold"/>
</dbReference>
<dbReference type="InterPro" id="IPR056597">
    <property type="entry name" value="ARM_LRRK2"/>
</dbReference>
<dbReference type="InterPro" id="IPR056602">
    <property type="entry name" value="Beta-prop_LRRK2"/>
</dbReference>
<dbReference type="InterPro" id="IPR032171">
    <property type="entry name" value="COR-A"/>
</dbReference>
<dbReference type="InterPro" id="IPR011009">
    <property type="entry name" value="Kinase-like_dom_sf"/>
</dbReference>
<dbReference type="InterPro" id="IPR001611">
    <property type="entry name" value="Leu-rich_rpt"/>
</dbReference>
<dbReference type="InterPro" id="IPR003591">
    <property type="entry name" value="Leu-rich_rpt_typical-subtyp"/>
</dbReference>
<dbReference type="InterPro" id="IPR032675">
    <property type="entry name" value="LRR_dom_sf"/>
</dbReference>
<dbReference type="InterPro" id="IPR027417">
    <property type="entry name" value="P-loop_NTPase"/>
</dbReference>
<dbReference type="InterPro" id="IPR000719">
    <property type="entry name" value="Prot_kinase_dom"/>
</dbReference>
<dbReference type="InterPro" id="IPR017441">
    <property type="entry name" value="Protein_kinase_ATP_BS"/>
</dbReference>
<dbReference type="InterPro" id="IPR020859">
    <property type="entry name" value="ROC"/>
</dbReference>
<dbReference type="InterPro" id="IPR008271">
    <property type="entry name" value="Ser/Thr_kinase_AS"/>
</dbReference>
<dbReference type="InterPro" id="IPR051420">
    <property type="entry name" value="Ser_Thr_Kinases_DiverseReg"/>
</dbReference>
<dbReference type="InterPro" id="IPR005225">
    <property type="entry name" value="Small_GTP-bd"/>
</dbReference>
<dbReference type="InterPro" id="IPR015943">
    <property type="entry name" value="WD40/YVTN_repeat-like_dom_sf"/>
</dbReference>
<dbReference type="InterPro" id="IPR036322">
    <property type="entry name" value="WD40_repeat_dom_sf"/>
</dbReference>
<dbReference type="NCBIfam" id="TIGR00231">
    <property type="entry name" value="small_GTP"/>
    <property type="match status" value="1"/>
</dbReference>
<dbReference type="PANTHER" id="PTHR48005">
    <property type="entry name" value="LEUCINE RICH REPEAT KINASE 2"/>
    <property type="match status" value="1"/>
</dbReference>
<dbReference type="PANTHER" id="PTHR48005:SF13">
    <property type="entry name" value="SERINE_THREONINE-PROTEIN KINASE DDB_G0278509-RELATED"/>
    <property type="match status" value="1"/>
</dbReference>
<dbReference type="Pfam" id="PF23745">
    <property type="entry name" value="ANK_LRRK2"/>
    <property type="match status" value="1"/>
</dbReference>
<dbReference type="Pfam" id="PF23744">
    <property type="entry name" value="ARM_LRRK2"/>
    <property type="match status" value="1"/>
</dbReference>
<dbReference type="Pfam" id="PF23748">
    <property type="entry name" value="Beta-prop_LRRK2"/>
    <property type="match status" value="1"/>
</dbReference>
<dbReference type="Pfam" id="PF16095">
    <property type="entry name" value="COR-A"/>
    <property type="match status" value="1"/>
</dbReference>
<dbReference type="Pfam" id="PF25497">
    <property type="entry name" value="COR-B"/>
    <property type="match status" value="1"/>
</dbReference>
<dbReference type="Pfam" id="PF13855">
    <property type="entry name" value="LRR_8"/>
    <property type="match status" value="1"/>
</dbReference>
<dbReference type="Pfam" id="PF00069">
    <property type="entry name" value="Pkinase"/>
    <property type="match status" value="1"/>
</dbReference>
<dbReference type="Pfam" id="PF08477">
    <property type="entry name" value="Roc"/>
    <property type="match status" value="1"/>
</dbReference>
<dbReference type="PRINTS" id="PR00449">
    <property type="entry name" value="RASTRNSFRMNG"/>
</dbReference>
<dbReference type="SMART" id="SM00364">
    <property type="entry name" value="LRR_BAC"/>
    <property type="match status" value="8"/>
</dbReference>
<dbReference type="SMART" id="SM00369">
    <property type="entry name" value="LRR_TYP"/>
    <property type="match status" value="7"/>
</dbReference>
<dbReference type="SMART" id="SM00175">
    <property type="entry name" value="RAB"/>
    <property type="match status" value="1"/>
</dbReference>
<dbReference type="SMART" id="SM00220">
    <property type="entry name" value="S_TKc"/>
    <property type="match status" value="1"/>
</dbReference>
<dbReference type="SUPFAM" id="SSF48371">
    <property type="entry name" value="ARM repeat"/>
    <property type="match status" value="2"/>
</dbReference>
<dbReference type="SUPFAM" id="SSF52058">
    <property type="entry name" value="L domain-like"/>
    <property type="match status" value="1"/>
</dbReference>
<dbReference type="SUPFAM" id="SSF52540">
    <property type="entry name" value="P-loop containing nucleoside triphosphate hydrolases"/>
    <property type="match status" value="1"/>
</dbReference>
<dbReference type="SUPFAM" id="SSF56112">
    <property type="entry name" value="Protein kinase-like (PK-like)"/>
    <property type="match status" value="1"/>
</dbReference>
<dbReference type="SUPFAM" id="SSF50978">
    <property type="entry name" value="WD40 repeat-like"/>
    <property type="match status" value="1"/>
</dbReference>
<dbReference type="PROSITE" id="PS51450">
    <property type="entry name" value="LRR"/>
    <property type="match status" value="11"/>
</dbReference>
<dbReference type="PROSITE" id="PS00107">
    <property type="entry name" value="PROTEIN_KINASE_ATP"/>
    <property type="match status" value="1"/>
</dbReference>
<dbReference type="PROSITE" id="PS50011">
    <property type="entry name" value="PROTEIN_KINASE_DOM"/>
    <property type="match status" value="1"/>
</dbReference>
<dbReference type="PROSITE" id="PS00108">
    <property type="entry name" value="PROTEIN_KINASE_ST"/>
    <property type="match status" value="1"/>
</dbReference>
<dbReference type="PROSITE" id="PS51424">
    <property type="entry name" value="ROC"/>
    <property type="match status" value="1"/>
</dbReference>
<organism>
    <name type="scientific">Homo sapiens</name>
    <name type="common">Human</name>
    <dbReference type="NCBI Taxonomy" id="9606"/>
    <lineage>
        <taxon>Eukaryota</taxon>
        <taxon>Metazoa</taxon>
        <taxon>Chordata</taxon>
        <taxon>Craniata</taxon>
        <taxon>Vertebrata</taxon>
        <taxon>Euteleostomi</taxon>
        <taxon>Mammalia</taxon>
        <taxon>Eutheria</taxon>
        <taxon>Euarchontoglires</taxon>
        <taxon>Primates</taxon>
        <taxon>Haplorrhini</taxon>
        <taxon>Catarrhini</taxon>
        <taxon>Hominidae</taxon>
        <taxon>Homo</taxon>
    </lineage>
</organism>
<gene>
    <name type="primary">LRRK2</name>
    <name type="synonym">PARK8</name>
</gene>
<reference key="1">
    <citation type="journal article" date="2004" name="Neuron">
        <title>Mutations in LRRK2 cause autosomal-dominant parkinsonism with pleomorphic pathology.</title>
        <authorList>
            <person name="Zimprich A."/>
            <person name="Biskup S."/>
            <person name="Leitner P."/>
            <person name="Lichtner P."/>
            <person name="Farrer M."/>
            <person name="Lincoln S.J."/>
            <person name="Kachergus J.M."/>
            <person name="Hulihan M.M."/>
            <person name="Uitti R.J."/>
            <person name="Calne D.B."/>
            <person name="Stoessl A.J."/>
            <person name="Pfeiffer R.F."/>
            <person name="Patenge N."/>
            <person name="Carballo Carbajal I."/>
            <person name="Vieregge P."/>
            <person name="Asmus F."/>
            <person name="Mueller-Myhsok B."/>
            <person name="Dickson D.W."/>
            <person name="Meitinger T."/>
            <person name="Strom T.M."/>
            <person name="Wszolek Z.K."/>
            <person name="Gasser T."/>
        </authorList>
    </citation>
    <scope>NUCLEOTIDE SEQUENCE [MRNA]</scope>
    <scope>TISSUE SPECIFICITY</scope>
    <scope>VARIANTS PARK8 VAL-1122; CYS-1441; CYS-1699 AND THR-2020</scope>
    <source>
        <tissue>Brain</tissue>
    </source>
</reference>
<reference key="2">
    <citation type="journal article" date="2006" name="Nature">
        <title>The finished DNA sequence of human chromosome 12.</title>
        <authorList>
            <person name="Scherer S.E."/>
            <person name="Muzny D.M."/>
            <person name="Buhay C.J."/>
            <person name="Chen R."/>
            <person name="Cree A."/>
            <person name="Ding Y."/>
            <person name="Dugan-Rocha S."/>
            <person name="Gill R."/>
            <person name="Gunaratne P."/>
            <person name="Harris R.A."/>
            <person name="Hawes A.C."/>
            <person name="Hernandez J."/>
            <person name="Hodgson A.V."/>
            <person name="Hume J."/>
            <person name="Jackson A."/>
            <person name="Khan Z.M."/>
            <person name="Kovar-Smith C."/>
            <person name="Lewis L.R."/>
            <person name="Lozado R.J."/>
            <person name="Metzker M.L."/>
            <person name="Milosavljevic A."/>
            <person name="Miner G.R."/>
            <person name="Montgomery K.T."/>
            <person name="Morgan M.B."/>
            <person name="Nazareth L.V."/>
            <person name="Scott G."/>
            <person name="Sodergren E."/>
            <person name="Song X.-Z."/>
            <person name="Steffen D."/>
            <person name="Lovering R.C."/>
            <person name="Wheeler D.A."/>
            <person name="Worley K.C."/>
            <person name="Yuan Y."/>
            <person name="Zhang Z."/>
            <person name="Adams C.Q."/>
            <person name="Ansari-Lari M.A."/>
            <person name="Ayele M."/>
            <person name="Brown M.J."/>
            <person name="Chen G."/>
            <person name="Chen Z."/>
            <person name="Clerc-Blankenburg K.P."/>
            <person name="Davis C."/>
            <person name="Delgado O."/>
            <person name="Dinh H.H."/>
            <person name="Draper H."/>
            <person name="Gonzalez-Garay M.L."/>
            <person name="Havlak P."/>
            <person name="Jackson L.R."/>
            <person name="Jacob L.S."/>
            <person name="Kelly S.H."/>
            <person name="Li L."/>
            <person name="Li Z."/>
            <person name="Liu J."/>
            <person name="Liu W."/>
            <person name="Lu J."/>
            <person name="Maheshwari M."/>
            <person name="Nguyen B.-V."/>
            <person name="Okwuonu G.O."/>
            <person name="Pasternak S."/>
            <person name="Perez L.M."/>
            <person name="Plopper F.J.H."/>
            <person name="Santibanez J."/>
            <person name="Shen H."/>
            <person name="Tabor P.E."/>
            <person name="Verduzco D."/>
            <person name="Waldron L."/>
            <person name="Wang Q."/>
            <person name="Williams G.A."/>
            <person name="Zhang J."/>
            <person name="Zhou J."/>
            <person name="Allen C.C."/>
            <person name="Amin A.G."/>
            <person name="Anyalebechi V."/>
            <person name="Bailey M."/>
            <person name="Barbaria J.A."/>
            <person name="Bimage K.E."/>
            <person name="Bryant N.P."/>
            <person name="Burch P.E."/>
            <person name="Burkett C.E."/>
            <person name="Burrell K.L."/>
            <person name="Calderon E."/>
            <person name="Cardenas V."/>
            <person name="Carter K."/>
            <person name="Casias K."/>
            <person name="Cavazos I."/>
            <person name="Cavazos S.R."/>
            <person name="Ceasar H."/>
            <person name="Chacko J."/>
            <person name="Chan S.N."/>
            <person name="Chavez D."/>
            <person name="Christopoulos C."/>
            <person name="Chu J."/>
            <person name="Cockrell R."/>
            <person name="Cox C.D."/>
            <person name="Dang M."/>
            <person name="Dathorne S.R."/>
            <person name="David R."/>
            <person name="Davis C.M."/>
            <person name="Davy-Carroll L."/>
            <person name="Deshazo D.R."/>
            <person name="Donlin J.E."/>
            <person name="D'Souza L."/>
            <person name="Eaves K.A."/>
            <person name="Egan A."/>
            <person name="Emery-Cohen A.J."/>
            <person name="Escotto M."/>
            <person name="Flagg N."/>
            <person name="Forbes L.D."/>
            <person name="Gabisi A.M."/>
            <person name="Garza M."/>
            <person name="Hamilton C."/>
            <person name="Henderson N."/>
            <person name="Hernandez O."/>
            <person name="Hines S."/>
            <person name="Hogues M.E."/>
            <person name="Huang M."/>
            <person name="Idlebird D.G."/>
            <person name="Johnson R."/>
            <person name="Jolivet A."/>
            <person name="Jones S."/>
            <person name="Kagan R."/>
            <person name="King L.M."/>
            <person name="Leal B."/>
            <person name="Lebow H."/>
            <person name="Lee S."/>
            <person name="LeVan J.M."/>
            <person name="Lewis L.C."/>
            <person name="London P."/>
            <person name="Lorensuhewa L.M."/>
            <person name="Loulseged H."/>
            <person name="Lovett D.A."/>
            <person name="Lucier A."/>
            <person name="Lucier R.L."/>
            <person name="Ma J."/>
            <person name="Madu R.C."/>
            <person name="Mapua P."/>
            <person name="Martindale A.D."/>
            <person name="Martinez E."/>
            <person name="Massey E."/>
            <person name="Mawhiney S."/>
            <person name="Meador M.G."/>
            <person name="Mendez S."/>
            <person name="Mercado C."/>
            <person name="Mercado I.C."/>
            <person name="Merritt C.E."/>
            <person name="Miner Z.L."/>
            <person name="Minja E."/>
            <person name="Mitchell T."/>
            <person name="Mohabbat F."/>
            <person name="Mohabbat K."/>
            <person name="Montgomery B."/>
            <person name="Moore N."/>
            <person name="Morris S."/>
            <person name="Munidasa M."/>
            <person name="Ngo R.N."/>
            <person name="Nguyen N.B."/>
            <person name="Nickerson E."/>
            <person name="Nwaokelemeh O.O."/>
            <person name="Nwokenkwo S."/>
            <person name="Obregon M."/>
            <person name="Oguh M."/>
            <person name="Oragunye N."/>
            <person name="Oviedo R.J."/>
            <person name="Parish B.J."/>
            <person name="Parker D.N."/>
            <person name="Parrish J."/>
            <person name="Parks K.L."/>
            <person name="Paul H.A."/>
            <person name="Payton B.A."/>
            <person name="Perez A."/>
            <person name="Perrin W."/>
            <person name="Pickens A."/>
            <person name="Primus E.L."/>
            <person name="Pu L.-L."/>
            <person name="Puazo M."/>
            <person name="Quiles M.M."/>
            <person name="Quiroz J.B."/>
            <person name="Rabata D."/>
            <person name="Reeves K."/>
            <person name="Ruiz S.J."/>
            <person name="Shao H."/>
            <person name="Sisson I."/>
            <person name="Sonaike T."/>
            <person name="Sorelle R.P."/>
            <person name="Sutton A.E."/>
            <person name="Svatek A.F."/>
            <person name="Svetz L.A."/>
            <person name="Tamerisa K.S."/>
            <person name="Taylor T.R."/>
            <person name="Teague B."/>
            <person name="Thomas N."/>
            <person name="Thorn R.D."/>
            <person name="Trejos Z.Y."/>
            <person name="Trevino B.K."/>
            <person name="Ukegbu O.N."/>
            <person name="Urban J.B."/>
            <person name="Vasquez L.I."/>
            <person name="Vera V.A."/>
            <person name="Villasana D.M."/>
            <person name="Wang L."/>
            <person name="Ward-Moore S."/>
            <person name="Warren J.T."/>
            <person name="Wei X."/>
            <person name="White F."/>
            <person name="Williamson A.L."/>
            <person name="Wleczyk R."/>
            <person name="Wooden H.S."/>
            <person name="Wooden S.H."/>
            <person name="Yen J."/>
            <person name="Yoon L."/>
            <person name="Yoon V."/>
            <person name="Zorrilla S.E."/>
            <person name="Nelson D."/>
            <person name="Kucherlapati R."/>
            <person name="Weinstock G."/>
            <person name="Gibbs R.A."/>
        </authorList>
    </citation>
    <scope>NUCLEOTIDE SEQUENCE [LARGE SCALE GENOMIC DNA]</scope>
</reference>
<reference key="3">
    <citation type="journal article" date="2007" name="BMC Genomics">
        <title>The full-ORF clone resource of the German cDNA consortium.</title>
        <authorList>
            <person name="Bechtel S."/>
            <person name="Rosenfelder H."/>
            <person name="Duda A."/>
            <person name="Schmidt C.P."/>
            <person name="Ernst U."/>
            <person name="Wellenreuther R."/>
            <person name="Mehrle A."/>
            <person name="Schuster C."/>
            <person name="Bahr A."/>
            <person name="Bloecker H."/>
            <person name="Heubner D."/>
            <person name="Hoerlein A."/>
            <person name="Michel G."/>
            <person name="Wedler H."/>
            <person name="Koehrer K."/>
            <person name="Ottenwaelder B."/>
            <person name="Poustka A."/>
            <person name="Wiemann S."/>
            <person name="Schupp I."/>
        </authorList>
    </citation>
    <scope>NUCLEOTIDE SEQUENCE [LARGE SCALE MRNA] OF 2128-2527</scope>
    <source>
        <tissue>Testis</tissue>
    </source>
</reference>
<reference key="4">
    <citation type="journal article" date="2005" name="Brain">
        <title>PET in LRRK2 mutations: comparison to sporadic Parkinson's disease and evidence for presymptomatic compensation.</title>
        <authorList>
            <person name="Adams J.R."/>
            <person name="van Netten H."/>
            <person name="Schulzer M."/>
            <person name="Mak E."/>
            <person name="McKenzie J."/>
            <person name="Strongosky A."/>
            <person name="Sossi V."/>
            <person name="Ruth T.J."/>
            <person name="Lee C.S."/>
            <person name="Farrer M."/>
            <person name="Gasser T."/>
            <person name="Uitti R.J."/>
            <person name="Calne D.B."/>
            <person name="Wszolek Z.K."/>
            <person name="Stoessl A.J."/>
        </authorList>
    </citation>
    <scope>DISEASE</scope>
</reference>
<reference key="5">
    <citation type="journal article" date="2006" name="Hum. Mol. Genet.">
        <title>The Parkinson disease causing LRRK2 mutation I2020T is associated with increased kinase activity.</title>
        <authorList>
            <person name="Gloeckner C.J."/>
            <person name="Kinkl N."/>
            <person name="Schumacher A."/>
            <person name="Braun R.J."/>
            <person name="O'Neill E."/>
            <person name="Meitinger T."/>
            <person name="Kolch W."/>
            <person name="Prokisch H."/>
            <person name="Ueffing M."/>
        </authorList>
    </citation>
    <scope>SUBCELLULAR LOCATION</scope>
    <scope>CHARACTERIZATION OF VARIANT PARK8 THR-2020</scope>
</reference>
<reference key="6">
    <citation type="journal article" date="2005" name="Mech. Ageing Dev.">
        <title>LRRK2 mutations are not common in Alzheimer's disease.</title>
        <authorList>
            <person name="Toft M."/>
            <person name="Sando S.B."/>
            <person name="Melquist S."/>
            <person name="Ross O.A."/>
            <person name="White L.R."/>
            <person name="Aasly J.O."/>
            <person name="Farrer M.J."/>
        </authorList>
    </citation>
    <scope>DISEASE</scope>
</reference>
<reference key="7">
    <citation type="journal article" date="2005" name="Proc. Natl. Acad. Sci. U.S.A.">
        <title>Parkinson's disease-associated mutations in leucine-rich repeat kinase 2 augment kinase activity.</title>
        <authorList>
            <person name="West A.B."/>
            <person name="Moore D.J."/>
            <person name="Biskup S."/>
            <person name="Bugayenko A."/>
            <person name="Smith W.W."/>
            <person name="Ross C.A."/>
            <person name="Dawson V.L."/>
            <person name="Dawson T.M."/>
        </authorList>
    </citation>
    <scope>SUBCELLULAR LOCATION</scope>
    <scope>CHARACTERIZATION OF VARIANTS PARK8 CYS-1441 AND SER-2019</scope>
</reference>
<reference key="8">
    <citation type="journal article" date="2005" name="Proc. Natl. Acad. Sci. U.S.A.">
        <title>Leucine-rich repeat kinase 2 (LRRK2) interacts with parkin and mutant LRRK2 induces neuronal degeneration.</title>
        <authorList>
            <person name="Smith W.W."/>
            <person name="Pei Z."/>
            <person name="Jiang H."/>
            <person name="Moore D.J."/>
            <person name="Liang Y."/>
            <person name="West A.B."/>
            <person name="Dawson V.L."/>
            <person name="Dawson T.M."/>
            <person name="Ross C.A."/>
        </authorList>
    </citation>
    <scope>SUBCELLULAR LOCATION</scope>
    <scope>INTERACTION WITH PRKN</scope>
</reference>
<reference key="9">
    <citation type="journal article" date="2006" name="Ann. Neurol.">
        <title>LRRK2 expression linked to dopamine-innervated areas.</title>
        <authorList>
            <person name="Galter D."/>
            <person name="Westerlund M."/>
            <person name="Carmine A."/>
            <person name="Lindqvist E."/>
            <person name="Sydow O."/>
            <person name="Olson L."/>
        </authorList>
    </citation>
    <scope>TISSUE SPECIFICITY</scope>
</reference>
<reference key="10">
    <citation type="journal article" date="2006" name="Ann. Neurol.">
        <title>Localization of LRRK2 to membranous and vesicular structures in mammalian brain.</title>
        <authorList>
            <person name="Biskup S."/>
            <person name="Moore D.J."/>
            <person name="Celsi F."/>
            <person name="Higashi S."/>
            <person name="West A.B."/>
            <person name="Andrabi S.A."/>
            <person name="Kurkinen K."/>
            <person name="Yu S.W."/>
            <person name="Savitt J.M."/>
            <person name="Waldvogel H.J."/>
            <person name="Faull R.L."/>
            <person name="Emson P.C."/>
            <person name="Torp R."/>
            <person name="Ottersen O.P."/>
            <person name="Dawson T.M."/>
            <person name="Dawson V.L."/>
        </authorList>
    </citation>
    <scope>SUBCELLULAR LOCATION</scope>
    <scope>TISSUE SPECIFICITY</scope>
</reference>
<reference key="11">
    <citation type="journal article" date="2006" name="Neuron">
        <title>The familial Parkinsonism gene LRRK2 regulates neurite process morphology.</title>
        <authorList>
            <person name="MacLeod D."/>
            <person name="Dowman J."/>
            <person name="Hammond R."/>
            <person name="Leete T."/>
            <person name="Inoue K."/>
            <person name="Abeliovich A."/>
        </authorList>
    </citation>
    <scope>FUNCTION</scope>
    <scope>CHARACTERIZATION OF VARIANTS PARK8 GLY-1441; CYS-1699; SER-2019 AND THR-2020</scope>
    <scope>VARIANT MET-1906</scope>
</reference>
<reference key="12">
    <citation type="journal article" date="2010" name="PLoS ONE">
        <title>Signal transduction protein array analysis links LRRK2 to Ste20 kinases and PKC zeta that modulate neuronal plasticity.</title>
        <authorList>
            <person name="Zach S."/>
            <person name="Felk S."/>
            <person name="Gillardon F."/>
        </authorList>
    </citation>
    <scope>FUNCTION</scope>
</reference>
<reference key="13">
    <citation type="journal article" date="2011" name="Hum. Mutat.">
        <title>Mutations in LRRK2 increase phosphorylation of peroxiredoxin 3 exacerbating oxidative stress-induced neuronal death.</title>
        <authorList>
            <person name="Angeles D.C."/>
            <person name="Gan B.H."/>
            <person name="Onstead L."/>
            <person name="Zhao Y."/>
            <person name="Lim K.L."/>
            <person name="Dachsel J."/>
            <person name="Melrose H."/>
            <person name="Farrer M."/>
            <person name="Wszolek Z.K."/>
            <person name="Dickson D.W."/>
            <person name="Tan E.K."/>
        </authorList>
    </citation>
    <scope>FUNCTION</scope>
    <scope>SUBCELLULAR LOCATION</scope>
    <scope>INTERACTION WITH PRDX3</scope>
    <scope>CHARACTERIZATION OF VARIANT PARK8 SER-2019</scope>
</reference>
<reference key="14">
    <citation type="journal article" date="2012" name="Hum. Mol. Genet.">
        <title>Leucine-rich repeat kinase 2 regulates autophagy through a calcium-dependent pathway involving NAADP.</title>
        <authorList>
            <person name="Gomez-Suaga P."/>
            <person name="Luzon-Toro B."/>
            <person name="Churamani D."/>
            <person name="Zhang L."/>
            <person name="Bloor-Young D."/>
            <person name="Patel S."/>
            <person name="Woodman P.G."/>
            <person name="Churchill G.C."/>
            <person name="Hilfiker S."/>
        </authorList>
    </citation>
    <scope>FUNCTION</scope>
    <scope>INTERACTION WITH TPCN2</scope>
</reference>
<reference key="15">
    <citation type="journal article" date="2012" name="PLoS ONE">
        <title>Biochemical characterization of highly purified leucine-rich repeat kinases 1 and 2 demonstrates formation of homodimers.</title>
        <authorList>
            <person name="Civiero L."/>
            <person name="Vancraenenbroeck R."/>
            <person name="Belluzzi E."/>
            <person name="Beilina A."/>
            <person name="Lobbestael E."/>
            <person name="Reyniers L."/>
            <person name="Gao F."/>
            <person name="Micetic I."/>
            <person name="De Maeyer M."/>
            <person name="Bubacco L."/>
            <person name="Baekelandt V."/>
            <person name="Cookson M.R."/>
            <person name="Greggio E."/>
            <person name="Taymans J.M."/>
        </authorList>
    </citation>
    <scope>SUBUNIT</scope>
    <scope>AUTOPHOSPHORYLATION</scope>
</reference>
<reference key="16">
    <citation type="journal article" date="2013" name="Neuron">
        <title>RAB7L1 interacts with LRRK2 to modify intraneuronal protein sorting and Parkinson's disease risk.</title>
        <authorList>
            <person name="MacLeod D.A."/>
            <person name="Rhinn H."/>
            <person name="Kuwahara T."/>
            <person name="Zolin A."/>
            <person name="Di Paolo G."/>
            <person name="McCabe B.D."/>
            <person name="MacCabe B.D."/>
            <person name="Marder K.S."/>
            <person name="Honig L.S."/>
            <person name="Clark L.N."/>
            <person name="Small S.A."/>
            <person name="Abeliovich A."/>
        </authorList>
    </citation>
    <scope>FUNCTION IN RETROGRADE TRANSPORT</scope>
    <scope>INTERACTION WITH RAB29 AND VPS35</scope>
    <scope>SUBCELLULAR LOCATION</scope>
    <scope>CHARACTERIZATION OF VARIANT PARK8 SER-2019</scope>
    <scope>CHARACTERIZATION OF VARIANT MET-1906</scope>
</reference>
<reference key="17">
    <citation type="journal article" date="2013" name="PLoS ONE">
        <title>A method for WD40 repeat detection and secondary structure prediction.</title>
        <authorList>
            <person name="Wang Y."/>
            <person name="Jiang F."/>
            <person name="Zhuo Z."/>
            <person name="Wu X.H."/>
            <person name="Wu Y.D."/>
        </authorList>
    </citation>
    <scope>WD REPEATS</scope>
</reference>
<reference key="18">
    <citation type="journal article" date="2014" name="J. Proteomics">
        <title>An enzyme assisted RP-RPLC approach for in-depth analysis of human liver phosphoproteome.</title>
        <authorList>
            <person name="Bian Y."/>
            <person name="Song C."/>
            <person name="Cheng K."/>
            <person name="Dong M."/>
            <person name="Wang F."/>
            <person name="Huang J."/>
            <person name="Sun D."/>
            <person name="Wang L."/>
            <person name="Ye M."/>
            <person name="Zou H."/>
        </authorList>
    </citation>
    <scope>IDENTIFICATION BY MASS SPECTROMETRY [LARGE SCALE ANALYSIS]</scope>
    <source>
        <tissue>Liver</tissue>
    </source>
</reference>
<reference key="19">
    <citation type="journal article" date="2014" name="Mol. Cell. Biol.">
        <title>Leucine-rich repeat kinase 2 binds to neuronal vesicles through protein interactions mediated by its C-terminal WD40 domain.</title>
        <authorList>
            <person name="Piccoli G."/>
            <person name="Onofri F."/>
            <person name="Cirnaru M.D."/>
            <person name="Kaiser C.J."/>
            <person name="Jagtap P."/>
            <person name="Kastenmuller A."/>
            <person name="Pischedda F."/>
            <person name="Marte A."/>
            <person name="von Zweydorf F."/>
            <person name="Vogt A."/>
            <person name="Giesert F."/>
            <person name="Pan L."/>
            <person name="Antonucci F."/>
            <person name="Kiel C."/>
            <person name="Zhang M."/>
            <person name="Weinkauf S."/>
            <person name="Sattler M."/>
            <person name="Sala C."/>
            <person name="Matteoli M."/>
            <person name="Ueffing M."/>
            <person name="Gloeckner C.J."/>
        </authorList>
    </citation>
    <scope>FUNCTION</scope>
    <scope>SUBCELLULAR LOCATION</scope>
    <scope>ELECTRON MICROSCOPY</scope>
    <scope>WD REPEATS</scope>
    <scope>CHARACTERIZATION OF VARIANT ARG-2385</scope>
</reference>
<reference key="20">
    <citation type="journal article" date="2016" name="Elife">
        <title>Phosphoproteomics reveals that Parkinson's disease kinase LRRK2 regulates a subset of Rab GTPases.</title>
        <authorList>
            <person name="Steger M."/>
            <person name="Tonelli F."/>
            <person name="Ito G."/>
            <person name="Davies P."/>
            <person name="Trost M."/>
            <person name="Vetter M."/>
            <person name="Wachter S."/>
            <person name="Lorentzen E."/>
            <person name="Duddy G."/>
            <person name="Wilson S."/>
            <person name="Baptista M.A."/>
            <person name="Fiske B.K."/>
            <person name="Fell M.J."/>
            <person name="Morrow J.A."/>
            <person name="Reith A.D."/>
            <person name="Alessi D.R."/>
            <person name="Mann M."/>
        </authorList>
    </citation>
    <scope>FUNCTION</scope>
    <scope>CATALYTIC ACTIVITY</scope>
    <scope>COFACTOR</scope>
    <scope>ACTIVITY REGULATION</scope>
    <scope>INTERACTION WITH RAB8A; RAB10 AND RAB12</scope>
    <scope>CHARACTERIZATION OF VARIANTS PARK8 HIS-1441; CYS-1441; GLY-1441; CYS-1699; HIS-1728; SER-2019; THR-2020; SER-2031 AND ARG-2385</scope>
    <scope>MUTAGENESIS OF ASP-1994</scope>
</reference>
<reference key="21">
    <citation type="journal article" date="2016" name="Mol. Neurobiol.">
        <title>LRRK2 Promotes Tau Accumulation, Aggregation and Release.</title>
        <authorList>
            <person name="Guerreiro P.S."/>
            <person name="Gerhardt E."/>
            <person name="Lopes da Fonseca T."/>
            <person name="Baehr M."/>
            <person name="Outeiro T.F."/>
            <person name="Eckermann K."/>
        </authorList>
    </citation>
    <scope>FUNCTION</scope>
    <scope>INTERACTION WITH MAPT</scope>
    <scope>SUBCELLULAR LOCATION</scope>
    <scope>CHARACTERIZATION OF VARIANT PAR8 SER-2019</scope>
    <scope>MUTAGENESIS OF LYS-1906; ASP-1994 AND ASP-2017</scope>
</reference>
<reference key="22">
    <citation type="journal article" date="2017" name="Protein Cell">
        <title>LRRK2 enhances Nod1/2-mediated inflammatory cytokine production by promoting Rip2 phosphorylation.</title>
        <authorList>
            <person name="Yan R."/>
            <person name="Liu Z."/>
        </authorList>
    </citation>
    <scope>FUNCTION</scope>
    <scope>CATALYTIC ACTIVITY</scope>
    <scope>CHARACTERIZATION OF VARIANT MET-1906</scope>
</reference>
<reference key="23">
    <citation type="journal article" date="2017" name="Elife">
        <title>Systematic proteomic analysis of LRRK2-mediated Rab GTPase phosphorylation establishes a connection to ciliogenesis.</title>
        <authorList>
            <person name="Steger M."/>
            <person name="Diez F."/>
            <person name="Dhekne H.S."/>
            <person name="Lis P."/>
            <person name="Nirujogi R.S."/>
            <person name="Karayel O."/>
            <person name="Tonelli F."/>
            <person name="Martinez T.N."/>
            <person name="Lorentzen E."/>
            <person name="Pfeffer S.R."/>
            <person name="Alessi D.R."/>
            <person name="Mann M."/>
        </authorList>
    </citation>
    <scope>FUNCTION</scope>
    <scope>CATALYTIC ACTIVITY</scope>
    <scope>COFACTOR</scope>
    <scope>CHARACTERIZATION OF VARIANTS PARK8 GLY-1441; CYS-1699 AND SER-2019</scope>
    <scope>MUTAGENESIS OF ASP-2017</scope>
</reference>
<reference key="24">
    <citation type="journal article" date="2017" name="Sci. Signal.">
        <title>Phosphorylation of amyloid precursor protein by mutant LRRK2 promotes AICD activity and neurotoxicity in Parkinson's disease.</title>
        <authorList>
            <person name="Chen Z.C."/>
            <person name="Zhang W."/>
            <person name="Chua L.L."/>
            <person name="Chai C."/>
            <person name="Li R."/>
            <person name="Lin L."/>
            <person name="Cao Z."/>
            <person name="Angeles D.C."/>
            <person name="Stanton L.W."/>
            <person name="Peng J.H."/>
            <person name="Zhou Z.D."/>
            <person name="Lim K.L."/>
            <person name="Zeng L."/>
            <person name="Tan E.K."/>
        </authorList>
    </citation>
    <scope>FUNCTION</scope>
    <scope>CATALYTIC ACTIVITY</scope>
    <scope>COFACTOR</scope>
    <scope>INTERACTION WITH APP</scope>
    <scope>PHOSPHORYLATION AT SER-910 AND SER-935</scope>
    <scope>CHARACTERIZATION OF VARIANTS PARK8 GLY-1441 AND SER-2019</scope>
    <scope>MUTAGENESIS OF ASP-1994</scope>
</reference>
<reference evidence="68" key="25">
    <citation type="journal article" date="2018" name="Proc. Natl. Acad. Sci. U.S.A.">
        <title>LRRK2 and its substrate Rab GTPases are sequentially targeted onto stressed lysosomes and maintain their homeostasis.</title>
        <authorList>
            <person name="Eguchi T."/>
            <person name="Kuwahara T."/>
            <person name="Sakurai M."/>
            <person name="Komori T."/>
            <person name="Fujimoto T."/>
            <person name="Ito G."/>
            <person name="Yoshimura S.I."/>
            <person name="Harada A."/>
            <person name="Fukuda M."/>
            <person name="Koike M."/>
            <person name="Iwatsubo T."/>
        </authorList>
    </citation>
    <scope>FUNCTION</scope>
    <scope>SUBCELLULAR LOCATION</scope>
    <scope>CHARACTERIZATION OF VARIANTS PARK8 CYS-1441; GLY-1441; CYS-1699; SER-2019 AND THR-2020</scope>
    <scope>CHARACTERIZATION OF VARIANT MET-1906</scope>
</reference>
<reference key="26">
    <citation type="journal article" date="2018" name="Biochem. J.">
        <title>Interrogating Parkinson's disease LRRK2 kinase pathway activity by assessing Rab10 phosphorylation in human neutrophils.</title>
        <authorList>
            <person name="Fan Y."/>
            <person name="Howden A.J.M."/>
            <person name="Sarhan A.R."/>
            <person name="Lis P."/>
            <person name="Ito G."/>
            <person name="Martinez T.N."/>
            <person name="Brockmann K."/>
            <person name="Gasser T."/>
            <person name="Alessi D.R."/>
            <person name="Sammler E.M."/>
        </authorList>
    </citation>
    <scope>FUNCTION</scope>
    <scope>CATALYTIC ACTIVITY</scope>
    <scope>ACTIVITY REGULATION</scope>
    <scope>TISSUE SPECIFICITY</scope>
    <scope>CHARACTERIZATION OF VARIANT PARK8 SER-2019</scope>
    <scope>PHOSPHORYLATION AT SER-935</scope>
</reference>
<reference key="27">
    <citation type="journal article" date="2018" name="Elife">
        <title>A pathway for Parkinson's Disease LRRK2 kinase to block primary cilia and Sonic hedgehog signaling in the brain.</title>
        <authorList>
            <person name="Dhekne H.S."/>
            <person name="Yanatori I."/>
            <person name="Gomez R.C."/>
            <person name="Tonelli F."/>
            <person name="Diez F."/>
            <person name="Schuele B."/>
            <person name="Steger M."/>
            <person name="Alessi D.R."/>
            <person name="Pfeffer S.R."/>
        </authorList>
    </citation>
    <scope>FUNCTION</scope>
    <scope>CATALYTIC ACTIVITY</scope>
    <scope>VARIANTS PARK8 GLY-1441 AND SER-2019</scope>
</reference>
<reference key="28">
    <citation type="journal article" date="2018" name="EMBO J.">
        <title>Rab29 activation of the Parkinson's disease-associated LRRK2 kinase.</title>
        <authorList>
            <person name="Purlyte E."/>
            <person name="Dhekne H.S."/>
            <person name="Sarhan A.R."/>
            <person name="Gomez R."/>
            <person name="Lis P."/>
            <person name="Wightman M."/>
            <person name="Martinez T.N."/>
            <person name="Tonelli F."/>
            <person name="Pfeffer S.R."/>
            <person name="Alessi D.R."/>
        </authorList>
    </citation>
    <scope>FUNCTION</scope>
    <scope>CATALYTIC ACTIVITY</scope>
    <scope>ACTIVITY REGULATION</scope>
    <scope>SUBCELLULAR LOCATION</scope>
    <scope>PHOSPHORYLATION AT SER-910; SER-935; SER-955; SER-973 AND SER-1292</scope>
    <scope>CHARACTERIZATION OF VARIANTS PARK8 CYS-1441; GLY-1441; HIS-1441; CYS-1699; HIS-1728; SER-2019; THR-2020; SER-2031 AND ARG-2385</scope>
    <scope>MUTAGENESIS OF CYS-727; LEU-728; LEU-729; LEU-760; LEU-761; LEU-762; LEU-789; LEU-790; LEU-791; THR-1348; ARG-1441; TYR-1699; ASP-2017 AND GLY-2019</scope>
</reference>
<reference key="29">
    <citation type="journal article" date="2019" name="EMBO J.">
        <authorList>
            <person name="Purlyte E."/>
            <person name="Dhekne H.S."/>
            <person name="Sarhan A.R."/>
            <person name="Gomez R."/>
            <person name="Lis P."/>
            <person name="Wightman M."/>
            <person name="Martinez T.N."/>
            <person name="Tonelli F."/>
            <person name="Pfeffer S.R."/>
            <person name="Alessi D.R."/>
        </authorList>
    </citation>
    <scope>ERRATUM OF PUBMED:29212815</scope>
</reference>
<reference key="30">
    <citation type="journal article" date="2022" name="J. Cell Biol.">
        <title>The E3 ligase TRIM1 ubiquitinates LRRK2 and controls its localization, degradation, and toxicity.</title>
        <authorList>
            <person name="Stormo A.E.D."/>
            <person name="Shavarebi F."/>
            <person name="FitzGibbon M."/>
            <person name="Earley E.M."/>
            <person name="Ahrendt H."/>
            <person name="Lum L.S."/>
            <person name="Verschueren E."/>
            <person name="Swaney D.L."/>
            <person name="Skibinski G."/>
            <person name="Ravisankar A."/>
            <person name="van Haren J."/>
            <person name="Davis E.J."/>
            <person name="Johnson J.R."/>
            <person name="Von Dollen J."/>
            <person name="Balen C."/>
            <person name="Porath J."/>
            <person name="Crosio C."/>
            <person name="Mirescu C."/>
            <person name="Iaccarino C."/>
            <person name="Dauer W.T."/>
            <person name="Nichols R.J."/>
            <person name="Wittmann T."/>
            <person name="Cox T.C."/>
            <person name="Finkbeiner S."/>
            <person name="Krogan N.J."/>
            <person name="Oakes S.A."/>
            <person name="Hiniker A."/>
        </authorList>
    </citation>
    <scope>SUBCELLULAR LOCATION</scope>
    <scope>UBIQUITINATION BY TRIM1</scope>
</reference>
<reference evidence="68" key="31">
    <citation type="journal article" date="2024" name="J. Cell Biol.">
        <title>The V-ATPase-ATG16L1 axis recruits LRRK2 to facilitate the lysosomal stress response.</title>
        <authorList>
            <person name="Eguchi T."/>
            <person name="Sakurai M."/>
            <person name="Wang Y."/>
            <person name="Saito C."/>
            <person name="Yoshii G."/>
            <person name="Wileman T."/>
            <person name="Mizushima N."/>
            <person name="Kuwahara T."/>
            <person name="Iwatsubo T."/>
        </authorList>
    </citation>
    <scope>FUNCTION</scope>
    <scope>SUBCELLULAR LOCATION</scope>
</reference>
<reference evidence="69 70" key="32">
    <citation type="journal article" date="2008" name="Proc. Natl. Acad. Sci. U.S.A.">
        <title>Structure of the ROC domain from the Parkinson's disease-associated leucine-rich repeat kinase 2 reveals a dimeric GTPase.</title>
        <authorList>
            <person name="Deng J."/>
            <person name="Lewis P.A."/>
            <person name="Greggio E."/>
            <person name="Sluch E."/>
            <person name="Beilina A."/>
            <person name="Cookson M.R."/>
        </authorList>
    </citation>
    <scope>X-RAY CRYSTALLOGRAPHY (2.0 ANGSTROMS) OF 1333-1516 IN COMPLEX WITH GDP</scope>
    <scope>FUNCTION</scope>
    <scope>GTPASE ACTIVITY</scope>
    <scope>ACTIVITY REGULATION</scope>
    <scope>SUBUNIT</scope>
    <scope>DOMAIN ROC</scope>
    <scope>MUTAGENESIS OF THR-1343 AND ARG-1398</scope>
</reference>
<reference evidence="71 72" key="33">
    <citation type="journal article" date="2017" name="Biochem. J.">
        <title>Structural interface between LRRK2 and 14-3-3 protein.</title>
        <authorList>
            <person name="Stevers L.M."/>
            <person name="de Vries R.M."/>
            <person name="Doveston R.G."/>
            <person name="Milroy L.G."/>
            <person name="Brunsveld L."/>
            <person name="Ottmann C."/>
        </authorList>
    </citation>
    <scope>X-RAY CRYSTALLOGRAPHY (1.33 ANGSTROMS) OF 929-941 IN COMPLEX WITH SFN</scope>
    <scope>INTERACTION WITH YWHAG</scope>
    <scope>PHOSPHORYLATION AT SER-910; SER-935; SER-955; SER-973 AND SER-1444</scope>
    <scope>CHARACTERIZATION OF VARIANT PARK8 CYS-1441</scope>
</reference>
<reference evidence="73 74" key="34">
    <citation type="journal article" date="2019" name="Proc. Natl. Acad. Sci. U.S.A.">
        <title>Crystal structure of the WD40 domain dimer of LRRK2.</title>
        <authorList>
            <person name="Zhang P."/>
            <person name="Fan Y."/>
            <person name="Ru H."/>
            <person name="Wang L."/>
            <person name="Magupalli V.G."/>
            <person name="Taylor S.S."/>
            <person name="Alessi D.R."/>
            <person name="Wu H."/>
        </authorList>
    </citation>
    <scope>X-RAY CRYSTALLOGRAPHY (2.70 ANGSTROMS) OF 2142-2527</scope>
    <scope>FUNCTION</scope>
    <scope>CATALYTIC ACTIVITY</scope>
    <scope>SUBUNIT</scope>
    <scope>DOMAIN</scope>
    <scope>PHOSPHORYLATION AT SER-935 AND SER-1292</scope>
    <scope>CHARACTERIZATION OF VARIANTS PARK8 GLY-1441; SER-2019; ASP-2175; TYR-2189; ILE-2356; ARG-2385; MET-2390 AND ILE-2439</scope>
    <scope>MUTAGENESIS OF ASP-2017; LEU-2343; PHE-2344; SER-2345; TYR-2346; HIS-2391; ARG-2394; GLU-2395; MET-2408 AND SER-2409</scope>
</reference>
<reference evidence="75 76 77 78" key="35">
    <citation type="journal article" date="2023" name="Science">
        <title>Rab29-dependent asymmetrical activation of leucine-rich repeat kinase 2.</title>
        <authorList>
            <person name="Zhu H."/>
            <person name="Tonelli F."/>
            <person name="Turk M."/>
            <person name="Prescott A."/>
            <person name="Alessi D.R."/>
            <person name="Sun J."/>
        </authorList>
    </citation>
    <scope>STRUCTURE BY ELECTRON MICROSCOPY (3.48 ANGSTROMS) IN COMPLEX WITH RAB29; ATP AND GDP</scope>
    <scope>FUNCTION</scope>
    <scope>CATALYTIC ACTIVITY</scope>
    <scope>ACTIVITY REGULATION</scope>
    <scope>SUBUNIT</scope>
    <scope>INTERACTION WITH RAB29 AND RAB32</scope>
    <scope>SUBCELLULAR LOCATION</scope>
    <scope>DOMAIN</scope>
    <scope>AUTOPHOSPHORYLATION AT SER-1292</scope>
    <scope>LRR REPEATS</scope>
    <scope>WD REPEATS</scope>
    <scope>MUTAGENESIS OF ARG-399; LEU-403; PRO-1588; ASN-1710; TRP-1791 AND ASP-2017</scope>
</reference>
<reference key="36">
    <citation type="journal article" date="2004" name="Neuron">
        <title>Cloning of the gene containing mutations that cause PARK8-linked Parkinson's disease.</title>
        <authorList>
            <person name="Paisan-Ruiz C."/>
            <person name="Jain S."/>
            <person name="Evans E.W."/>
            <person name="Gilks W.P."/>
            <person name="Simon J."/>
            <person name="van der Brug M."/>
            <person name="Lopez de Munain A."/>
            <person name="Aparicio S."/>
            <person name="Gil A.M."/>
            <person name="Khan N.L."/>
            <person name="Johnson J."/>
            <person name="Martinez J.R."/>
            <person name="Nicholl D."/>
            <person name="Carrera I.M."/>
            <person name="Pena A.S."/>
            <person name="de Silva R."/>
            <person name="Lees A.J."/>
            <person name="Marti-Masso J.F."/>
            <person name="Perez-Tur J."/>
            <person name="Wood N.W."/>
            <person name="Singleton A.B."/>
        </authorList>
    </citation>
    <scope>VARIANTS PARK8 GLY-1441 AND CYS-1699</scope>
    <scope>TISSUE SPECIFICITY</scope>
</reference>
<reference key="37">
    <citation type="journal article" date="2005" name="Am. J. Hum. Genet.">
        <title>Identification of a novel LRRK2 mutation linked to autosomal dominant parkinsonism: evidence of a common founder across European populations.</title>
        <authorList>
            <person name="Kachergus J.M."/>
            <person name="Mata I.F."/>
            <person name="Hulihan M."/>
            <person name="Taylor J.P."/>
            <person name="Lincoln S."/>
            <person name="Aasly J.O."/>
            <person name="Gibson J.M."/>
            <person name="Ross O.A."/>
            <person name="Lynch T."/>
            <person name="Wiley J."/>
            <person name="Payami H."/>
            <person name="Nutt J."/>
            <person name="Maraganore D.M."/>
            <person name="Czyzewski K."/>
            <person name="Styczynska M."/>
            <person name="Wszolek Z.K."/>
            <person name="Farrer M.J."/>
            <person name="Toft M."/>
        </authorList>
    </citation>
    <scope>VARIANT PARK8 SER-2019</scope>
</reference>
<reference key="38">
    <citation type="journal article" date="2005" name="Ann. Neurol.">
        <title>Clinical and positron emission tomography of Parkinson's disease caused by LRRK2.</title>
        <authorList>
            <person name="Hernandez D.G."/>
            <person name="Paisan-Ruiz C."/>
            <person name="McInerney-Leo A."/>
            <person name="Jain S."/>
            <person name="Meyer-Lindenberg A."/>
            <person name="Evans E.W."/>
            <person name="Berman K.F."/>
            <person name="Johnson J."/>
            <person name="Auburger G."/>
            <person name="Schaeffer A.A."/>
            <person name="Lopez G.J."/>
            <person name="Nussbaum R.L."/>
            <person name="Singleton A.B."/>
        </authorList>
    </citation>
    <scope>VARIANT PARK8 SER-2019</scope>
</reference>
<reference key="39">
    <citation type="journal article" date="2005" name="Ann. Neurol.">
        <title>Clinical features of LRRK2-associated Parkinson's disease in central Norway.</title>
        <authorList>
            <person name="Aasly J.O."/>
            <person name="Toft M."/>
            <person name="Fernandez-Mata I."/>
            <person name="Kachergus J.M."/>
            <person name="Hulihan M."/>
            <person name="White L.R."/>
            <person name="Farrer M.J."/>
        </authorList>
    </citation>
    <scope>VARIANT PARK8/PD SER-2019</scope>
</reference>
<reference key="40">
    <citation type="journal article" date="2005" name="Ann. Neurol.">
        <title>G2019S LRRK2 mutation in French and North African families with Parkinson's disease.</title>
        <authorList>
            <consortium name="French Parkinson's disease genetics study group"/>
            <person name="Lesage S."/>
            <person name="Ibanez P."/>
            <person name="Lohmann E."/>
            <person name="Pollak P."/>
            <person name="Tison F."/>
            <person name="Tazir M."/>
            <person name="Leutenegger A.-L."/>
            <person name="Guimaraes J."/>
            <person name="Bonnet A.-M."/>
            <person name="Agid Y."/>
            <person name="Duerr A."/>
            <person name="Brice A."/>
        </authorList>
    </citation>
    <scope>VARIANT PARK8 SER-2019</scope>
</reference>
<reference key="41">
    <citation type="journal article" date="2005" name="Ann. Neurol.">
        <title>An LRRK2 mutation as a cause for the parkinsonism in the original PARK8 family.</title>
        <authorList>
            <person name="Funayama M."/>
            <person name="Hasegawa K."/>
            <person name="Ohta E."/>
            <person name="Kawashima N."/>
            <person name="Komiyama M."/>
            <person name="Kowa H."/>
            <person name="Tsuji S."/>
            <person name="Obata F."/>
        </authorList>
    </citation>
    <scope>VARIANT PARK8 THR-2020</scope>
</reference>
<reference key="42">
    <citation type="journal article" date="2005" name="Ann. Neurol.">
        <title>Genetic and clinical identification of Parkinson's disease patients with LRRK2 G2019S mutation.</title>
        <authorList>
            <person name="Deng H."/>
            <person name="Le W."/>
            <person name="Guo Y."/>
            <person name="Hunter C.B."/>
            <person name="Xie W."/>
            <person name="Jankovic J."/>
        </authorList>
    </citation>
    <scope>VARIANT PARK8 SER-2019</scope>
</reference>
<reference key="43">
    <citation type="journal article" date="2005" name="Brain">
        <title>Type and frequency of mutations in the LRRK2 gene in familial and sporadic Parkinson's disease.</title>
        <authorList>
            <person name="Berg D."/>
            <person name="Schweitzer K."/>
            <person name="Leitner P."/>
            <person name="Zimprich A."/>
            <person name="Lichtner P."/>
            <person name="Belcredi P."/>
            <person name="Bruessel T."/>
            <person name="Schulte C."/>
            <person name="Maass S."/>
            <person name="Naegele T."/>
        </authorList>
    </citation>
    <scope>VARIANTS PARK8 MET-793; ARG-930; CYS-1096; THR-1228; SER-2019 AND THR-2020</scope>
    <scope>VARIANT LYS-551</scope>
</reference>
<reference key="44">
    <citation type="journal article" date="2005" name="Brain">
        <title>Mutations in the gene LRRK2 encoding dardarin (PARK8) cause familial Parkinson's disease: clinical, pathological, olfactory and functional imaging and genetic data.</title>
        <authorList>
            <person name="Khan N.L."/>
            <person name="Jain S."/>
            <person name="Lynch J.M."/>
            <person name="Pavese N."/>
            <person name="Abou-Sleiman P.M."/>
            <person name="Holton J.L."/>
            <person name="Healy D.G."/>
            <person name="Gilks W.P."/>
            <person name="Sweeney M.G."/>
            <person name="Ganguly M."/>
            <person name="Gibbons V."/>
            <person name="Gandhi S."/>
            <person name="Vaughan J."/>
            <person name="Eunson L.H."/>
            <person name="Katzenschlager R."/>
            <person name="Gayton J."/>
            <person name="Lennox G."/>
            <person name="Revesz T."/>
            <person name="Nicholl D."/>
            <person name="Bhatia K.P."/>
            <person name="Quinn N."/>
            <person name="Brooks D."/>
            <person name="Lees A.J."/>
            <person name="Davis M.B."/>
            <person name="Piccini P."/>
            <person name="Singleton A.B."/>
            <person name="Wood N.W."/>
        </authorList>
    </citation>
    <scope>VARIANTS PARK8 CYS-1699; HIS-1941; SER-2019 AND ILE-2356</scope>
</reference>
<reference key="45">
    <citation type="journal article" date="2006" name="Eur. J. Hum. Genet.">
        <title>Comprehensive analysis of the LRRK2 gene in sixty families with Parkinson's disease.</title>
        <authorList>
            <person name="Di Fonzo A."/>
            <person name="Tassorelli C."/>
            <person name="De Mari M."/>
            <person name="Chien H.F."/>
            <person name="Ferreira J."/>
            <person name="Rohe C.F."/>
            <person name="Riboldazzi G."/>
            <person name="Antonini A."/>
            <person name="Albani G."/>
            <person name="Mauro A."/>
            <person name="Marconi R."/>
            <person name="Abbruzzese G."/>
            <person name="Lopiano L."/>
            <person name="Fincati E."/>
            <person name="Guidi M."/>
            <person name="Marini P."/>
            <person name="Stocchi F."/>
            <person name="Onofrj M."/>
            <person name="Toni V."/>
            <person name="Tinazzi M."/>
            <person name="Fabbrini G."/>
            <person name="Lamberti P."/>
            <person name="Vanacore N."/>
            <person name="Meco G."/>
            <person name="Leitner P."/>
            <person name="Uitti R.J."/>
            <person name="Wszolek Z.K."/>
            <person name="Gasser T."/>
            <person name="Simons E.J."/>
            <person name="Breedveld G.J."/>
            <person name="Goldwurm S."/>
            <person name="Pezzoli G."/>
            <person name="Sampaio C."/>
            <person name="Barbosa E."/>
            <person name="Martignoni E."/>
            <person name="Oostra B.A."/>
            <person name="Bonifati V."/>
        </authorList>
    </citation>
    <scope>VARIANTS PARK8 VAL-1371; CYS-1441 AND SER-2019</scope>
</reference>
<reference key="46">
    <citation type="journal article" date="2005" name="J. Med. Genet.">
        <title>The G6055A (G2019S) mutation in LRRK2 is frequent in both early and late onset Parkinson's disease and originates from a common ancestor.</title>
        <authorList>
            <person name="Goldwurm S."/>
            <person name="Di Fonzo A."/>
            <person name="Simons E.J."/>
            <person name="Rohe C.F."/>
            <person name="Zini M."/>
            <person name="Canesi M."/>
            <person name="Tesei S."/>
            <person name="Zecchinelli A."/>
            <person name="Antonini A."/>
            <person name="Mariani C."/>
            <person name="Meucci N."/>
            <person name="Sacilotto G."/>
            <person name="Sironi F."/>
            <person name="Salani G."/>
            <person name="Ferreira J."/>
            <person name="Chien H.F."/>
            <person name="Fabrizio E."/>
            <person name="Vanacore N."/>
            <person name="Dalla Libera A."/>
            <person name="Stocchi F."/>
            <person name="Diroma C."/>
            <person name="Lamberti P."/>
            <person name="Sampaio C."/>
            <person name="Meco G."/>
            <person name="Barbosa E."/>
            <person name="Bertoli-Avella A.M."/>
            <person name="Breedveld G.J."/>
            <person name="Oostra B.A."/>
            <person name="Pezzoli G."/>
            <person name="Bonifati V."/>
        </authorList>
    </citation>
    <scope>VARIANT PARK8 SER-2019</scope>
</reference>
<reference key="47">
    <citation type="journal article" date="2005" name="Lancet">
        <title>Genetic screening for a single common LRRK2 mutation in familial Parkinson's disease.</title>
        <authorList>
            <consortium name="The Parkinson study group-PROGENI investigators"/>
            <person name="Nichols W.C."/>
            <person name="Pankratz N."/>
            <person name="Hernandez D."/>
            <person name="Paisan-Ruiz C."/>
            <person name="Jain S."/>
            <person name="Halter C.A."/>
            <person name="Michaels V.E."/>
            <person name="Reed T."/>
            <person name="Rudolph A."/>
            <person name="Shults C.W."/>
            <person name="Singleton A."/>
            <person name="Foroud T."/>
        </authorList>
    </citation>
    <scope>VARIANT PARK8 SER-2019</scope>
</reference>
<reference key="48">
    <citation type="journal article" date="2005" name="Lancet">
        <title>A frequent LRRK2 gene mutation associated with autosomal dominant Parkinson's disease.</title>
        <authorList>
            <consortium name="The Italian Parkinson genetics network"/>
            <person name="Di Fonzo A."/>
            <person name="Rohe C.F."/>
            <person name="Ferreira J."/>
            <person name="Chien H.F."/>
            <person name="Vacca L."/>
            <person name="Stocchi F."/>
            <person name="Guedes L."/>
            <person name="Fabrizio E."/>
            <person name="Manfredi M."/>
            <person name="Vanacore N."/>
            <person name="Goldwurm S."/>
            <person name="Breedveld G.J."/>
            <person name="Sampaio C."/>
            <person name="Meco G."/>
            <person name="Barbosa E."/>
            <person name="Oostra B.A."/>
            <person name="Bonifati V."/>
        </authorList>
    </citation>
    <scope>VARIANT PARK8 SER-2019</scope>
</reference>
<reference key="49">
    <citation type="journal article" date="2005" name="Lancet">
        <title>A common LRRK2 mutation in idiopathic Parkinson's disease.</title>
        <authorList>
            <person name="Gilks W.P."/>
            <person name="Abou-Sleiman P.M."/>
            <person name="Gandhi S."/>
            <person name="Jain S."/>
            <person name="Singleton A."/>
            <person name="Lees A.J."/>
            <person name="Shaw K."/>
            <person name="Bhatia K.P."/>
            <person name="Bonifati V."/>
            <person name="Quinn N.P."/>
            <person name="Lynch J.M."/>
            <person name="Healy D.G."/>
            <person name="Holton J.L."/>
            <person name="Revesz T."/>
            <person name="Wood N.W."/>
        </authorList>
    </citation>
    <scope>VARIANT PARK8 SER-2019</scope>
</reference>
<reference key="50">
    <citation type="journal article" date="2005" name="Lancet">
        <title>LRRK2 mutations and Parkinsonism.</title>
        <authorList>
            <person name="Toft M."/>
            <person name="Mata I.F."/>
            <person name="Kachergus J.M."/>
            <person name="Ross O.A."/>
            <person name="Farrer M.J."/>
        </authorList>
    </citation>
    <scope>VARIANT PARK8 SER-2019</scope>
</reference>
<reference key="51">
    <citation type="journal article" date="2005" name="Mov. Disord.">
        <title>Escaping Parkinson's disease: a neurologically healthy octogenarian with the LRRK2 G2019S mutation.</title>
        <authorList>
            <person name="Kay D.M."/>
            <person name="Kramer P."/>
            <person name="Higgins D.S."/>
            <person name="Zabetian C.P."/>
            <person name="Payami H."/>
        </authorList>
    </citation>
    <scope>VARIANT SER-2019</scope>
</reference>
<reference key="52">
    <citation type="journal article" date="2006" name="Mov. Disord.">
        <title>Parkinson's disease and LRRK2: frequency of a common mutation in U.S. movement disorder clinics.</title>
        <authorList>
            <person name="Kay D.M."/>
            <person name="Zabetian C.P."/>
            <person name="Factor S.A."/>
            <person name="Nutt J.G."/>
            <person name="Samii A."/>
            <person name="Griffith A."/>
            <person name="Bird T.D."/>
            <person name="Kramer P."/>
            <person name="Higgins D.S."/>
            <person name="Payami H."/>
        </authorList>
    </citation>
    <scope>VARIANT PARK8 SER-2019</scope>
</reference>
<reference key="53">
    <citation type="journal article" date="2005" name="Neurogenetics">
        <title>Lrrk2 pathogenic substitutions in Parkinson's disease.</title>
        <authorList>
            <person name="Mata I.F."/>
            <person name="Kachergus J.M."/>
            <person name="Taylor J.P."/>
            <person name="Lincoln S."/>
            <person name="Aasly J."/>
            <person name="Lynch T."/>
            <person name="Hulihan M.M."/>
            <person name="Cobb S.A."/>
            <person name="Wu R.-M."/>
            <person name="Lu C.-S."/>
            <person name="Lahoz C."/>
            <person name="Wszolek Z.K."/>
            <person name="Farrer M.J."/>
        </authorList>
    </citation>
    <scope>VARIANTS PARK8 CYS-1441; GLY-1441; HIS-1441; GLN-1514; SER-1542; GLU-1598; PRO-1628; CYS-1699; THR-1869; THR-2012; SER-2019; THR-2020 AND ARG-2385</scope>
    <scope>VARIANTS PRO-119; LYS-551; VAL-723; MET-793; VAL-1122; ALA-1262; HIS-1398; THR-1646; THR-1647; ASP-2081; LEU-2119; ILE-2261 AND THR-2397</scope>
</reference>
<reference key="54">
    <citation type="journal article" date="2005" name="Neurology">
        <title>LRRK2 gene in Parkinson disease: mutation analysis and case control association study.</title>
        <authorList>
            <person name="Paisan-Ruiz C."/>
            <person name="Lang A.E."/>
            <person name="Kawarai T."/>
            <person name="Sato C."/>
            <person name="Salehi-Rad S."/>
            <person name="Fisman G.K."/>
            <person name="Al-Khairallah T."/>
            <person name="St George-Hyslop P.H."/>
            <person name="Singleton A."/>
            <person name="Rogaeva E."/>
        </authorList>
    </citation>
    <scope>VARIANTS PARK8 VAL-1371 AND SER-2019</scope>
    <scope>VARIANTS HIS-1398 AND THR-2397</scope>
</reference>
<reference key="55">
    <citation type="journal article" date="2005" name="Neurology">
        <title>Analysis of LRRK2 functional domains in nondominant Parkinson disease.</title>
        <authorList>
            <person name="Skipper L."/>
            <person name="Shen H."/>
            <person name="Chua E."/>
            <person name="Bonnard C."/>
            <person name="Kolatkar P."/>
            <person name="Tan L.C.S."/>
            <person name="Jamora R.D."/>
            <person name="Puvan K."/>
            <person name="Puong K.Y."/>
            <person name="Zhao Y."/>
            <person name="Pavanni R."/>
            <person name="Wong M.C."/>
            <person name="Yuen Y."/>
            <person name="Farrer M."/>
            <person name="Liu J.J."/>
            <person name="Tan E.K."/>
        </authorList>
    </citation>
    <scope>VARIANT PARK8 GLN-1067</scope>
</reference>
<reference key="56">
    <citation type="journal article" date="2005" name="Neurology">
        <title>LRRK2 mutations in Parkinson disease.</title>
        <authorList>
            <person name="Farrer M."/>
            <person name="Stone J."/>
            <person name="Mata I.F."/>
            <person name="Lincoln S."/>
            <person name="Kachergus J."/>
            <person name="Hulihan M."/>
            <person name="Strain K.J."/>
            <person name="Maraganore D.M."/>
        </authorList>
    </citation>
    <scope>VARIANTS PARK8 MET-793; THR-1869 AND SER-2019</scope>
</reference>
<reference key="57">
    <citation type="journal article" date="2005" name="Neurology">
        <title>A clinic-based study of the LRRK2 gene in Parkinson disease yields new mutations.</title>
        <authorList>
            <person name="Zabetian C.P."/>
            <person name="Samii A."/>
            <person name="Mosley A.D."/>
            <person name="Roberts J.W."/>
            <person name="Leis B.C."/>
            <person name="Yearout D."/>
            <person name="Raskind W.H."/>
            <person name="Griffith A."/>
        </authorList>
    </citation>
    <scope>VARIANTS PARK8 CYS-1441; HIS-1441 AND SER-2019</scope>
</reference>
<reference key="58">
    <citation type="journal article" date="2005" name="Neurosci. Lett.">
        <title>LRRK2 R1441G in Spanish patients with Parkinson's disease.</title>
        <authorList>
            <person name="Mata I.F."/>
            <person name="Taylor J.P."/>
            <person name="Kachergus J."/>
            <person name="Hulihan M."/>
            <person name="Huerta C."/>
            <person name="Lahoz C."/>
            <person name="Blazquez M."/>
            <person name="Guisasola L.M."/>
            <person name="Salvador C."/>
            <person name="Ribacoba R."/>
            <person name="Martinez C."/>
            <person name="Farrer M."/>
            <person name="Alvarez V."/>
        </authorList>
    </citation>
    <scope>VARIANT PARK8 GLY-1441</scope>
</reference>
<reference key="59">
    <citation type="journal article" date="2006" name="Neurosci. Lett.">
        <title>LRRK2 G2019S is a common mutation in Spanish patients with late-onset Parkinson's disease.</title>
        <authorList>
            <person name="Infante J."/>
            <person name="Rodriguez E."/>
            <person name="Combarros O."/>
            <person name="Mateo I."/>
            <person name="Fontalba A."/>
            <person name="Pascual J."/>
            <person name="Oterino A."/>
            <person name="Polo J.M."/>
            <person name="Leno C."/>
            <person name="Berciano J."/>
        </authorList>
    </citation>
    <scope>VARIANT PARK8 SER-2019</scope>
</reference>
<reference key="60">
    <citation type="journal article" date="2005" name="Parkinsonism Relat. Disord.">
        <title>Clinical traits of LRRK2-associated Parkinson's disease in Ireland: a link between familial and idiopathic PD.</title>
        <authorList>
            <person name="Gosal D."/>
            <person name="Ross O.A."/>
            <person name="Wiley J."/>
            <person name="Irvine G.B."/>
            <person name="Johnston J.A."/>
            <person name="Toft M."/>
            <person name="Mata I.F."/>
            <person name="Kachergus J."/>
            <person name="Hulihan M."/>
            <person name="Taylor J.P."/>
            <person name="Lincoln S.J."/>
            <person name="Farrer M.J."/>
            <person name="Lynch T."/>
            <person name="Mark Gibson J."/>
        </authorList>
    </citation>
    <scope>VARIANT PARK8 SER-2019</scope>
</reference>
<reference key="61">
    <citation type="journal article" date="2006" name="Arch. Neurol.">
        <title>LRRK2 mutations in Spanish patients with Parkinson disease: frequency, clinical features, and incomplete penetrance.</title>
        <authorList>
            <person name="Gaig C."/>
            <person name="Ezquerra M."/>
            <person name="Marti M.J."/>
            <person name="Munoz E."/>
            <person name="Valldeoriola F."/>
            <person name="Tolosa E."/>
        </authorList>
    </citation>
    <scope>VARIANTS PARK8 CYS-1441; GLY-1441 AND SER-2019</scope>
</reference>
<reference key="62">
    <citation type="journal article" date="2007" name="Hum. Genet.">
        <title>The LRRK2 Gly2385Arg variant is associated with Parkinson's disease: genetic and functional evidence.</title>
        <authorList>
            <person name="Tan E.K."/>
            <person name="Zhao Y."/>
            <person name="Skipper L."/>
            <person name="Tan M.G."/>
            <person name="Di Fonzo A."/>
            <person name="Sun L."/>
            <person name="Fook-Chong S."/>
            <person name="Tang S."/>
            <person name="Chua E."/>
            <person name="Yuen Y."/>
            <person name="Tan L."/>
            <person name="Pavanni R."/>
            <person name="Wong M.C."/>
            <person name="Kolatkar P."/>
            <person name="Lu C.S."/>
            <person name="Bonifati V."/>
            <person name="Liu J.J."/>
        </authorList>
    </citation>
    <scope>CHARACTERIZATION OF VARIANT ARG-2385</scope>
    <scope>ASSOCIATION WITH PARKINSON DISEASE</scope>
</reference>
<reference key="63">
    <citation type="journal article" date="2007" name="Nature">
        <title>Patterns of somatic mutation in human cancer genomes.</title>
        <authorList>
            <person name="Greenman C."/>
            <person name="Stephens P."/>
            <person name="Smith R."/>
            <person name="Dalgliesh G.L."/>
            <person name="Hunter C."/>
            <person name="Bignell G."/>
            <person name="Davies H."/>
            <person name="Teague J."/>
            <person name="Butler A."/>
            <person name="Stevens C."/>
            <person name="Edkins S."/>
            <person name="O'Meara S."/>
            <person name="Vastrik I."/>
            <person name="Schmidt E.E."/>
            <person name="Avis T."/>
            <person name="Barthorpe S."/>
            <person name="Bhamra G."/>
            <person name="Buck G."/>
            <person name="Choudhury B."/>
            <person name="Clements J."/>
            <person name="Cole J."/>
            <person name="Dicks E."/>
            <person name="Forbes S."/>
            <person name="Gray K."/>
            <person name="Halliday K."/>
            <person name="Harrison R."/>
            <person name="Hills K."/>
            <person name="Hinton J."/>
            <person name="Jenkinson A."/>
            <person name="Jones D."/>
            <person name="Menzies A."/>
            <person name="Mironenko T."/>
            <person name="Perry J."/>
            <person name="Raine K."/>
            <person name="Richardson D."/>
            <person name="Shepherd R."/>
            <person name="Small A."/>
            <person name="Tofts C."/>
            <person name="Varian J."/>
            <person name="Webb T."/>
            <person name="West S."/>
            <person name="Widaa S."/>
            <person name="Yates A."/>
            <person name="Cahill D.P."/>
            <person name="Louis D.N."/>
            <person name="Goldstraw P."/>
            <person name="Nicholson A.G."/>
            <person name="Brasseur F."/>
            <person name="Looijenga L."/>
            <person name="Weber B.L."/>
            <person name="Chiew Y.-E."/>
            <person name="DeFazio A."/>
            <person name="Greaves M.F."/>
            <person name="Green A.R."/>
            <person name="Campbell P."/>
            <person name="Birney E."/>
            <person name="Easton D.F."/>
            <person name="Chenevix-Trench G."/>
            <person name="Tan M.-H."/>
            <person name="Khoo S.K."/>
            <person name="Teh B.T."/>
            <person name="Yuen S.T."/>
            <person name="Leung S.Y."/>
            <person name="Wooster R."/>
            <person name="Futreal P.A."/>
            <person name="Stratton M.R."/>
        </authorList>
    </citation>
    <scope>VARIANTS [LARGE SCALE ANALYSIS] PRO-119; VAL-419; LYS-551; VAL-723; HIS-1398; GLN-1514; SER-1542; GLN-1550 AND PRO-1723</scope>
</reference>
<reference key="64">
    <citation type="journal article" date="2008" name="Hum. Mutat.">
        <title>Comprehensive analysis of LRRK2 in publicly available Parkinson's disease cases and neurologically normal controls.</title>
        <authorList>
            <person name="Paisan-Ruiz C."/>
            <person name="Nath P."/>
            <person name="Washecka N."/>
            <person name="Gibbs J.R."/>
            <person name="Singleton A.B."/>
        </authorList>
    </citation>
    <scope>VARIANTS PARK8 VAL-712; LEU-1728; HIS-1728; SER-2019; MET-2141; HIS-2143 AND HIS-2466</scope>
    <scope>VARIANTS SER-228; VAL-716; GLU-871; PHE-1870 AND LYS-2395</scope>
</reference>
<reference key="65">
    <citation type="journal article" date="2011" name="Nature">
        <title>Exome sequencing identifies frequent mutation of the SWI/SNF complex gene PBRM1 in renal carcinoma.</title>
        <authorList>
            <person name="Varela I."/>
            <person name="Tarpey P."/>
            <person name="Raine K."/>
            <person name="Huang D."/>
            <person name="Ong C.K."/>
            <person name="Stephens P."/>
            <person name="Davies H."/>
            <person name="Jones D."/>
            <person name="Lin M.L."/>
            <person name="Teague J."/>
            <person name="Bignell G."/>
            <person name="Butler A."/>
            <person name="Cho J."/>
            <person name="Dalgliesh G.L."/>
            <person name="Galappaththige D."/>
            <person name="Greenman C."/>
            <person name="Hardy C."/>
            <person name="Jia M."/>
            <person name="Latimer C."/>
            <person name="Lau K.W."/>
            <person name="Marshall J."/>
            <person name="McLaren S."/>
            <person name="Menzies A."/>
            <person name="Mudie L."/>
            <person name="Stebbings L."/>
            <person name="Largaespada D.A."/>
            <person name="Wessels L.F.A."/>
            <person name="Richard S."/>
            <person name="Kahnoski R.J."/>
            <person name="Anema J."/>
            <person name="Tuveson D.A."/>
            <person name="Perez-Mancera P.A."/>
            <person name="Mustonen V."/>
            <person name="Fischer A."/>
            <person name="Adams D.J."/>
            <person name="Rust A."/>
            <person name="Chan-On W."/>
            <person name="Subimerb C."/>
            <person name="Dykema K."/>
            <person name="Furge K."/>
            <person name="Campbell P.J."/>
            <person name="Teh B.T."/>
            <person name="Stratton M.R."/>
            <person name="Futreal P.A."/>
        </authorList>
    </citation>
    <scope>VARIANT ILE-1359</scope>
</reference>
<reference key="66">
    <citation type="journal article" date="2011" name="Parkinsonism Relat. Disord.">
        <title>Genetic characteristics of leucine-rich repeat kinase 2 (LRRK2) associated Parkinson's disease.</title>
        <authorList>
            <person name="Bardien S."/>
            <person name="Lesage S."/>
            <person name="Brice A."/>
            <person name="Carr J."/>
        </authorList>
    </citation>
    <scope>VARIANTS PARK8 PRO-1628 AND ARG-2385</scope>
</reference>
<reference key="67">
    <citation type="journal article" date="2012" name="Hum. Mutat.">
        <title>Deep sequencing of the LRRK2 gene in 14,002 individuals reveals evidence of purifying selection and independent origin of the p.Arg1628Pro mutation in Europe.</title>
        <authorList>
            <person name="Rubio J.P."/>
            <person name="Topp S."/>
            <person name="Warren L."/>
            <person name="St Jean P.L."/>
            <person name="Wegmann D."/>
            <person name="Kessner D."/>
            <person name="Novembre J."/>
            <person name="Shen J."/>
            <person name="Fraser D."/>
            <person name="Aponte J."/>
            <person name="Nangle K."/>
            <person name="Cardon L.R."/>
            <person name="Ehm M.G."/>
            <person name="Chissoe S.L."/>
            <person name="Whittaker J.C."/>
            <person name="Nelson M.R."/>
            <person name="Mooser V.E."/>
        </authorList>
    </citation>
    <scope>VARIANTS LYS-551; VAL-723; HIS-1398; GLN-1514; SER-1542; PRO-1628; THR-1646; THR-1647; ASP-2081 AND THR-2397</scope>
</reference>
<reference key="68">
    <citation type="journal article" date="2012" name="Mov. Disord.">
        <title>Systematic review and UK-based study of PARK2 (parkin), PINK1, PARK7 (DJ-1) and LRRK2 in early-onset Parkinson's disease.</title>
        <authorList>
            <person name="Kilarski L.L."/>
            <person name="Pearson J.P."/>
            <person name="Newsway V."/>
            <person name="Majounie E."/>
            <person name="Knipe M.D."/>
            <person name="Misbahuddin A."/>
            <person name="Chinnery P.F."/>
            <person name="Burn D.J."/>
            <person name="Clarke C.E."/>
            <person name="Marion M.H."/>
            <person name="Lewthwaite A.J."/>
            <person name="Nicholl D.J."/>
            <person name="Wood N.W."/>
            <person name="Morrison K.E."/>
            <person name="Williams-Gray C.H."/>
            <person name="Evans J.R."/>
            <person name="Sawcer S.J."/>
            <person name="Barker R.A."/>
            <person name="Wickremaratchi M.M."/>
            <person name="Ben-Shlomo Y."/>
            <person name="Williams N.M."/>
            <person name="Morris H.R."/>
        </authorList>
    </citation>
    <scope>VARIANT PARK8 SER-2019</scope>
</reference>
<reference key="69">
    <citation type="journal article" date="2014" name="EMBO J.">
        <title>Leucine-rich repeat kinase 2 regulates Sec16A at ER exit sites to allow ER-Golgi export.</title>
        <authorList>
            <person name="Cho H.J."/>
            <person name="Yu J."/>
            <person name="Xie C."/>
            <person name="Rudrabhatla P."/>
            <person name="Chen X."/>
            <person name="Wu J."/>
            <person name="Parisiadou L."/>
            <person name="Liu G."/>
            <person name="Sun L."/>
            <person name="Ma B."/>
            <person name="Ding J."/>
            <person name="Liu Z."/>
            <person name="Cai H."/>
        </authorList>
    </citation>
    <scope>CHARACTERIZATION OF VARIANTS PARK8 CYS-1441; CYS-1699 AND SER-2019</scope>
    <scope>CHARACTERIZATION OF VARIANT ARG-2385</scope>
    <scope>FUNCTION</scope>
    <scope>SUBCELLULAR LOCATION</scope>
    <scope>INTERACTION WITH SEC16A</scope>
    <scope>MUTAGENESIS OF LYS-1347 AND ASP-1994</scope>
</reference>
<protein>
    <recommendedName>
        <fullName>Leucine-rich repeat serine/threonine-protein kinase 2</fullName>
        <ecNumber evidence="55 58 59 60 61 63 64">2.7.11.1</ecNumber>
        <ecNumber evidence="42 55 58 59 61">3.6.5.-</ecNumber>
    </recommendedName>
    <alternativeName>
        <fullName>Dardarin</fullName>
    </alternativeName>
</protein>
<accession>Q5S007</accession>
<accession>A6NJU2</accession>
<accession>Q6ZS50</accession>
<accession>Q8NCX9</accession>
<comment type="function">
    <text evidence="38 42 43 46 47 51 52 53 54 55 56 58 59 60 61 62 63 64 66 67">Serine/threonine-protein kinase which phosphorylates a broad range of proteins involved in multiple processes such as neuronal plasticity, innate immunity, autophagy, and vesicle trafficking (PubMed:17114044, PubMed:20949042, PubMed:21850687, PubMed:22012985, PubMed:23395371, PubMed:24687852, PubMed:25201882, PubMed:26014385, PubMed:26824392, PubMed:27830463, PubMed:28720718, PubMed:29125462, PubMed:29127255, PubMed:29212815, PubMed:30398148, PubMed:30635421). Is a key regulator of RAB GTPases by regulating the GTP/GDP exchange and interaction partners of RABs through phosphorylation (PubMed:26824392, PubMed:28720718, PubMed:29125462, PubMed:29127255, PubMed:29212815, PubMed:30398148, PubMed:30635421). Phosphorylates RAB3A, RAB3B, RAB3C, RAB3D, RAB5A, RAB5B, RAB5C, RAB8A, RAB8B, RAB10, RAB12, RAB29, RAB35, and RAB43 (PubMed:23395371, PubMed:26824392, PubMed:28720718, PubMed:29125462, PubMed:29127255, PubMed:29212815, PubMed:30398148, PubMed:30635421, PubMed:38127736). Regulates the RAB3IP-catalyzed GDP/GTP exchange for RAB8A through the phosphorylation of 'Thr-72' on RAB8A (PubMed:26824392). Inhibits the interaction between RAB8A and GDI1 and/or GDI2 by phosphorylating 'Thr-72' on RAB8A (PubMed:26824392). Regulates primary ciliogenesis through phosphorylation of RAB8A and RAB10, which promotes SHH signaling in the brain (PubMed:29125462, PubMed:30398148). Together with RAB29, plays a role in the retrograde trafficking pathway for recycling proteins, such as mannose-6-phosphate receptor (M6PR), between lysosomes and the Golgi apparatus in a retromer-dependent manner (PubMed:23395371). Regulates neuronal process morphology in the intact central nervous system (CNS) (PubMed:17114044). Plays a role in synaptic vesicle trafficking (PubMed:24687852). Plays an important role in recruiting SEC16A to endoplasmic reticulum exit sites (ERES) and in regulating ER to Golgi vesicle-mediated transport and ERES organization (PubMed:25201882). Positively regulates autophagy through a calcium-dependent activation of the CaMKK/AMPK signaling pathway (PubMed:22012985). The process involves activation of nicotinic acid adenine dinucleotide phosphate (NAADP) receptors, increase in lysosomal pH, and calcium release from lysosomes (PubMed:22012985). Phosphorylates PRDX3 (PubMed:21850687). By phosphorylating APP on 'Thr-743', which promotes the production and the nuclear translocation of the APP intracellular domain (AICD), regulates dopaminergic neuron apoptosis (PubMed:28720718). Acts as a positive regulator of innate immunity by mediating phosphorylation of RIPK2 downstream of NOD1 and NOD2, thereby enhancing RIPK2 activation (PubMed:27830463). Independent of its kinase activity, inhibits the proteasomal degradation of MAPT, thus promoting MAPT oligomerization and secretion (PubMed:26014385). In addition, has GTPase activity via its Roc domain which regulates LRRK2 kinase activity (PubMed:18230735, PubMed:26824392, PubMed:28720718, PubMed:29125462, PubMed:29212815). Recruited by RAB29/RAB7L1 to overloaded lysosomes where it phosphorylates and stabilizes RAB8A and RAB10 which promote lysosomal content release and suppress lysosomal enlargement through the EHBP1 and EHBP1L1 effector proteins (PubMed:30209220, PubMed:38227290).</text>
</comment>
<comment type="catalytic activity">
    <reaction evidence="55 58 59 60 61 63 64 66">
        <text>L-threonyl-[protein] + ATP = O-phospho-L-threonyl-[protein] + ADP + H(+)</text>
        <dbReference type="Rhea" id="RHEA:46608"/>
        <dbReference type="Rhea" id="RHEA-COMP:11060"/>
        <dbReference type="Rhea" id="RHEA-COMP:11605"/>
        <dbReference type="ChEBI" id="CHEBI:15378"/>
        <dbReference type="ChEBI" id="CHEBI:30013"/>
        <dbReference type="ChEBI" id="CHEBI:30616"/>
        <dbReference type="ChEBI" id="CHEBI:61977"/>
        <dbReference type="ChEBI" id="CHEBI:456216"/>
        <dbReference type="EC" id="2.7.11.1"/>
    </reaction>
</comment>
<comment type="catalytic activity">
    <reaction evidence="55 56 58 59 60 61 63 66">
        <text>L-seryl-[protein] + ATP = O-phospho-L-seryl-[protein] + ADP + H(+)</text>
        <dbReference type="Rhea" id="RHEA:17989"/>
        <dbReference type="Rhea" id="RHEA-COMP:9863"/>
        <dbReference type="Rhea" id="RHEA-COMP:11604"/>
        <dbReference type="ChEBI" id="CHEBI:15378"/>
        <dbReference type="ChEBI" id="CHEBI:29999"/>
        <dbReference type="ChEBI" id="CHEBI:30616"/>
        <dbReference type="ChEBI" id="CHEBI:83421"/>
        <dbReference type="ChEBI" id="CHEBI:456216"/>
        <dbReference type="EC" id="2.7.11.1"/>
    </reaction>
</comment>
<comment type="catalytic activity">
    <reaction evidence="42 55 58 59 61 66">
        <text>GTP + H2O = GDP + phosphate + H(+)</text>
        <dbReference type="Rhea" id="RHEA:19669"/>
        <dbReference type="ChEBI" id="CHEBI:15377"/>
        <dbReference type="ChEBI" id="CHEBI:15378"/>
        <dbReference type="ChEBI" id="CHEBI:37565"/>
        <dbReference type="ChEBI" id="CHEBI:43474"/>
        <dbReference type="ChEBI" id="CHEBI:58189"/>
    </reaction>
</comment>
<comment type="cofactor">
    <cofactor evidence="55 58 59">
        <name>Mg(2+)</name>
        <dbReference type="ChEBI" id="CHEBI:18420"/>
    </cofactor>
</comment>
<comment type="activity regulation">
    <text evidence="42 55 60 61 66">Kinase activity is regulated by the GTPase activity of the ROC domain (PubMed:18230735, PubMed:29212815). GTP-bound LRRK2 kinase activity is stimulated by RAB29 (PubMed:29212815, PubMed:38127736). Phosphorylation of RAB10 'Thr-73' is stimulated by RAB29 and RAB32 (PubMed:38127736). Inhibited by small molecule inhibitor MLi-2 (PubMed:26824392, PubMed:29127255).</text>
</comment>
<comment type="subunit">
    <text evidence="34 42 46 47 49 51 53 54 55 57 58 64 66">Homodimer (PubMed:18230735, PubMed:22952686, PubMed:30635421, PubMed:38127736). Homotetramer; when activated by GTP-bound RAB29 (PubMed:38127736). Interacts with PRKN, PRDX3, and TPCN2 (PubMed:16352719, PubMed:21850687, PubMed:22012985). Interacts with VPS35 (PubMed:23395371). Interacts (via N-terminus) with RAB29; this interaction is direct and stimulates kinase activity (PubMed:23395371, PubMed:38127736). Interacts (via ROC domain) with SEC16A (PubMed:25201882). Interacts with APP; interaction promotes phosphorylation of 'Thr-743' of APP (PubMed:28720718). Interacts with MAPT (PubMed:26014385). Interacts with RAB8A, RAB10, and RAB12 (PubMed:26824392). Interacts (via N-terminus) with RAB32 (PubMed:38127736). Interacts with YWHAG; this interaction is dependent on phosphorylation of Ser-910 and either Ser-935 or Ser-1444 (PubMed:28202711). Interacts with SFN; this interaction is dependent on phosphorylation of Ser-910 and/or Ser-935 (PubMed:28202711).</text>
</comment>
<comment type="interaction">
    <interactant intactId="EBI-5323863">
        <id>Q5S007</id>
    </interactant>
    <interactant intactId="EBI-528269">
        <id>Q9UKV8</id>
        <label>AGO2</label>
    </interactant>
    <organismsDiffer>false</organismsDiffer>
    <experiments>3</experiments>
</comment>
<comment type="interaction">
    <interactant intactId="EBI-5323863">
        <id>Q5S007</id>
    </interactant>
    <interactant intactId="EBI-2371423">
        <id>O43865</id>
        <label>AHCYL1</label>
    </interactant>
    <organismsDiffer>false</organismsDiffer>
    <experiments>3</experiments>
</comment>
<comment type="interaction">
    <interactant intactId="EBI-5323863">
        <id>Q5S007</id>
    </interactant>
    <interactant intactId="EBI-296087">
        <id>P31749</id>
        <label>AKT1</label>
    </interactant>
    <organismsDiffer>false</organismsDiffer>
    <experiments>6</experiments>
</comment>
<comment type="interaction">
    <interactant intactId="EBI-5323863">
        <id>Q5S007</id>
    </interactant>
    <interactant intactId="EBI-9658517">
        <id>Q8N8V4</id>
        <label>ANKS4B</label>
    </interactant>
    <organismsDiffer>false</organismsDiffer>
    <experiments>2</experiments>
</comment>
<comment type="interaction">
    <interactant intactId="EBI-5323863">
        <id>Q5S007</id>
    </interactant>
    <interactant intactId="EBI-1044383">
        <id>O00203</id>
        <label>AP3B1</label>
    </interactant>
    <organismsDiffer>false</organismsDiffer>
    <experiments>2</experiments>
</comment>
<comment type="interaction">
    <interactant intactId="EBI-5323863">
        <id>Q5S007</id>
    </interactant>
    <interactant intactId="EBI-6288865">
        <id>Q8N6T3-2</id>
        <label>ARFGAP1</label>
    </interactant>
    <organismsDiffer>false</organismsDiffer>
    <experiments>6</experiments>
</comment>
<comment type="interaction">
    <interactant intactId="EBI-5323863">
        <id>Q5S007</id>
    </interactant>
    <interactant intactId="EBI-717515">
        <id>Q14155</id>
        <label>ARHGEF7</label>
    </interactant>
    <organismsDiffer>false</organismsDiffer>
    <experiments>7</experiments>
</comment>
<comment type="interaction">
    <interactant intactId="EBI-5323863">
        <id>Q5S007</id>
    </interactant>
    <interactant intactId="EBI-355275">
        <id>O95816</id>
        <label>BAG2</label>
    </interactant>
    <organismsDiffer>false</organismsDiffer>
    <experiments>3</experiments>
</comment>
<comment type="interaction">
    <interactant intactId="EBI-5323863">
        <id>Q5S007</id>
    </interactant>
    <interactant intactId="EBI-747185">
        <id>O95817</id>
        <label>BAG3</label>
    </interactant>
    <organismsDiffer>false</organismsDiffer>
    <experiments>2</experiments>
</comment>
<comment type="interaction">
    <interactant intactId="EBI-5323863">
        <id>Q5S007</id>
    </interactant>
    <interactant intactId="EBI-356517">
        <id>Q9UL15</id>
        <label>BAG5</label>
    </interactant>
    <organismsDiffer>false</organismsDiffer>
    <experiments>12</experiments>
</comment>
<comment type="interaction">
    <interactant intactId="EBI-5323863">
        <id>Q5S007</id>
    </interactant>
    <interactant intactId="EBI-4370304">
        <id>P10415-1</id>
        <label>BCL2</label>
    </interactant>
    <organismsDiffer>false</organismsDiffer>
    <experiments>2</experiments>
</comment>
<comment type="interaction">
    <interactant intactId="EBI-5323863">
        <id>Q5S007</id>
    </interactant>
    <interactant intactId="EBI-744027">
        <id>Q13191</id>
        <label>CBLB</label>
    </interactant>
    <organismsDiffer>false</organismsDiffer>
    <experiments>4</experiments>
</comment>
<comment type="interaction">
    <interactant intactId="EBI-5323863">
        <id>Q5S007</id>
    </interactant>
    <interactant intactId="EBI-295634">
        <id>Q16543</id>
        <label>CDC37</label>
    </interactant>
    <organismsDiffer>false</organismsDiffer>
    <experiments>9</experiments>
</comment>
<comment type="interaction">
    <interactant intactId="EBI-5323863">
        <id>Q5S007</id>
    </interactant>
    <interactant intactId="EBI-81752">
        <id>P60953</id>
        <label>CDC42</label>
    </interactant>
    <organismsDiffer>false</organismsDiffer>
    <experiments>3</experiments>
</comment>
<comment type="interaction">
    <interactant intactId="EBI-5323863">
        <id>Q5S007</id>
    </interactant>
    <interactant intactId="EBI-723480">
        <id>Q9UKI2</id>
        <label>CDC42EP3</label>
    </interactant>
    <organismsDiffer>false</organismsDiffer>
    <experiments>2</experiments>
</comment>
<comment type="interaction">
    <interactant intactId="EBI-5323863">
        <id>Q5S007</id>
    </interactant>
    <interactant intactId="EBI-1046872">
        <id>Q9Y6A4</id>
        <label>CFAP20</label>
    </interactant>
    <organismsDiffer>false</organismsDiffer>
    <experiments>3</experiments>
</comment>
<comment type="interaction">
    <interactant intactId="EBI-5323863">
        <id>Q5S007</id>
    </interactant>
    <interactant intactId="EBI-712619">
        <id>P05060</id>
        <label>CHGB</label>
    </interactant>
    <organismsDiffer>false</organismsDiffer>
    <experiments>3</experiments>
</comment>
<comment type="interaction">
    <interactant intactId="EBI-5323863">
        <id>Q5S007</id>
    </interactant>
    <interactant intactId="EBI-351384">
        <id>Q9ULV4</id>
        <label>CORO1C</label>
    </interactant>
    <organismsDiffer>false</organismsDiffer>
    <experiments>3</experiments>
</comment>
<comment type="interaction">
    <interactant intactId="EBI-5323863">
        <id>Q5S007</id>
    </interactant>
    <interactant intactId="EBI-10106282">
        <id>P48729-1</id>
        <label>CSNK1A1</label>
    </interactant>
    <organismsDiffer>false</organismsDiffer>
    <experiments>2</experiments>
</comment>
<comment type="interaction">
    <interactant intactId="EBI-5323863">
        <id>Q5S007</id>
    </interactant>
    <interactant intactId="EBI-9087876">
        <id>P48730-2</id>
        <label>CSNK1D</label>
    </interactant>
    <organismsDiffer>false</organismsDiffer>
    <experiments>3</experiments>
</comment>
<comment type="interaction">
    <interactant intactId="EBI-5323863">
        <id>Q5S007</id>
    </interactant>
    <interactant intactId="EBI-5838167">
        <id>Q9NWM3</id>
        <label>CUEDC1</label>
    </interactant>
    <organismsDiffer>false</organismsDiffer>
    <experiments>2</experiments>
</comment>
<comment type="interaction">
    <interactant intactId="EBI-5323863">
        <id>Q5S007</id>
    </interactant>
    <interactant intactId="EBI-358616">
        <id>P53355</id>
        <label>DAPK1</label>
    </interactant>
    <organismsDiffer>false</organismsDiffer>
    <experiments>2</experiments>
</comment>
<comment type="interaction">
    <interactant intactId="EBI-5323863">
        <id>Q5S007</id>
    </interactant>
    <interactant intactId="EBI-713135">
        <id>Q05193</id>
        <label>DNM1</label>
    </interactant>
    <organismsDiffer>false</organismsDiffer>
    <experiments>4</experiments>
</comment>
<comment type="interaction">
    <interactant intactId="EBI-5323863">
        <id>Q5S007</id>
    </interactant>
    <interactant intactId="EBI-724571">
        <id>O00429</id>
        <label>DNM1L</label>
    </interactant>
    <organismsDiffer>false</organismsDiffer>
    <experiments>16</experiments>
</comment>
<comment type="interaction">
    <interactant intactId="EBI-5323863">
        <id>Q5S007</id>
    </interactant>
    <interactant intactId="EBI-6896746">
        <id>O00429-3</id>
        <label>DNM1L</label>
    </interactant>
    <organismsDiffer>false</organismsDiffer>
    <experiments>2</experiments>
</comment>
<comment type="interaction">
    <interactant intactId="EBI-5323863">
        <id>Q5S007</id>
    </interactant>
    <interactant intactId="EBI-6504027">
        <id>O14640-2</id>
        <label>DVL1</label>
    </interactant>
    <organismsDiffer>false</organismsDiffer>
    <experiments>7</experiments>
</comment>
<comment type="interaction">
    <interactant intactId="EBI-5323863">
        <id>Q5S007</id>
    </interactant>
    <interactant intactId="EBI-740850">
        <id>O14641</id>
        <label>DVL2</label>
    </interactant>
    <organismsDiffer>false</organismsDiffer>
    <experiments>5</experiments>
</comment>
<comment type="interaction">
    <interactant intactId="EBI-5323863">
        <id>Q5S007</id>
    </interactant>
    <interactant intactId="EBI-739789">
        <id>Q92997</id>
        <label>DVL3</label>
    </interactant>
    <organismsDiffer>false</organismsDiffer>
    <experiments>4</experiments>
</comment>
<comment type="interaction">
    <interactant intactId="EBI-5323863">
        <id>Q5S007</id>
    </interactant>
    <interactant intactId="EBI-719602">
        <id>P30084</id>
        <label>ECHS1</label>
    </interactant>
    <organismsDiffer>false</organismsDiffer>
    <experiments>4</experiments>
</comment>
<comment type="interaction">
    <interactant intactId="EBI-5323863">
        <id>Q5S007</id>
    </interactant>
    <interactant intactId="EBI-354943">
        <id>Q05639</id>
        <label>EEF1A2</label>
    </interactant>
    <organismsDiffer>false</organismsDiffer>
    <experiments>3</experiments>
</comment>
<comment type="interaction">
    <interactant intactId="EBI-5323863">
        <id>Q5S007</id>
    </interactant>
    <interactant intactId="EBI-494804">
        <id>Q13158</id>
        <label>FADD</label>
    </interactant>
    <organismsDiffer>false</organismsDiffer>
    <experiments>4</experiments>
</comment>
<comment type="interaction">
    <interactant intactId="EBI-5323863">
        <id>Q5S007</id>
    </interactant>
    <interactant intactId="EBI-714707">
        <id>O14976</id>
        <label>GAK</label>
    </interactant>
    <organismsDiffer>false</organismsDiffer>
    <experiments>11</experiments>
</comment>
<comment type="interaction">
    <interactant intactId="EBI-5323863">
        <id>Q5S007</id>
    </interactant>
    <interactant intactId="EBI-373586">
        <id>P49841</id>
        <label>GSK3B</label>
    </interactant>
    <organismsDiffer>false</organismsDiffer>
    <experiments>7</experiments>
</comment>
<comment type="interaction">
    <interactant intactId="EBI-5323863">
        <id>Q5S007</id>
    </interactant>
    <interactant intactId="EBI-351896">
        <id>P11142</id>
        <label>HSPA8</label>
    </interactant>
    <organismsDiffer>false</organismsDiffer>
    <experiments>6</experiments>
</comment>
<comment type="interaction">
    <interactant intactId="EBI-5323863">
        <id>Q5S007</id>
    </interactant>
    <interactant intactId="EBI-2878091">
        <id>Q71RC2</id>
        <label>LARP4</label>
    </interactant>
    <organismsDiffer>false</organismsDiffer>
    <experiments>3</experiments>
</comment>
<comment type="interaction">
    <interactant intactId="EBI-5323863">
        <id>Q5S007</id>
    </interactant>
    <interactant intactId="EBI-2371923">
        <id>Q4G0J3</id>
        <label>LARP7</label>
    </interactant>
    <organismsDiffer>false</organismsDiffer>
    <experiments>3</experiments>
</comment>
<comment type="interaction">
    <interactant intactId="EBI-5323863">
        <id>Q5S007</id>
    </interactant>
    <interactant intactId="EBI-358748">
        <id>P07195</id>
        <label>LDHB</label>
    </interactant>
    <organismsDiffer>false</organismsDiffer>
    <experiments>2</experiments>
</comment>
<comment type="interaction">
    <interactant intactId="EBI-5323863">
        <id>Q5S007</id>
    </interactant>
    <interactant intactId="EBI-910915">
        <id>O75581</id>
        <label>LRP6</label>
    </interactant>
    <organismsDiffer>false</organismsDiffer>
    <experiments>4</experiments>
</comment>
<comment type="interaction">
    <interactant intactId="EBI-5323863">
        <id>Q5S007</id>
    </interactant>
    <interactant intactId="EBI-1050422">
        <id>Q38SD2</id>
        <label>LRRK1</label>
    </interactant>
    <organismsDiffer>false</organismsDiffer>
    <experiments>5</experiments>
</comment>
<comment type="interaction">
    <interactant intactId="EBI-5323863">
        <id>Q5S007</id>
    </interactant>
    <interactant intactId="EBI-5323863">
        <id>Q5S007</id>
        <label>LRRK2</label>
    </interactant>
    <organismsDiffer>false</organismsDiffer>
    <experiments>68</experiments>
</comment>
<comment type="interaction">
    <interactant intactId="EBI-5323863">
        <id>Q5S007</id>
    </interactant>
    <interactant intactId="EBI-9517186">
        <id>PRO_0000018605</id>
        <label>MAP1B</label>
        <dbReference type="UniProtKB" id="P46821"/>
    </interactant>
    <organismsDiffer>false</organismsDiffer>
    <experiments>5</experiments>
</comment>
<comment type="interaction">
    <interactant intactId="EBI-5323863">
        <id>Q5S007</id>
    </interactant>
    <interactant intactId="EBI-602462">
        <id>P46734</id>
        <label>MAP2K3</label>
    </interactant>
    <organismsDiffer>false</organismsDiffer>
    <experiments>5</experiments>
</comment>
<comment type="interaction">
    <interactant intactId="EBI-5323863">
        <id>Q5S007</id>
    </interactant>
    <interactant intactId="EBI-448135">
        <id>P52564</id>
        <label>MAP2K6</label>
    </interactant>
    <organismsDiffer>false</organismsDiffer>
    <experiments>4</experiments>
</comment>
<comment type="interaction">
    <interactant intactId="EBI-5323863">
        <id>Q5S007</id>
    </interactant>
    <interactant intactId="EBI-492605">
        <id>O14733</id>
        <label>MAP2K7</label>
    </interactant>
    <organismsDiffer>false</organismsDiffer>
    <experiments>3</experiments>
</comment>
<comment type="interaction">
    <interactant intactId="EBI-5323863">
        <id>Q5S007</id>
    </interactant>
    <interactant intactId="EBI-7796412">
        <id>P10636-2</id>
        <label>MAPT</label>
    </interactant>
    <organismsDiffer>false</organismsDiffer>
    <experiments>3</experiments>
</comment>
<comment type="interaction">
    <interactant intactId="EBI-5323863">
        <id>Q5S007</id>
    </interactant>
    <interactant intactId="EBI-366233">
        <id>P10636-8</id>
        <label>MAPT</label>
    </interactant>
    <organismsDiffer>false</organismsDiffer>
    <experiments>9</experiments>
</comment>
<comment type="interaction">
    <interactant intactId="EBI-5323863">
        <id>Q5S007</id>
    </interactant>
    <interactant intactId="EBI-751664">
        <id>P42679</id>
        <label>MATK</label>
    </interactant>
    <organismsDiffer>false</organismsDiffer>
    <experiments>2</experiments>
</comment>
<comment type="interaction">
    <interactant intactId="EBI-5323863">
        <id>Q5S007</id>
    </interactant>
    <interactant intactId="EBI-3324756">
        <id>O95140</id>
        <label>MFN2</label>
    </interactant>
    <organismsDiffer>false</organismsDiffer>
    <experiments>3</experiments>
</comment>
<comment type="interaction">
    <interactant intactId="EBI-5323863">
        <id>Q5S007</id>
    </interactant>
    <interactant intactId="EBI-1188518">
        <id>P49406</id>
        <label>MRPL19</label>
    </interactant>
    <organismsDiffer>false</organismsDiffer>
    <experiments>3</experiments>
</comment>
<comment type="interaction">
    <interactant intactId="EBI-5323863">
        <id>Q5S007</id>
    </interactant>
    <interactant intactId="EBI-528768">
        <id>P26038</id>
        <label>MSN</label>
    </interactant>
    <organismsDiffer>false</organismsDiffer>
    <experiments>19</experiments>
</comment>
<comment type="interaction">
    <interactant intactId="EBI-5323863">
        <id>Q5S007</id>
    </interactant>
    <interactant intactId="EBI-2555519">
        <id>Q7L592</id>
        <label>NDUFAF7</label>
    </interactant>
    <organismsDiffer>false</organismsDiffer>
    <experiments>2</experiments>
</comment>
<comment type="interaction">
    <interactant intactId="EBI-5323863">
        <id>Q5S007</id>
    </interactant>
    <interactant intactId="EBI-373615">
        <id>Q96PY6</id>
        <label>NEK1</label>
    </interactant>
    <organismsDiffer>false</organismsDiffer>
    <experiments>2</experiments>
</comment>
<comment type="interaction">
    <interactant intactId="EBI-5323863">
        <id>Q5S007</id>
    </interactant>
    <interactant intactId="EBI-716258">
        <id>Q13469</id>
        <label>NFATC2</label>
    </interactant>
    <organismsDiffer>false</organismsDiffer>
    <experiments>3</experiments>
</comment>
<comment type="interaction">
    <interactant intactId="EBI-5323863">
        <id>Q5S007</id>
    </interactant>
    <interactant intactId="EBI-295695">
        <id>Q8WUM0</id>
        <label>NUP133</label>
    </interactant>
    <organismsDiffer>false</organismsDiffer>
    <experiments>4</experiments>
</comment>
<comment type="interaction">
    <interactant intactId="EBI-5323863">
        <id>Q5S007</id>
    </interactant>
    <interactant intactId="EBI-1054131">
        <id>O60313</id>
        <label>OPA1</label>
    </interactant>
    <organismsDiffer>false</organismsDiffer>
    <experiments>5</experiments>
</comment>
<comment type="interaction">
    <interactant intactId="EBI-5323863">
        <id>Q5S007</id>
    </interactant>
    <interactant intactId="EBI-1053685">
        <id>Q9NQU5</id>
        <label>PAK6</label>
    </interactant>
    <organismsDiffer>false</organismsDiffer>
    <experiments>2</experiments>
</comment>
<comment type="interaction">
    <interactant intactId="EBI-5323863">
        <id>Q5S007</id>
    </interactant>
    <interactant intactId="EBI-357253">
        <id>P62136</id>
        <label>PPP1CA</label>
    </interactant>
    <organismsDiffer>false</organismsDiffer>
    <experiments>6</experiments>
</comment>
<comment type="interaction">
    <interactant intactId="EBI-5323863">
        <id>Q5S007</id>
    </interactant>
    <interactant intactId="EBI-716633">
        <id>Q12972</id>
        <label>PPP1R8</label>
    </interactant>
    <organismsDiffer>false</organismsDiffer>
    <experiments>3</experiments>
</comment>
<comment type="interaction">
    <interactant intactId="EBI-5323863">
        <id>Q5S007</id>
    </interactant>
    <interactant intactId="EBI-1048931">
        <id>P63151</id>
        <label>PPP2R2A</label>
    </interactant>
    <organismsDiffer>false</organismsDiffer>
    <experiments>4</experiments>
</comment>
<comment type="interaction">
    <interactant intactId="EBI-5323863">
        <id>Q5S007</id>
    </interactant>
    <interactant intactId="EBI-748336">
        <id>P30048</id>
        <label>PRDX3</label>
    </interactant>
    <organismsDiffer>false</organismsDiffer>
    <experiments>14</experiments>
</comment>
<comment type="interaction">
    <interactant intactId="EBI-5323863">
        <id>Q5S007</id>
    </interactant>
    <interactant intactId="EBI-476586">
        <id>P17612</id>
        <label>PRKACA</label>
    </interactant>
    <organismsDiffer>false</organismsDiffer>
    <experiments>6</experiments>
</comment>
<comment type="interaction">
    <interactant intactId="EBI-5323863">
        <id>Q5S007</id>
    </interactant>
    <interactant intactId="EBI-716346">
        <id>O60260</id>
        <label>PRKN</label>
    </interactant>
    <organismsDiffer>false</organismsDiffer>
    <experiments>3</experiments>
</comment>
<comment type="interaction">
    <interactant intactId="EBI-5323863">
        <id>Q5S007</id>
    </interactant>
    <interactant intactId="EBI-726075">
        <id>P61026</id>
        <label>RAB10</label>
    </interactant>
    <organismsDiffer>false</organismsDiffer>
    <experiments>7</experiments>
</comment>
<comment type="interaction">
    <interactant intactId="EBI-5323863">
        <id>Q5S007</id>
    </interactant>
    <interactant intactId="EBI-4289591">
        <id>Q6IQ22</id>
        <label>RAB12</label>
    </interactant>
    <organismsDiffer>false</organismsDiffer>
    <experiments>2</experiments>
</comment>
<comment type="interaction">
    <interactant intactId="EBI-5323863">
        <id>Q5S007</id>
    </interactant>
    <interactant intactId="EBI-1045214">
        <id>Q9H0U4</id>
        <label>RAB1B</label>
    </interactant>
    <organismsDiffer>false</organismsDiffer>
    <experiments>5</experiments>
</comment>
<comment type="interaction">
    <interactant intactId="EBI-5323863">
        <id>Q5S007</id>
    </interactant>
    <interactant intactId="EBI-372165">
        <id>O14966</id>
        <label>RAB29</label>
    </interactant>
    <organismsDiffer>false</organismsDiffer>
    <experiments>15</experiments>
</comment>
<comment type="interaction">
    <interactant intactId="EBI-5323863">
        <id>Q5S007</id>
    </interactant>
    <interactant intactId="EBI-9837586">
        <id>Q13637</id>
        <label>RAB32</label>
    </interactant>
    <organismsDiffer>false</organismsDiffer>
    <experiments>12</experiments>
</comment>
<comment type="interaction">
    <interactant intactId="EBI-5323863">
        <id>Q5S007</id>
    </interactant>
    <interactant intactId="EBI-6552718">
        <id>P57729</id>
        <label>RAB38</label>
    </interactant>
    <organismsDiffer>false</organismsDiffer>
    <experiments>4</experiments>
</comment>
<comment type="interaction">
    <interactant intactId="EBI-5323863">
        <id>Q5S007</id>
    </interactant>
    <interactant intactId="EBI-399401">
        <id>P61020</id>
        <label>RAB5B</label>
    </interactant>
    <organismsDiffer>false</organismsDiffer>
    <experiments>9</experiments>
</comment>
<comment type="interaction">
    <interactant intactId="EBI-5323863">
        <id>Q5S007</id>
    </interactant>
    <interactant intactId="EBI-722293">
        <id>P61006</id>
        <label>RAB8A</label>
    </interactant>
    <organismsDiffer>false</organismsDiffer>
    <experiments>9</experiments>
</comment>
<comment type="interaction">
    <interactant intactId="EBI-5323863">
        <id>Q5S007</id>
    </interactant>
    <interactant intactId="EBI-413628">
        <id>P63000</id>
        <label>RAC1</label>
    </interactant>
    <organismsDiffer>false</organismsDiffer>
    <experiments>5</experiments>
</comment>
<comment type="interaction">
    <interactant intactId="EBI-5323863">
        <id>Q5S007</id>
    </interactant>
    <interactant intactId="EBI-712388">
        <id>P41220</id>
        <label>RGS2</label>
    </interactant>
    <organismsDiffer>false</organismsDiffer>
    <experiments>6</experiments>
</comment>
<comment type="interaction">
    <interactant intactId="EBI-5323863">
        <id>Q5S007</id>
    </interactant>
    <interactant intactId="EBI-356860">
        <id>P62906</id>
        <label>RPL10A</label>
    </interactant>
    <organismsDiffer>false</organismsDiffer>
    <experiments>4</experiments>
</comment>
<comment type="interaction">
    <interactant intactId="EBI-5323863">
        <id>Q5S007</id>
    </interactant>
    <interactant intactId="EBI-356849">
        <id>P26373</id>
        <label>RPL13</label>
    </interactant>
    <organismsDiffer>false</organismsDiffer>
    <experiments>4</experiments>
</comment>
<comment type="interaction">
    <interactant intactId="EBI-5323863">
        <id>Q5S007</id>
    </interactant>
    <interactant intactId="EBI-356746">
        <id>P50914</id>
        <label>RPL14</label>
    </interactant>
    <organismsDiffer>false</organismsDiffer>
    <experiments>2</experiments>
</comment>
<comment type="interaction">
    <interactant intactId="EBI-5323863">
        <id>Q5S007</id>
    </interactant>
    <interactant intactId="EBI-353254">
        <id>P62750</id>
        <label>RPL23A</label>
    </interactant>
    <organismsDiffer>false</organismsDiffer>
    <experiments>2</experiments>
</comment>
<comment type="interaction">
    <interactant intactId="EBI-5323863">
        <id>Q5S007</id>
    </interactant>
    <interactant intactId="EBI-353116">
        <id>P62888</id>
        <label>RPL30</label>
    </interactant>
    <organismsDiffer>false</organismsDiffer>
    <experiments>3</experiments>
</comment>
<comment type="interaction">
    <interactant intactId="EBI-5323863">
        <id>Q5S007</id>
    </interactant>
    <interactant intactId="EBI-1051893">
        <id>P49207</id>
        <label>RPL34</label>
    </interactant>
    <organismsDiffer>false</organismsDiffer>
    <experiments>3</experiments>
</comment>
<comment type="interaction">
    <interactant intactId="EBI-5323863">
        <id>Q5S007</id>
    </interactant>
    <interactant intactId="EBI-366570">
        <id>Q9BUL9</id>
        <label>RPP25</label>
    </interactant>
    <organismsDiffer>false</organismsDiffer>
    <experiments>3</experiments>
</comment>
<comment type="interaction">
    <interactant intactId="EBI-5323863">
        <id>Q5S007</id>
    </interactant>
    <interactant intactId="EBI-1047710">
        <id>P62280</id>
        <label>RPS11</label>
    </interactant>
    <organismsDiffer>false</organismsDiffer>
    <experiments>5</experiments>
</comment>
<comment type="interaction">
    <interactant intactId="EBI-5323863">
        <id>Q5S007</id>
    </interactant>
    <interactant intactId="EBI-351850">
        <id>P62277</id>
        <label>RPS13</label>
    </interactant>
    <organismsDiffer>false</organismsDiffer>
    <experiments>3</experiments>
</comment>
<comment type="interaction">
    <interactant intactId="EBI-5323863">
        <id>Q5S007</id>
    </interactant>
    <interactant intactId="EBI-372635">
        <id>P62841</id>
        <label>RPS15</label>
    </interactant>
    <organismsDiffer>false</organismsDiffer>
    <experiments>9</experiments>
</comment>
<comment type="interaction">
    <interactant intactId="EBI-5323863">
        <id>Q5S007</id>
    </interactant>
    <interactant intactId="EBI-352480">
        <id>P62249</id>
        <label>RPS16</label>
    </interactant>
    <organismsDiffer>false</organismsDiffer>
    <experiments>4</experiments>
</comment>
<comment type="interaction">
    <interactant intactId="EBI-5323863">
        <id>Q5S007</id>
    </interactant>
    <interactant intactId="EBI-352451">
        <id>P62269</id>
        <label>RPS18</label>
    </interactant>
    <organismsDiffer>false</organismsDiffer>
    <experiments>3</experiments>
</comment>
<comment type="interaction">
    <interactant intactId="EBI-5323863">
        <id>Q5S007</id>
    </interactant>
    <interactant intactId="EBI-443446">
        <id>P15880</id>
        <label>RPS2</label>
    </interactant>
    <organismsDiffer>false</organismsDiffer>
    <experiments>4</experiments>
</comment>
<comment type="interaction">
    <interactant intactId="EBI-5323863">
        <id>Q5S007</id>
    </interactant>
    <interactant intactId="EBI-353105">
        <id>P60866</id>
        <label>RPS20</label>
    </interactant>
    <organismsDiffer>false</organismsDiffer>
    <experiments>4</experiments>
</comment>
<comment type="interaction">
    <interactant intactId="EBI-5323863">
        <id>Q5S007</id>
    </interactant>
    <interactant intactId="EBI-353072">
        <id>P62266</id>
        <label>RPS23</label>
    </interactant>
    <organismsDiffer>false</organismsDiffer>
    <experiments>2</experiments>
</comment>
<comment type="interaction">
    <interactant intactId="EBI-5323863">
        <id>Q5S007</id>
    </interactant>
    <interactant intactId="EBI-356336">
        <id>P42677</id>
        <label>RPS27</label>
    </interactant>
    <organismsDiffer>false</organismsDiffer>
    <experiments>4</experiments>
</comment>
<comment type="interaction">
    <interactant intactId="EBI-5323863">
        <id>Q5S007</id>
    </interactant>
    <interactant intactId="EBI-351193">
        <id>P23396</id>
        <label>RPS3</label>
    </interactant>
    <organismsDiffer>false</organismsDiffer>
    <experiments>4</experiments>
</comment>
<comment type="interaction">
    <interactant intactId="EBI-5323863">
        <id>Q5S007</id>
    </interactant>
    <interactant intactId="EBI-357515">
        <id>O15027</id>
        <label>SEC16A</label>
    </interactant>
    <organismsDiffer>false</organismsDiffer>
    <experiments>8</experiments>
</comment>
<comment type="interaction">
    <interactant intactId="EBI-5323863">
        <id>Q5S007</id>
    </interactant>
    <interactant intactId="EBI-79819">
        <id>P60896</id>
        <label>SEM1</label>
    </interactant>
    <organismsDiffer>false</organismsDiffer>
    <experiments>3</experiments>
</comment>
<comment type="interaction">
    <interactant intactId="EBI-5323863">
        <id>Q5S007</id>
    </interactant>
    <interactant intactId="EBI-476295">
        <id>P31947</id>
        <label>SFN</label>
    </interactant>
    <organismsDiffer>false</organismsDiffer>
    <experiments>5</experiments>
</comment>
<comment type="interaction">
    <interactant intactId="EBI-5323863">
        <id>Q5S007</id>
    </interactant>
    <interactant intactId="EBI-697911">
        <id>Q99961</id>
        <label>SH3GL1</label>
    </interactant>
    <organismsDiffer>false</organismsDiffer>
    <experiments>3</experiments>
</comment>
<comment type="interaction">
    <interactant intactId="EBI-5323863">
        <id>Q5S007</id>
    </interactant>
    <interactant intactId="EBI-77938">
        <id>Q99962</id>
        <label>SH3GL2</label>
    </interactant>
    <organismsDiffer>false</organismsDiffer>
    <experiments>4</experiments>
</comment>
<comment type="interaction">
    <interactant intactId="EBI-5323863">
        <id>Q5S007</id>
    </interactant>
    <interactant intactId="EBI-359074">
        <id>P12235</id>
        <label>SLC25A4</label>
    </interactant>
    <organismsDiffer>false</organismsDiffer>
    <experiments>2</experiments>
</comment>
<comment type="interaction">
    <interactant intactId="EBI-5323863">
        <id>Q5S007</id>
    </interactant>
    <interactant intactId="EBI-355133">
        <id>P05141</id>
        <label>SLC25A5</label>
    </interactant>
    <organismsDiffer>false</organismsDiffer>
    <experiments>2</experiments>
</comment>
<comment type="interaction">
    <interactant intactId="EBI-5323863">
        <id>Q5S007</id>
    </interactant>
    <interactant intactId="EBI-356254">
        <id>P12236</id>
        <label>SLC25A6</label>
    </interactant>
    <organismsDiffer>false</organismsDiffer>
    <experiments>2</experiments>
</comment>
<comment type="interaction">
    <interactant intactId="EBI-5323863">
        <id>Q5S007</id>
    </interactant>
    <interactant intactId="EBI-296723">
        <id>O95295</id>
        <label>SNAPIN</label>
    </interactant>
    <organismsDiffer>false</organismsDiffer>
    <experiments>5</experiments>
</comment>
<comment type="interaction">
    <interactant intactId="EBI-5323863">
        <id>Q5S007</id>
    </interactant>
    <interactant intactId="EBI-985879">
        <id>P37840</id>
        <label>SNCA</label>
    </interactant>
    <organismsDiffer>false</organismsDiffer>
    <experiments>6</experiments>
</comment>
<comment type="interaction">
    <interactant intactId="EBI-5323863">
        <id>Q5S007</id>
    </interactant>
    <interactant intactId="EBI-7067260">
        <id>Q8NHS9</id>
        <label>SPATA22</label>
    </interactant>
    <organismsDiffer>false</organismsDiffer>
    <experiments>3</experiments>
</comment>
<comment type="interaction">
    <interactant intactId="EBI-5323863">
        <id>Q5S007</id>
    </interactant>
    <interactant intactId="EBI-307104">
        <id>Q13501</id>
        <label>SQSTM1</label>
    </interactant>
    <organismsDiffer>false</organismsDiffer>
    <experiments>18</experiments>
</comment>
<comment type="interaction">
    <interactant intactId="EBI-5323863">
        <id>Q5S007</id>
    </interactant>
    <interactant intactId="EBI-357085">
        <id>Q9UNE7</id>
        <label>STUB1</label>
    </interactant>
    <organismsDiffer>false</organismsDiffer>
    <experiments>4</experiments>
</comment>
<comment type="interaction">
    <interactant intactId="EBI-5323863">
        <id>Q5S007</id>
    </interactant>
    <interactant intactId="EBI-15687717">
        <id>Q9UNE7-1</id>
        <label>STUB1</label>
    </interactant>
    <organismsDiffer>false</organismsDiffer>
    <experiments>2</experiments>
</comment>
<comment type="interaction">
    <interactant intactId="EBI-5323863">
        <id>Q5S007</id>
    </interactant>
    <interactant intactId="EBI-745182">
        <id>Q9BQ70</id>
        <label>TCF25</label>
    </interactant>
    <organismsDiffer>false</organismsDiffer>
    <experiments>3</experiments>
</comment>
<comment type="interaction">
    <interactant intactId="EBI-5323863">
        <id>Q5S007</id>
    </interactant>
    <interactant intactId="EBI-1057046">
        <id>Q6P3X3</id>
        <label>TTC27</label>
    </interactant>
    <organismsDiffer>false</organismsDiffer>
    <experiments>3</experiments>
</comment>
<comment type="interaction">
    <interactant intactId="EBI-5323863">
        <id>Q5S007</id>
    </interactant>
    <interactant intactId="EBI-350864">
        <id>P07437</id>
        <label>TUBB</label>
    </interactant>
    <organismsDiffer>false</organismsDiffer>
    <experiments>6</experiments>
</comment>
<comment type="interaction">
    <interactant intactId="EBI-5323863">
        <id>Q5S007</id>
    </interactant>
    <interactant intactId="EBI-711595">
        <id>Q13885</id>
        <label>TUBB2A</label>
    </interactant>
    <organismsDiffer>false</organismsDiffer>
    <experiments>3</experiments>
</comment>
<comment type="interaction">
    <interactant intactId="EBI-5323863">
        <id>Q5S007</id>
    </interactant>
    <interactant intactId="EBI-355007">
        <id>P04350</id>
        <label>TUBB4A</label>
    </interactant>
    <organismsDiffer>false</organismsDiffer>
    <experiments>6</experiments>
</comment>
<comment type="interaction">
    <interactant intactId="EBI-5323863">
        <id>Q5S007</id>
    </interactant>
    <interactant intactId="EBI-351356">
        <id>P68371</id>
        <label>TUBB4B</label>
    </interactant>
    <organismsDiffer>false</organismsDiffer>
    <experiments>3</experiments>
</comment>
<comment type="interaction">
    <interactant intactId="EBI-5323863">
        <id>Q5S007</id>
    </interactant>
    <interactant intactId="EBI-356735">
        <id>Q9BUF5</id>
        <label>TUBB6</label>
    </interactant>
    <organismsDiffer>false</organismsDiffer>
    <experiments>3</experiments>
</comment>
<comment type="interaction">
    <interactant intactId="EBI-5323863">
        <id>Q5S007</id>
    </interactant>
    <interactant intactId="EBI-1044822">
        <id>Q53GS9</id>
        <label>USP39</label>
    </interactant>
    <organismsDiffer>false</organismsDiffer>
    <experiments>3</experiments>
</comment>
<comment type="interaction">
    <interactant intactId="EBI-5323863">
        <id>Q5S007</id>
    </interactant>
    <interactant intactId="EBI-354158">
        <id>P21796</id>
        <label>VDAC1</label>
    </interactant>
    <organismsDiffer>false</organismsDiffer>
    <experiments>3</experiments>
</comment>
<comment type="interaction">
    <interactant intactId="EBI-5323863">
        <id>Q5S007</id>
    </interactant>
    <interactant intactId="EBI-1171494">
        <id>Q9Y6I7</id>
        <label>WSB1</label>
    </interactant>
    <organismsDiffer>false</organismsDiffer>
    <experiments>5</experiments>
</comment>
<comment type="interaction">
    <interactant intactId="EBI-5323863">
        <id>Q5S007</id>
    </interactant>
    <interactant intactId="EBI-359815">
        <id>P31946</id>
        <label>YWHAB</label>
    </interactant>
    <organismsDiffer>false</organismsDiffer>
    <experiments>5</experiments>
</comment>
<comment type="interaction">
    <interactant intactId="EBI-5323863">
        <id>Q5S007</id>
    </interactant>
    <interactant intactId="EBI-356498">
        <id>P62258</id>
        <label>YWHAE</label>
    </interactant>
    <organismsDiffer>false</organismsDiffer>
    <experiments>8</experiments>
</comment>
<comment type="interaction">
    <interactant intactId="EBI-5323863">
        <id>Q5S007</id>
    </interactant>
    <interactant intactId="EBI-359832">
        <id>P61981</id>
        <label>YWHAG</label>
    </interactant>
    <organismsDiffer>false</organismsDiffer>
    <experiments>26</experiments>
</comment>
<comment type="interaction">
    <interactant intactId="EBI-5323863">
        <id>Q5S007</id>
    </interactant>
    <interactant intactId="EBI-306940">
        <id>Q04917</id>
        <label>YWHAH</label>
    </interactant>
    <organismsDiffer>false</organismsDiffer>
    <experiments>6</experiments>
</comment>
<comment type="interaction">
    <interactant intactId="EBI-5323863">
        <id>Q5S007</id>
    </interactant>
    <interactant intactId="EBI-359854">
        <id>P27348</id>
        <label>YWHAQ</label>
    </interactant>
    <organismsDiffer>false</organismsDiffer>
    <experiments>10</experiments>
</comment>
<comment type="interaction">
    <interactant intactId="EBI-5323863">
        <id>Q5S007</id>
    </interactant>
    <interactant intactId="EBI-347088">
        <id>P63104</id>
        <label>YWHAZ</label>
    </interactant>
    <organismsDiffer>false</organismsDiffer>
    <experiments>11</experiments>
</comment>
<comment type="interaction">
    <interactant intactId="EBI-5323863">
        <id>Q5S007</id>
    </interactant>
    <interactant intactId="EBI-1051583">
        <id>O95218</id>
        <label>ZRANB2</label>
    </interactant>
    <organismsDiffer>false</organismsDiffer>
    <experiments>2</experiments>
</comment>
<comment type="interaction">
    <interactant intactId="EBI-5323863">
        <id>Q5S007</id>
    </interactant>
    <interactant intactId="EBI-4398879">
        <id>Q62848</id>
        <label>Arfgap1</label>
    </interactant>
    <organismsDiffer>true</organismsDiffer>
    <experiments>7</experiments>
</comment>
<comment type="interaction">
    <interactant intactId="EBI-5323863">
        <id>Q5S007</id>
    </interactant>
    <interactant intactId="EBI-770763">
        <id>O55143</id>
        <label>Atp2a2</label>
    </interactant>
    <organismsDiffer>true</organismsDiffer>
    <experiments>13</experiments>
</comment>
<comment type="interaction">
    <interactant intactId="EBI-5323863">
        <id>Q5S007</id>
    </interactant>
    <interactant intactId="EBI-773103">
        <id>P30275</id>
        <label>Ckmt1</label>
    </interactant>
    <organismsDiffer>true</organismsDiffer>
    <experiments>2</experiments>
</comment>
<comment type="interaction">
    <interactant intactId="EBI-5323863">
        <id>Q5S007</id>
    </interactant>
    <interactant intactId="EBI-397785">
        <id>P39053</id>
        <label>Dnm1</label>
    </interactant>
    <organismsDiffer>true</organismsDiffer>
    <experiments>3</experiments>
</comment>
<comment type="interaction">
    <interactant intactId="EBI-5323863">
        <id>Q5S007</id>
    </interactant>
    <interactant intactId="EBI-908215">
        <id>P02687</id>
        <label>MBP</label>
    </interactant>
    <organismsDiffer>true</organismsDiffer>
    <experiments>3</experiments>
</comment>
<comment type="interaction">
    <interactant intactId="EBI-5323863">
        <id>Q5S007</id>
    </interactant>
    <interactant intactId="EBI-9029118">
        <id>Q811U4</id>
        <label>Mfn1</label>
    </interactant>
    <organismsDiffer>true</organismsDiffer>
    <experiments>3</experiments>
</comment>
<comment type="interaction">
    <interactant intactId="EBI-5323863">
        <id>Q5S007</id>
    </interactant>
    <interactant intactId="EBI-552958">
        <id>P00634</id>
        <label>phoA</label>
    </interactant>
    <organismsDiffer>true</organismsDiffer>
    <experiments>2</experiments>
</comment>
<comment type="interaction">
    <interactant intactId="EBI-5323863">
        <id>Q5S007</id>
    </interactant>
    <interactant intactId="EBI-6096160">
        <id>P12369</id>
        <label>Prkar2b</label>
    </interactant>
    <organismsDiffer>true</organismsDiffer>
    <experiments>3</experiments>
</comment>
<comment type="interaction">
    <interactant intactId="EBI-5323863">
        <id>Q5S007</id>
    </interactant>
    <interactant intactId="EBI-6513837">
        <id>Q63481</id>
        <label>Rab29</label>
    </interactant>
    <organismsDiffer>true</organismsDiffer>
    <experiments>3</experiments>
</comment>
<comment type="interaction">
    <interactant intactId="EBI-5323863">
        <id>Q5S007</id>
    </interactant>
    <interactant intactId="EBI-8320093">
        <id>P61021</id>
        <label>Rab5b</label>
    </interactant>
    <organismsDiffer>true</organismsDiffer>
    <experiments>2</experiments>
</comment>
<comment type="interaction">
    <interactant intactId="EBI-5323863">
        <id>Q5S007</id>
    </interactant>
    <interactant intactId="EBI-6530207">
        <id>Q58A65</id>
        <label>Spag9</label>
    </interactant>
    <organismsDiffer>true</organismsDiffer>
    <experiments>2</experiments>
</comment>
<comment type="interaction">
    <interactant intactId="EBI-5323863">
        <id>Q5S007</id>
    </interactant>
    <interactant intactId="EBI-773027">
        <id>Q9WUD1</id>
        <label>Stub1</label>
    </interactant>
    <organismsDiffer>true</organismsDiffer>
    <experiments>2</experiments>
</comment>
<comment type="interaction">
    <interactant intactId="EBI-5323863">
        <id>Q5S007</id>
    </interactant>
    <interactant intactId="EBI-359821">
        <id>P61983</id>
        <label>Ywhag</label>
    </interactant>
    <organismsDiffer>true</organismsDiffer>
    <experiments>6</experiments>
</comment>
<comment type="subcellular location">
    <subcellularLocation>
        <location evidence="32 34 54">Cytoplasmic vesicle</location>
    </subcellularLocation>
    <subcellularLocation>
        <location evidence="39">Perikaryon</location>
    </subcellularLocation>
    <subcellularLocation>
        <location evidence="32 51 66">Golgi apparatus membrane</location>
        <topology evidence="32">Peripheral membrane protein</topology>
    </subcellularLocation>
    <subcellularLocation>
        <location evidence="39">Cell projection</location>
        <location evidence="39">Axon</location>
    </subcellularLocation>
    <subcellularLocation>
        <location evidence="39 46">Cell projection</location>
        <location evidence="39 46">Dendrite</location>
    </subcellularLocation>
    <subcellularLocation>
        <location evidence="32 53">Endoplasmic reticulum membrane</location>
        <topology evidence="32">Peripheral membrane protein</topology>
    </subcellularLocation>
    <subcellularLocation>
        <location evidence="52">Cytoplasmic vesicle</location>
        <location evidence="52">Secretory vesicle</location>
        <location evidence="52">Synaptic vesicle membrane</location>
    </subcellularLocation>
    <subcellularLocation>
        <location evidence="1">Endosome</location>
    </subcellularLocation>
    <subcellularLocation>
        <location evidence="39 62 67">Lysosome</location>
    </subcellularLocation>
    <subcellularLocation>
        <location evidence="28 32 39 61">Mitochondrion outer membrane</location>
        <topology evidence="28 32 39 61">Peripheral membrane protein</topology>
    </subcellularLocation>
    <subcellularLocation>
        <location evidence="65">Cytoplasm</location>
        <location evidence="65">Cytoskeleton</location>
    </subcellularLocation>
    <subcellularLocation>
        <location evidence="1">Cytoplasmic vesicle</location>
        <location evidence="1">Phagosome</location>
    </subcellularLocation>
    <text evidence="1 51 53 66">Colocalized with RAB29 along tubular structures emerging from Golgi apparatus (PubMed:23395371, PubMed:38127736). Localizes to endoplasmic reticulum exit sites (ERES), also known as transitional endoplasmic reticulum (tER) (PubMed:25201882). Detected on phagosomes and stressed lysosomes but not detected on autophagosomes induced by starvation (By similarity). Recruitment to stressed lysosomes is dependent on the ATG8 conjugation system composed of ATG5, ATG12 and ATG16L1 and leads to lysosomal stress-induced activation of LRRK2 (By similarity).</text>
</comment>
<comment type="tissue specificity">
    <text evidence="6 7 35 39 60">Expressed in pyramidal neurons in all cortical laminae of the visual cortex, in neurons of the substantia nigra pars compacta and caudate putamen (at protein level). Expressed in neutrophils (at protein level) (PubMed:29127255). Expressed in the brain. Expressed throughout the adult brain, but at a lower level than in heart and liver. Also expressed in placenta, lung, skeletal muscle, kidney and pancreas. In the brain, expressed in the cerebellum, cerebral cortex, medulla, spinal cord occipital pole, frontal lobe, temporal lobe and putamen. Expression is particularly high in brain dopaminoceptive areas.</text>
</comment>
<comment type="domain">
    <text evidence="52 64">The seven-bladed WD repeat region is critical for synaptic vesicle trafficking and mediates interaction with multiple vesicle-associated presynaptic proteins (PubMed:24687852). It also mediates homodimerization and regulates kinase activity (PubMed:30635421).</text>
</comment>
<comment type="domain">
    <text evidence="66">The COR domain mediates homodimerization; it also mediates homotetramerization via interaction with the protein kinase domain.</text>
</comment>
<comment type="domain">
    <text evidence="42">The Roc domain mediates homodimerization and regulates kinase activity.</text>
</comment>
<comment type="PTM">
    <text evidence="57 58 60 61 64 66">Autophosphorylated at Ser-1292; autophosphorylation is stimulated by RAB29 (PubMed:28202711, PubMed:28720718, PubMed:29127255, PubMed:29212815, PubMed:30635421, PubMed:38127736). Phosphorylation of Ser-910 and either Ser-935 or Ser-1444 facilitates interaction with YWHAG (PubMed:28202711). Phosphorylation of Ser-910 and/or Ser-935 facilitates interaction with SFN (PubMed:28202711).</text>
</comment>
<comment type="PTM">
    <text evidence="65">Ubiquitinated by TRIM1; undergoes 'Lys-48'-linked polyubiquitination leading to proteasomal degradation.</text>
</comment>
<comment type="disease" evidence="6 7 8 9 10 11 12 13 14 15 16 17 19 20 21 22 23 24 25 26 27 28 29 30 31 32 33 36 38 41 45 46 50 51 53 55 57 58 59 60 61 62 63 64">
    <disease id="DI-02136">
        <name>Parkinson disease 8</name>
        <acronym>PARK8</acronym>
        <description>A slowly progressive neurodegenerative disorder characterized by bradykinesia, rigidity, resting tremor, postural instability, neuronal loss in the substantia nigra, and the presence of neurofibrillary MAPT (tau)-positive and Lewy bodies in some patients.</description>
        <dbReference type="MIM" id="607060"/>
    </disease>
    <text>The disease is caused by variants affecting the gene represented in this entry.</text>
</comment>
<comment type="similarity">
    <text evidence="68">Belongs to the protein kinase superfamily. TKL Ser/Thr protein kinase family.</text>
</comment>
<sequence>MASGSCQGCEEDEETLKKLIVRLNNVQEGKQIETLVQILEDLLVFTYSERASKLFQGKNIHVPLLIVLDSYMRVASVQQVGWSLLCKLIEVCPGTMQSLMGPQDVGNDWEVLGVHQLILKMLTVHNASVNLSVIGLKTLDLLLTSGKITLLILDEESDIFMLIFDAMHSFPANDEVQKLGCKALHVLFERVSEEQLTEFVENKDYMILLSALTNFKDEEEIVLHVLHCLHSLAIPCNNVEVLMSGNVRCYNIVVEAMKAFPMSERIQEVSCCLLHRLTLGNFFNILVLNEVHEFVVKAVQQYPENAALQISALSCLALLTETIFLNQDLEEKNENQENDDEGEEDKLFWLEACYKALTWHRKNKHVQEAACWALNNLLMYQNSLHEKIGDEDGHFPAHREVMLSMLMHSSSKEVFQASANALSTLLEQNVNFRKILLSKGIHLNVLELMQKHIHSPEVAESGCKMLNHLFEGSNTSLDIMAAVVPKILTVMKRHETSLPVQLEALRAILHFIVPGMPEESREDTEFHHKLNMVKKQCFKNDIHKLVLAALNRFIGNPGIQKCGLKVISSIVHFPDALEMLSLEGAMDSVLHTLQMYPDDQEIQCLGLSLIGYLITKKNVFIGTGHLLAKILVSSLYRFKDVAEIQTKGFQTILAILKLSASFSKLLVHHSFDLVIFHQMSSNIMEQKDQQFLNLCCKCFAKVAMDDYLKNVMLERACDQNNSIMVECLLLLGADANQAKEGSSLICQVCEKESSPKLVELLLNSGSREQDVRKALTISIGKGDSQIISLLLRRLALDVANNSICLGGFCIGKVEPSWLGPLFPDKTSNLRKQTNIASTLARMVIRYQMKSAVEEGTASGSDGNFSEDVLSKFDEWTFIPDSSMDSVFAQSDDLDSEGSEGSFLVKKKSNSISVGEFYRDAVLQRCSPNLQRHSNSLGPIFDHEDLLKRKRKILSSDDSLRSSKLQSHMRHSDSISSLASEREYITSLDLSANELRDIDALSQKCCISVHLEHLEKLELHQNALTSFPQQLCETLKSLTHLDLHSNKFTSFPSYLLKMSCIANLDVSRNDIGPSVVLDPTVKCPTLKQFNLSYNQLSFVPENLTDVVEKLEQLILEGNKISGICSPLRLKELKILNLSKNHISSLSENFLEACPKVESFSARMNFLAAMPFLPPSMTILKLSQNKFSCIPEAILNLPHLRSLDMSSNDIQYLPGPAHWKSLNLRELLFSHNQISILDLSEKAYLWSRVEKLHLSHNKLKEIPPEIGCLENLTSLDVSYNLELRSFPNEMGKLSKIWDLPLDELHLNFDFKHIGCKAKDIIRFLQQRLKKAVPYNRMKLMIVGNTGSGKTTLLQQLMKTKKSDLGMQSATVGIDVKDWPIQIRDKRKRDLVLNVWDFAGREEFYSTHPHFMTQRALYLAVYDLSKGQAEVDAMKPWLFNIKARASSSPVILVGTHLDVSDEKQRKACMSKITKELLNKRGFPAIRDYHFVNATEESDALAKLRKTIINESLNFKIRDQLVVGQLIPDCYVELEKIILSERKNVPIEFPVIDRKRLLQLVRENQLQLDENELPHAVHFLNESGVLLHFQDPALQLSDLYFVEPKWLCKIMAQILTVKVEGCPKHPKGIISRRDVEKFLSKKRKFPKNYMSQYFKLLEKFQIALPIGEEYLLVPSSLSDHRPVIELPHCENSEIIIRLYEMPYFPMGFWSRLINRLLEISPYMLSGRERALRPNRMYWRQGIYLNWSPEAYCLVGSEVLDNHPESFLKITVPSCRKGCILLGQVVDHIDSLMEEWFPGLLEIDICGEGETLLKKWALYSFNDGEEHQKILLDDLMKKAEEGDLLVNPDQPRLTIPISQIAPDLILADLPRNIMLNNDELEFEQAPEFLLGDGSFGSVYRAAYEGEEVAVKIFNKHTSLRLLRQELVVLCHLHHPSLISLLAAGIRPRMLVMELASKGSLDRLLQQDKASLTRTLQHRIALHVADGLRYLHSAMIIYRDLKPHNVLLFTLYPNAAIIAKIADYGIAQYCCRMGIKTSEGTPGFRAPEVARGNVIYNQQADVYSFGLLLYDILTTGGRIVEGLKFPNEFDELEIQGKLPDPVKEYGCAPWPMVEKLIKQCLKENPQERPTSAQVFDILNSAELVCLTRRILLPKNVIVECMVATHHNSRNASIWLGCGHTDRGQLSFLDLNTEGYTSEEVADSRILCLALVHLPVEKESWIVSGTQSGTLLVINTEDGKKRHTLEKMTDSVTCLYCNSFSKQSKQKNFLLVGTADGKLAIFEDKTVKLKGAAPLKILNIGNVSTPLMCLSESTNSTERNVMWGGCGTKIFSFSNDFTIQKLIETRTSQLFSYAAFSDSNIITVVVDTALYIAKQNSPVVEVWDKKTEKLCGLIDCVHFLREVMVKENKESKHKMSYSGRVKTLCLQKNTALWIGTGGGHILLLDLSTRRLIRVIYNFCNSVRVMMTAQLGSLKNVMLVLGYNRKNTEGTQKQKEIQSCLTVWDINLPHEVQNLEKHIEVRKELAEKMRRTSVE</sequence>
<keyword id="KW-0002">3D-structure</keyword>
<keyword id="KW-0067">ATP-binding</keyword>
<keyword id="KW-0072">Autophagy</keyword>
<keyword id="KW-0966">Cell projection</keyword>
<keyword id="KW-0175">Coiled coil</keyword>
<keyword id="KW-0963">Cytoplasm</keyword>
<keyword id="KW-0968">Cytoplasmic vesicle</keyword>
<keyword id="KW-0206">Cytoskeleton</keyword>
<keyword id="KW-0221">Differentiation</keyword>
<keyword id="KW-0225">Disease variant</keyword>
<keyword id="KW-0256">Endoplasmic reticulum</keyword>
<keyword id="KW-0967">Endosome</keyword>
<keyword id="KW-0333">Golgi apparatus</keyword>
<keyword id="KW-0342">GTP-binding</keyword>
<keyword id="KW-0343">GTPase activation</keyword>
<keyword id="KW-0378">Hydrolase</keyword>
<keyword id="KW-0418">Kinase</keyword>
<keyword id="KW-0433">Leucine-rich repeat</keyword>
<keyword id="KW-0458">Lysosome</keyword>
<keyword id="KW-0472">Membrane</keyword>
<keyword id="KW-0496">Mitochondrion</keyword>
<keyword id="KW-1000">Mitochondrion outer membrane</keyword>
<keyword id="KW-0523">Neurodegeneration</keyword>
<keyword id="KW-0547">Nucleotide-binding</keyword>
<keyword id="KW-0907">Parkinson disease</keyword>
<keyword id="KW-0908">Parkinsonism</keyword>
<keyword id="KW-0597">Phosphoprotein</keyword>
<keyword id="KW-1267">Proteomics identification</keyword>
<keyword id="KW-1185">Reference proteome</keyword>
<keyword id="KW-0677">Repeat</keyword>
<keyword id="KW-0723">Serine/threonine-protein kinase</keyword>
<keyword id="KW-0770">Synapse</keyword>
<keyword id="KW-0808">Transferase</keyword>
<keyword id="KW-0832">Ubl conjugation</keyword>
<keyword id="KW-0853">WD repeat</keyword>
<feature type="chain" id="PRO_0000086238" description="Leucine-rich repeat serine/threonine-protein kinase 2">
    <location>
        <begin position="1"/>
        <end position="2527"/>
    </location>
</feature>
<feature type="repeat" description="LRR 1" evidence="66 75 76 77">
    <location>
        <begin position="983"/>
        <end position="1004"/>
    </location>
</feature>
<feature type="repeat" description="LRR 2" evidence="66 75 76 77">
    <location>
        <begin position="1012"/>
        <end position="1033"/>
    </location>
</feature>
<feature type="repeat" description="LRR 3" evidence="66 75 76 77">
    <location>
        <begin position="1036"/>
        <end position="1057"/>
    </location>
</feature>
<feature type="repeat" description="LRR 4" evidence="66 75 76 77">
    <location>
        <begin position="1059"/>
        <end position="1080"/>
    </location>
</feature>
<feature type="repeat" description="LRR 5" evidence="66 75 76 77">
    <location>
        <begin position="1084"/>
        <end position="1105"/>
    </location>
</feature>
<feature type="repeat" description="LRR 6" evidence="66 75 76 77">
    <location>
        <begin position="1108"/>
        <end position="1129"/>
    </location>
</feature>
<feature type="repeat" description="LRR 7" evidence="66 75 76 77">
    <location>
        <begin position="1130"/>
        <end position="1150"/>
    </location>
</feature>
<feature type="repeat" description="LRR 8" evidence="66 75 76 77">
    <location>
        <begin position="1156"/>
        <end position="1171"/>
    </location>
</feature>
<feature type="repeat" description="LRR 9" evidence="66 75 76 77">
    <location>
        <begin position="1174"/>
        <end position="1196"/>
    </location>
</feature>
<feature type="repeat" description="LRR 10" evidence="66 75 76 77">
    <location>
        <begin position="1197"/>
        <end position="1218"/>
    </location>
</feature>
<feature type="repeat" description="LRR 11" evidence="66 75 76 77">
    <location>
        <begin position="1221"/>
        <end position="1245"/>
    </location>
</feature>
<feature type="repeat" description="LRR 12" evidence="66 75 76 77">
    <location>
        <begin position="1246"/>
        <end position="1267"/>
    </location>
</feature>
<feature type="repeat" description="LRR 13" evidence="66 75 76 77">
    <location>
        <begin position="1269"/>
        <end position="1291"/>
    </location>
</feature>
<feature type="domain" description="Roc" evidence="4">
    <location>
        <begin position="1328"/>
        <end position="1511"/>
    </location>
</feature>
<feature type="domain" description="COR" evidence="2">
    <location>
        <begin position="1546"/>
        <end position="1740"/>
    </location>
</feature>
<feature type="domain" description="Protein kinase" evidence="3">
    <location>
        <begin position="1879"/>
        <end position="2138"/>
    </location>
</feature>
<feature type="repeat" description="WD 1" evidence="66 75 76 77">
    <location>
        <begin position="2139"/>
        <end position="2183"/>
    </location>
</feature>
<feature type="repeat" description="WD 2" evidence="66 75 76 77">
    <location>
        <begin position="2188"/>
        <end position="2228"/>
    </location>
</feature>
<feature type="repeat" description="WD 3" evidence="66 75 76 77">
    <location>
        <begin position="2233"/>
        <end position="2276"/>
    </location>
</feature>
<feature type="repeat" description="WD 4" evidence="66 75 76 77">
    <location>
        <begin position="2281"/>
        <end position="2327"/>
    </location>
</feature>
<feature type="repeat" description="WD 5" evidence="66 75 76 77">
    <location>
        <begin position="2333"/>
        <end position="2377"/>
    </location>
</feature>
<feature type="repeat" description="WD 6" evidence="66 75 76 77">
    <location>
        <begin position="2402"/>
        <end position="2438"/>
    </location>
</feature>
<feature type="repeat" description="WD 7" evidence="66 75 76 77">
    <location>
        <begin position="2443"/>
        <end position="2497"/>
    </location>
</feature>
<feature type="region of interest" description="Required for RAB29-mediated activation" evidence="61 66">
    <location>
        <begin position="1"/>
        <end position="969"/>
    </location>
</feature>
<feature type="coiled-coil region" evidence="2">
    <location>
        <begin position="319"/>
        <end position="348"/>
    </location>
</feature>
<feature type="active site" description="Proton acceptor" evidence="3 5">
    <location>
        <position position="1994"/>
    </location>
</feature>
<feature type="binding site" evidence="4 42">
    <location>
        <begin position="1341"/>
        <end position="1348"/>
    </location>
    <ligand>
        <name>GTP</name>
        <dbReference type="ChEBI" id="CHEBI:37565"/>
    </ligand>
</feature>
<feature type="binding site" evidence="66 77">
    <location>
        <position position="1885"/>
    </location>
    <ligand>
        <name>ATP</name>
        <dbReference type="ChEBI" id="CHEBI:30616"/>
    </ligand>
</feature>
<feature type="binding site" evidence="66 77">
    <location>
        <position position="1887"/>
    </location>
    <ligand>
        <name>ATP</name>
        <dbReference type="ChEBI" id="CHEBI:30616"/>
    </ligand>
</feature>
<feature type="binding site" evidence="66 76 77">
    <location>
        <position position="1888"/>
    </location>
    <ligand>
        <name>ATP</name>
        <dbReference type="ChEBI" id="CHEBI:30616"/>
    </ligand>
</feature>
<feature type="binding site" evidence="66 75 76">
    <location>
        <position position="1891"/>
    </location>
    <ligand>
        <name>ATP</name>
        <dbReference type="ChEBI" id="CHEBI:30616"/>
    </ligand>
</feature>
<feature type="binding site" evidence="66 76 77">
    <location>
        <position position="1893"/>
    </location>
    <ligand>
        <name>ATP</name>
        <dbReference type="ChEBI" id="CHEBI:30616"/>
    </ligand>
</feature>
<feature type="binding site" evidence="66 77">
    <location>
        <position position="1904"/>
    </location>
    <ligand>
        <name>ATP</name>
        <dbReference type="ChEBI" id="CHEBI:30616"/>
    </ligand>
</feature>
<feature type="binding site" evidence="3">
    <location>
        <position position="1906"/>
    </location>
    <ligand>
        <name>ATP</name>
        <dbReference type="ChEBI" id="CHEBI:30616"/>
    </ligand>
</feature>
<feature type="binding site" evidence="66 75 76">
    <location>
        <position position="1947"/>
    </location>
    <ligand>
        <name>ATP</name>
        <dbReference type="ChEBI" id="CHEBI:30616"/>
    </ligand>
</feature>
<feature type="binding site" evidence="66 77">
    <location>
        <position position="1948"/>
    </location>
    <ligand>
        <name>ATP</name>
        <dbReference type="ChEBI" id="CHEBI:30616"/>
    </ligand>
</feature>
<feature type="binding site" evidence="66 77">
    <location>
        <position position="1950"/>
    </location>
    <ligand>
        <name>ATP</name>
        <dbReference type="ChEBI" id="CHEBI:30616"/>
    </ligand>
</feature>
<feature type="binding site" evidence="66 76 77">
    <location>
        <position position="1954"/>
    </location>
    <ligand>
        <name>ATP</name>
        <dbReference type="ChEBI" id="CHEBI:30616"/>
    </ligand>
</feature>
<feature type="binding site" evidence="66 77">
    <location>
        <position position="1957"/>
    </location>
    <ligand>
        <name>ATP</name>
        <dbReference type="ChEBI" id="CHEBI:30616"/>
    </ligand>
</feature>
<feature type="binding site" evidence="66 76 77">
    <location>
        <position position="1998"/>
    </location>
    <ligand>
        <name>ATP</name>
        <dbReference type="ChEBI" id="CHEBI:30616"/>
    </ligand>
</feature>
<feature type="binding site" evidence="66 77">
    <location>
        <position position="2001"/>
    </location>
    <ligand>
        <name>ATP</name>
        <dbReference type="ChEBI" id="CHEBI:30616"/>
    </ligand>
</feature>
<feature type="binding site" evidence="66 77">
    <location>
        <position position="2016"/>
    </location>
    <ligand>
        <name>ATP</name>
        <dbReference type="ChEBI" id="CHEBI:30616"/>
    </ligand>
</feature>
<feature type="binding site" evidence="66 77">
    <location>
        <position position="2017"/>
    </location>
    <ligand>
        <name>ATP</name>
        <dbReference type="ChEBI" id="CHEBI:30616"/>
    </ligand>
</feature>
<feature type="binding site" evidence="4">
    <location>
        <begin position="2098"/>
        <end position="2121"/>
    </location>
    <ligand>
        <name>GTP</name>
        <dbReference type="ChEBI" id="CHEBI:37565"/>
    </ligand>
</feature>
<feature type="binding site" evidence="4">
    <location>
        <begin position="2295"/>
        <end position="2298"/>
    </location>
    <ligand>
        <name>GTP</name>
        <dbReference type="ChEBI" id="CHEBI:37565"/>
    </ligand>
</feature>
<feature type="modified residue" description="Phosphoserine" evidence="57 58 61">
    <location>
        <position position="910"/>
    </location>
</feature>
<feature type="modified residue" description="Phosphoserine" evidence="57 58 60 61 64">
    <location>
        <position position="935"/>
    </location>
</feature>
<feature type="modified residue" description="Phosphoserine" evidence="57 61">
    <location>
        <position position="955"/>
    </location>
</feature>
<feature type="modified residue" description="Phosphoserine" evidence="57 61">
    <location>
        <position position="973"/>
    </location>
</feature>
<feature type="modified residue" description="Phosphoserine; by autocatalysis" evidence="61 64 66">
    <location>
        <position position="1292"/>
    </location>
</feature>
<feature type="modified residue" description="Phosphoserine" evidence="57">
    <location>
        <position position="1444"/>
    </location>
</feature>
<feature type="sequence variant" id="VAR_024931" description="In dbSNP:rs2256408.">
    <original>R</original>
    <variation>H</variation>
    <location>
        <position position="50"/>
    </location>
</feature>
<feature type="sequence variant" id="VAR_024932" description="In dbSNP:rs33995463." evidence="23 40">
    <original>L</original>
    <variation>P</variation>
    <location>
        <position position="119"/>
    </location>
</feature>
<feature type="sequence variant" id="VAR_054740" description="In dbSNP:rs56108242." evidence="41">
    <original>C</original>
    <variation>S</variation>
    <location>
        <position position="228"/>
    </location>
</feature>
<feature type="sequence variant" id="VAR_033903" description="In dbSNP:rs34594498." evidence="40">
    <original>A</original>
    <variation>V</variation>
    <location>
        <position position="419"/>
    </location>
</feature>
<feature type="sequence variant" id="VAR_024933" description="In dbSNP:rs7308720." evidence="23 27 40 48">
    <original>N</original>
    <variation>K</variation>
    <location>
        <position position="551"/>
    </location>
</feature>
<feature type="sequence variant" id="VAR_054741" description="In PARK8; dbSNP:rs199566791." evidence="41">
    <original>M</original>
    <variation>V</variation>
    <location>
        <position position="712"/>
    </location>
</feature>
<feature type="sequence variant" id="VAR_054742" description="In dbSNP:rs281865043." evidence="41">
    <original>A</original>
    <variation>V</variation>
    <location>
        <position position="716"/>
    </location>
</feature>
<feature type="sequence variant" id="VAR_024934" description="In dbSNP:rs10878307." evidence="23 40 48">
    <original>I</original>
    <variation>V</variation>
    <location>
        <position position="723"/>
    </location>
</feature>
<feature type="sequence variant" id="VAR_033904" description="In dbSNP:rs34410987.">
    <original>P</original>
    <variation>L</variation>
    <location>
        <position position="755"/>
    </location>
</feature>
<feature type="sequence variant" id="VAR_024935" description="In PARK8; uncertain significance; dbSNP:rs35173587." evidence="21 23 27">
    <original>R</original>
    <variation>M</variation>
    <location>
        <position position="793"/>
    </location>
</feature>
<feature type="sequence variant" id="VAR_054743" description="In dbSNP:rs281865044." evidence="41">
    <original>K</original>
    <variation>E</variation>
    <location>
        <position position="871"/>
    </location>
</feature>
<feature type="sequence variant" id="VAR_024936" description="In PARK8; uncertain significance; dbSNP:rs281865045." evidence="27">
    <original>Q</original>
    <variation>R</variation>
    <location>
        <position position="930"/>
    </location>
</feature>
<feature type="sequence variant" id="VAR_024937" description="In dbSNP:rs17519916.">
    <original>D</original>
    <variation>Y</variation>
    <location>
        <position position="944"/>
    </location>
</feature>
<feature type="sequence variant" id="VAR_024938" description="In PARK8; dbSNP:rs111341148." evidence="25">
    <original>R</original>
    <variation>Q</variation>
    <location>
        <position position="1067"/>
    </location>
</feature>
<feature type="sequence variant" id="VAR_024939" description="In PARK8; uncertain significance; dbSNP:rs76535406." evidence="27">
    <original>S</original>
    <variation>C</variation>
    <location>
        <position position="1096"/>
    </location>
</feature>
<feature type="sequence variant" id="VAR_024940" description="In PARK8; dbSNP:rs34805604." evidence="7 23">
    <original>I</original>
    <variation>V</variation>
    <location>
        <position position="1122"/>
    </location>
</feature>
<feature type="sequence variant" id="VAR_024941" description="In PARK8; dbSNP:rs60185966." evidence="27">
    <original>S</original>
    <variation>T</variation>
    <location>
        <position position="1228"/>
    </location>
</feature>
<feature type="sequence variant" id="VAR_024942" description="In dbSNP:rs4640000." evidence="23">
    <original>P</original>
    <variation>A</variation>
    <location>
        <position position="1262"/>
    </location>
</feature>
<feature type="sequence variant" id="VAR_064728" description="Found in a renal cell carcinoma sample; somatic mutation." evidence="44">
    <original>K</original>
    <variation>I</variation>
    <location>
        <position position="1359"/>
    </location>
</feature>
<feature type="sequence variant" id="VAR_024943" description="In PARK8; uncertain significance; dbSNP:rs17466213." evidence="20 33">
    <original>I</original>
    <variation>V</variation>
    <location>
        <position position="1371"/>
    </location>
</feature>
<feature type="sequence variant" id="VAR_047022" description="In dbSNP:rs28365226.">
    <original>D</original>
    <variation>E</variation>
    <location>
        <position position="1375"/>
    </location>
</feature>
<feature type="sequence variant" id="VAR_024944" description="In dbSNP:rs7133914." evidence="20 23 40 48">
    <original>R</original>
    <variation>H</variation>
    <location>
        <position position="1398"/>
    </location>
</feature>
<feature type="sequence variant" id="VAR_024945" description="In PARK8; shows an increase in activity in both autophosphorylation and phosphorylation of a generic substrate; loss of interaction with SEC16A; shows an increase in activity in phosphorylation of RAB10; decreases phosphorylation-dependent binding to YWHAG; significantly suppresses lysosomal enlargement when overexpressed in LRRK2 knockout cells due to increased phosphorylation of Rab proteins; dbSNP:rs33939927." evidence="7 22 23 28 33 36 53 55 57 61 62">
    <original>R</original>
    <variation>C</variation>
    <location>
        <position position="1441"/>
    </location>
</feature>
<feature type="sequence variant" id="VAR_024946" description="In PARK8; shows a progressive reduction in neurite length and branching; shows an increase in activity in phosphorylation of RAB8A and RAB10; decreases phosphorylation-dependent binding to YWHAG; significantly suppresses lysosomal enlargement when overexpressed in LRRK2 knockout cells due to increased phosphorylation of Rab proteins; dbSNP:rs33939927." evidence="6 16 23 36 38 55 58 59 61 62 63 64">
    <original>R</original>
    <variation>G</variation>
    <location>
        <position position="1441"/>
    </location>
</feature>
<feature type="sequence variant" id="VAR_024947" description="In PARK8; shows an increase in activity in phosphorylation of RAB8A and RAB10; decreases phosphorylation-dependent binding to YWHAG; dbSNP:rs34995376." evidence="22 23 55 61">
    <original>R</original>
    <variation>H</variation>
    <location>
        <position position="1441"/>
    </location>
</feature>
<feature type="sequence variant" id="VAR_024948" description="In PARK8; uncertain significance; dbSNP:rs35507033." evidence="23 40 48">
    <original>R</original>
    <variation>Q</variation>
    <location>
        <position position="1514"/>
    </location>
</feature>
<feature type="sequence variant" id="VAR_024949" description="In PARK8; uncertain significance; dbSNP:rs33958906." evidence="23 40 48">
    <original>P</original>
    <variation>S</variation>
    <location>
        <position position="1542"/>
    </location>
</feature>
<feature type="sequence variant" id="VAR_040678" description="In an ovarian mucinous carcinoma sample; somatic mutation; dbSNP:rs200212150." evidence="40">
    <original>R</original>
    <variation>Q</variation>
    <location>
        <position position="1550"/>
    </location>
</feature>
<feature type="sequence variant" id="VAR_024950" description="In PARK8; uncertain significance; dbSNP:rs721710." evidence="23">
    <original>V</original>
    <variation>E</variation>
    <location>
        <position position="1598"/>
    </location>
</feature>
<feature type="sequence variant" id="VAR_024951" description="In PARK8; uncertain significance; dbSNP:rs33949390." evidence="23 45 48">
    <original>R</original>
    <variation>P</variation>
    <location>
        <position position="1628"/>
    </location>
</feature>
<feature type="sequence variant" id="VAR_024952" description="In dbSNP:rs35303786." evidence="23 48">
    <original>M</original>
    <variation>T</variation>
    <location>
        <position position="1646"/>
    </location>
</feature>
<feature type="sequence variant" id="VAR_024953" description="In dbSNP:rs11564148." evidence="23 48">
    <original>S</original>
    <variation>T</variation>
    <location>
        <position position="1647"/>
    </location>
</feature>
<feature type="sequence variant" id="VAR_024954" description="In PARK8; shows no progressive reduction in neurite length and branching; no loss of interaction with SEC16A; shows an increase in activity in phosphorylation of RAB8A and RAB10; significantly suppresses lysosomal enlargement when overexpressed in LRRK2 knockout cells due to increased phosphorylation of Rab proteins; dbSNP:rs35801418." evidence="6 7 23 29 38 53 55 59 61 62">
    <original>Y</original>
    <variation>C</variation>
    <location>
        <position position="1699"/>
    </location>
</feature>
<feature type="sequence variant" id="VAR_040679" description="In an ovarian serous carcinoma sample; somatic mutation." evidence="40">
    <original>R</original>
    <variation>P</variation>
    <location>
        <position position="1723"/>
    </location>
</feature>
<feature type="sequence variant" id="VAR_054744" description="In PARK8; shows an increase in activity in phosphorylation of RAB8A and RAB10; dbSNP:rs145364431." evidence="41 55 61">
    <original>R</original>
    <variation>H</variation>
    <location>
        <position position="1728"/>
    </location>
</feature>
<feature type="sequence variant" id="VAR_054745" description="In PARK8; dbSNP:rs145364431." evidence="41">
    <original>R</original>
    <variation>L</variation>
    <location>
        <position position="1728"/>
    </location>
</feature>
<feature type="sequence variant" id="VAR_024955" description="In PARK8; uncertain significance; dbSNP:rs35602796." evidence="21 23">
    <original>M</original>
    <variation>T</variation>
    <location>
        <position position="1869"/>
    </location>
</feature>
<feature type="sequence variant" id="VAR_054746" description="In dbSNP:rs281865053." evidence="41">
    <original>L</original>
    <variation>F</variation>
    <location>
        <position position="1870"/>
    </location>
</feature>
<feature type="sequence variant" id="VAR_071101" description="Loss of kinase activity and ability to enhance NOD2 signaling; does not inhibit interaction with RAB29; shows a progressive increase in neurite length and branching; does not suppress lysosomal enlargement when overexpressed in LRRK2 knockout cells due to lack of phosphorylation activity." evidence="38 51 56 62">
    <original>K</original>
    <variation>M</variation>
    <location>
        <position position="1906"/>
    </location>
</feature>
<feature type="sequence variant" id="VAR_024956" description="In PARK8; dbSNP:rs77428810." evidence="29">
    <original>R</original>
    <variation>H</variation>
    <location>
        <position position="1941"/>
    </location>
</feature>
<feature type="sequence variant" id="VAR_024957" description="In PARK8; uncertain significance; dbSNP:rs34015634." evidence="23">
    <original>I</original>
    <variation>T</variation>
    <location>
        <position position="2012"/>
    </location>
</feature>
<feature type="sequence variant" id="VAR_024958" description="In PARK8; shows an increase in activity in both autophosphorylation and phosphorylation of a generic substrate; results in increased PRDX3 phosphorylation promoting dysregulation of mitochondrial function and oxidative damage; results in increased APP phosphorylation on 'T-743' promoting neurotoxicity in dopaminergic neurons; shows increased kinase activity in the phosphorylation of RAB10; does not inhibit interaction with RAB29; shows a progressive reduction in neurite length and branching; shows distinctive spheroid-like inclusions within both neuronal processes and at intracellular membranous structures; shows lysosomal swelling and reduced retrograde transport of selective cargo between lysosomes and the Golgi apparatus; shows apoptotic mechanism of cell death; no loss of interaction with SEC16A; significantly suppresses lysosomal enlargement when overexpressed in LRRK2 knockout cells due to increased phosphorylation of Rab proteins; dbSNP:rs34637584." evidence="8 9 10 11 12 13 14 17 18 19 20 21 22 23 24 26 27 28 29 30 31 33 36 38 41 46 50 51 53 55 58 59 60 61 62 63 64">
    <original>G</original>
    <variation>S</variation>
    <location>
        <position position="2019"/>
    </location>
</feature>
<feature type="sequence variant" id="VAR_024959" description="In PARK8; significant increase in autophosphorylation of about 40% in comparison to wild-type protein in vitro; shows a progressive reduction in neurite length and branching; shows an increase in activity in phosphorylation of RAB8A and RAB10; significantly suppresses lysosomal enlargement when overexpressed in LRRK2 knockout cells due to increased phosphorylation of Rab proteins; dbSNP:rs35870237." evidence="7 15 23 27 32 38 55 61 62">
    <original>I</original>
    <variation>T</variation>
    <location>
        <position position="2020"/>
    </location>
</feature>
<feature type="sequence variant" id="VAR_082047" description="In PARK8; shows an increase in activity in phosphorylation of RAB8A and RAB10; dbSNP:rs78029637." evidence="55 61">
    <original>T</original>
    <variation>S</variation>
    <location>
        <position position="2031"/>
    </location>
</feature>
<feature type="sequence variant" id="VAR_024960" description="In dbSNP:rs33995883." evidence="23 48">
    <original>N</original>
    <variation>D</variation>
    <location>
        <position position="2081"/>
    </location>
</feature>
<feature type="sequence variant" id="VAR_024961" description="In dbSNP:rs12423862." evidence="23">
    <original>P</original>
    <variation>L</variation>
    <location>
        <position position="2119"/>
    </location>
</feature>
<feature type="sequence variant" id="VAR_054747" description="In PARK8; dbSNP:rs111691891." evidence="41">
    <original>T</original>
    <variation>M</variation>
    <location>
        <position position="2141"/>
    </location>
</feature>
<feature type="sequence variant" id="VAR_054748" description="In PARK8; dbSNP:rs201271001." evidence="41">
    <original>R</original>
    <variation>H</variation>
    <location>
        <position position="2143"/>
    </location>
</feature>
<feature type="sequence variant" id="VAR_082048" description="In PARK8; shows decreased WD domain homodimerization; no effect on kinase activity; dbSNP:rs72547981." evidence="64">
    <original>D</original>
    <variation>H</variation>
    <location>
        <position position="2175"/>
    </location>
</feature>
<feature type="sequence variant" id="VAR_082049" description="In PARK8; no effect on WD domain homodimerization; no effect on kinase activity; dbSNP:rs35658131." evidence="64">
    <original>Y</original>
    <variation>C</variation>
    <location>
        <position position="2189"/>
    </location>
</feature>
<feature type="sequence variant" id="VAR_024962" description="In dbSNP:rs12581902." evidence="23">
    <original>N</original>
    <variation>I</variation>
    <location>
        <position position="2261"/>
    </location>
</feature>
<feature type="sequence variant" id="VAR_024963" description="In PARK8; shows decreased WD domain homodimerization; no effect on kinase activity; dbSNP:rs113511708." evidence="29 64">
    <original>T</original>
    <variation>I</variation>
    <location>
        <position position="2356"/>
    </location>
</feature>
<feature type="sequence variant" id="VAR_024964" description="In PARK8; under conditions of oxidative stress the variant protein is more toxic and is correlated with a higher rate of apoptosis; reduced binding to synaptic vesicles; no loss of interaction with SEC16A; shows an increase in activity in phosphorylation of RAB8A and RAB10; shows decreased WD domain homodimerization; reduced autophosphorylation at Ser-935; dbSNP:rs34778348." evidence="23 37 45 52 53 55 61 64">
    <original>G</original>
    <variation>R</variation>
    <location>
        <position position="2385"/>
    </location>
</feature>
<feature type="sequence variant" id="VAR_082050" description="In PARK8; shows decreased WD domain homodimerization; no effect on kinase activity; dbSNP:rs79546190." evidence="64">
    <original>V</original>
    <variation>M</variation>
    <location>
        <position position="2390"/>
    </location>
</feature>
<feature type="sequence variant" id="VAR_054749" description="In dbSNP:rs78964014." evidence="41">
    <original>E</original>
    <variation>K</variation>
    <location>
        <position position="2395"/>
    </location>
</feature>
<feature type="sequence variant" id="VAR_024965" description="In dbSNP:rs3761863." evidence="20 23 48">
    <original>M</original>
    <variation>T</variation>
    <location>
        <position position="2397"/>
    </location>
</feature>
<feature type="sequence variant" id="VAR_082051" description="In PARK8; shows decreased WD domain homodimerization; no effect on kinase activity; dbSNP:rs72547983." evidence="64">
    <original>L</original>
    <variation>I</variation>
    <location>
        <position position="2439"/>
    </location>
</feature>
<feature type="sequence variant" id="VAR_054750" description="In PARK8; dbSNP:rs281865057." evidence="41">
    <original>L</original>
    <variation>H</variation>
    <location>
        <position position="2466"/>
    </location>
</feature>
<feature type="mutagenesis site" description="Reduces membrane localization and abolishes interaction with RAB29/RAB7L1. Impairs RAB29-stimulated kinase activity on RAB10, RAB29 and LRRK2." evidence="66">
    <original>R</original>
    <variation>E</variation>
    <location>
        <position position="399"/>
    </location>
</feature>
<feature type="mutagenesis site" description="Reduces membrane localization and abolishes interaction with RAB29/RAB7L1. Impairs RAB29-stimulated kinase activity on RAB10, RAB29 and LRRK2." evidence="66">
    <original>L</original>
    <variation>E</variation>
    <location>
        <position position="403"/>
    </location>
</feature>
<feature type="mutagenesis site" description="Decreased kinase activity. Loss of RAB29-mediated activation and autophosphorylation of S-910, S-935, S-955, S-973 and S-1292. Decreased membrane association; when associated with G-1441, C-1699 and S-2019." evidence="61">
    <original>C</original>
    <variation>D</variation>
    <location>
        <position position="727"/>
    </location>
</feature>
<feature type="mutagenesis site" description="Decreased kinase activity. Loss of RAB29-mediated activation and autophosphorylation of S-910, S-935, S-955, S-973 and S-1292. Decreased membrane association; when associated with G-1441, C-1699 and S-2019." evidence="61">
    <original>L</original>
    <variation>D</variation>
    <location>
        <position position="728"/>
    </location>
</feature>
<feature type="mutagenesis site" description="Decreased kinase activity. Loss of RAB29-mediated activation and autophosphorylation of S-910, S-935, S-955, S-973 and S-1292. Decreased membrane association; when associated with G-1441, C-1699 and S-2019." evidence="61">
    <original>L</original>
    <variation>D</variation>
    <location>
        <position position="729"/>
    </location>
</feature>
<feature type="mutagenesis site" description="Decreased kinase activity and loss of RAB29-mediated activation." evidence="61">
    <original>L</original>
    <variation>D</variation>
    <location>
        <position position="760"/>
    </location>
</feature>
<feature type="mutagenesis site" description="Decreased kinase activity and loss of RAB29-mediated activation." evidence="61">
    <original>L</original>
    <variation>D</variation>
    <location>
        <position position="761"/>
    </location>
</feature>
<feature type="mutagenesis site" description="Decreased kinase activity and loss of RAB29-mediated activation." evidence="61">
    <original>L</original>
    <variation>D</variation>
    <location>
        <position position="762"/>
    </location>
</feature>
<feature type="mutagenesis site" description="No effect on kinase activity and RAB29-mediated activation." evidence="61">
    <original>L</original>
    <variation>D</variation>
    <location>
        <position position="789"/>
    </location>
</feature>
<feature type="mutagenesis site" description="No effect on kinase activity and RAB29-mediated activation." evidence="61">
    <original>L</original>
    <variation>D</variation>
    <location>
        <position position="790"/>
    </location>
</feature>
<feature type="mutagenesis site" description="No effect on kinase activity and RAB29-mediated activation." evidence="61">
    <original>L</original>
    <variation>D</variation>
    <location>
        <position position="791"/>
    </location>
</feature>
<feature type="mutagenesis site" description="Decreased kinase activity; when associated with Q-1398." evidence="42">
    <original>T</original>
    <variation>G</variation>
    <location>
        <position position="1343"/>
    </location>
</feature>
<feature type="mutagenesis site" description="GTPase-dead mutant. Loss of interaction with SEC16A and impaired ability to recruit SEC16A to endoplasmic reticulum exit sites." evidence="53">
    <original>K</original>
    <variation>A</variation>
    <location>
        <position position="1347"/>
    </location>
</feature>
<feature type="mutagenesis site" description="Loss of GTP binding. Inhibits autophosphorylation and RAB10 phosphorylation; when associated with G-1441, C-1699, or S-2019." evidence="61">
    <original>T</original>
    <variation>N</variation>
    <location>
        <position position="1348"/>
    </location>
</feature>
<feature type="mutagenesis site" description="Decreased kinase activity; when associated with G-1343." evidence="42">
    <original>R</original>
    <variation>Q</variation>
    <location>
        <position position="1398"/>
    </location>
</feature>
<feature type="mutagenesis site" description="Decreased membrane association when associated with D-727, D-728, or D-729. Inhibits autophosphorylation and RAB10 phosphorylation when associated with N-1348 or A-2017." evidence="61">
    <original>R</original>
    <variation>G</variation>
    <location>
        <position position="1441"/>
    </location>
</feature>
<feature type="mutagenesis site" description="Impairs RAB29-stimulated kinase activity on RAB10, RAB29 and LRRK2." evidence="66">
    <original>P</original>
    <variation>A</variation>
    <location>
        <position position="1588"/>
    </location>
</feature>
<feature type="mutagenesis site" description="Decreased membrane association when associated with D-727, D-728, or D-729. Inhibits autophosphorylation and RAB10 phosphorylation when associated with N-1348 or A-2017." evidence="61">
    <original>Y</original>
    <variation>C</variation>
    <location>
        <position position="1699"/>
    </location>
</feature>
<feature type="mutagenesis site" description="Impairs RAB29-stimulated kinase activity on RAB10, RAB29 and LRRK2." evidence="66">
    <original>N</original>
    <variation>A</variation>
    <location>
        <position position="1710"/>
    </location>
</feature>
<feature type="mutagenesis site" description="Impairs RAB29-stimulated kinase activity on RAB10, RAB29 and LRRK2." evidence="66">
    <original>W</original>
    <variation>A</variation>
    <location>
        <position position="1791"/>
    </location>
</feature>
<feature type="mutagenesis site" description="Loss of kinase activity. Decreases proteasomal degradation of MAPT; when associated with N-1994 and A-2017." evidence="54">
    <original>K</original>
    <variation>A</variation>
    <location>
        <position position="1906"/>
    </location>
</feature>
<feature type="mutagenesis site" description="Loss of kinase activity." evidence="58">
    <original>D</original>
    <variation>A</variation>
    <location>
        <position position="1994"/>
    </location>
</feature>
<feature type="mutagenesis site" description="Loss of kinase activity. No loss of interaction with SEC16A and no loss of ability to recruit SEC16A to endoplasmic reticulum exit sites. Decreases proteasomal degradation of MAPT; when associated with A-1906 and A-2017." evidence="53 54 55">
    <original>D</original>
    <variation>N</variation>
    <location>
        <position position="1994"/>
    </location>
</feature>
<feature type="mutagenesis site" description="Loss of kinase activity. Decreases proteasomal degradation of MAPT; when associated with A-1906 and N-1994. Loss of phosphorylation of RAB10; when associated with G-1441, C-1699, or S-2019." evidence="54 59 61 64 66">
    <original>D</original>
    <variation>A</variation>
    <location>
        <position position="2017"/>
    </location>
</feature>
<feature type="mutagenesis site" description="Decreased membrane association when associated with D-727, D-728, or D-729. Inhibits autophosphorylation and RAB10 phosphorylation when associated with N-1348 or A-2017." evidence="61">
    <original>G</original>
    <variation>S</variation>
    <location>
        <position position="2019"/>
    </location>
</feature>
<feature type="mutagenesis site" description="Decreases WD domain homodimerization. No effect on kinase activity." evidence="64">
    <original>L</original>
    <variation>D</variation>
    <location>
        <position position="2343"/>
    </location>
</feature>
<feature type="mutagenesis site" description="Decreases WD domain homodimerization. No effect on kinase activity." evidence="64">
    <original>F</original>
    <variation>A</variation>
    <location>
        <position position="2344"/>
    </location>
</feature>
<feature type="mutagenesis site" description="Decreases WD domain homodimerization. No effect on kinase activity." evidence="64">
    <original>S</original>
    <variation>D</variation>
    <location>
        <position position="2345"/>
    </location>
</feature>
<feature type="mutagenesis site" description="Decreases WD domain homodimerization. No effect on kinase activity." evidence="64">
    <original>Y</original>
    <variation>A</variation>
    <location>
        <position position="2346"/>
    </location>
</feature>
<feature type="mutagenesis site" description="Increases kinase activity." evidence="64">
    <original>H</original>
    <variation>D</variation>
    <location>
        <position position="2391"/>
    </location>
</feature>
<feature type="mutagenesis site" description="Decreases WD domain homodimerization. Increases kinase activity and autophosphorylation at Ser-1292." evidence="64">
    <original>R</original>
    <variation>E</variation>
    <location>
        <position position="2394"/>
    </location>
</feature>
<feature type="mutagenesis site" description="Decreases WD domain homodimerization. No effect on kinase activity." evidence="64">
    <original>E</original>
    <variation>R</variation>
    <location>
        <position position="2395"/>
    </location>
</feature>
<feature type="mutagenesis site" description="No effect on WD domain homodimerization. No effect on kinase activity." evidence="64">
    <original>M</original>
    <variation>A</variation>
    <variation>E</variation>
    <location>
        <position position="2408"/>
    </location>
</feature>
<feature type="mutagenesis site" description="Decreases WD domain homodimerization." evidence="64">
    <original>S</original>
    <variation>A</variation>
    <location>
        <position position="2409"/>
    </location>
</feature>
<feature type="sequence conflict" description="In Ref. 1; AAV63975." evidence="68" ref="1">
    <original>L</original>
    <variation>S</variation>
    <location>
        <position position="212"/>
    </location>
</feature>
<feature type="helix" evidence="84">
    <location>
        <begin position="560"/>
        <end position="570"/>
    </location>
</feature>
<feature type="turn" evidence="84">
    <location>
        <begin position="571"/>
        <end position="574"/>
    </location>
</feature>
<feature type="helix" evidence="84">
    <location>
        <begin position="585"/>
        <end position="595"/>
    </location>
</feature>
<feature type="helix" evidence="84">
    <location>
        <begin position="603"/>
        <end position="606"/>
    </location>
</feature>
<feature type="helix" evidence="84">
    <location>
        <begin position="607"/>
        <end position="610"/>
    </location>
</feature>
<feature type="helix" evidence="84">
    <location>
        <begin position="626"/>
        <end position="637"/>
    </location>
</feature>
<feature type="turn" evidence="84">
    <location>
        <begin position="638"/>
        <end position="640"/>
    </location>
</feature>
<feature type="helix" evidence="84">
    <location>
        <begin position="645"/>
        <end position="656"/>
    </location>
</feature>
<feature type="helix" evidence="84">
    <location>
        <begin position="660"/>
        <end position="662"/>
    </location>
</feature>
<feature type="helix" evidence="84">
    <location>
        <begin position="663"/>
        <end position="666"/>
    </location>
</feature>
<feature type="turn" evidence="84">
    <location>
        <begin position="667"/>
        <end position="670"/>
    </location>
</feature>
<feature type="helix" evidence="84">
    <location>
        <begin position="671"/>
        <end position="678"/>
    </location>
</feature>
<feature type="helix" evidence="84">
    <location>
        <begin position="689"/>
        <end position="702"/>
    </location>
</feature>
<feature type="helix" evidence="84">
    <location>
        <begin position="706"/>
        <end position="714"/>
    </location>
</feature>
<feature type="turn" evidence="84">
    <location>
        <begin position="715"/>
        <end position="720"/>
    </location>
</feature>
<feature type="helix" evidence="84">
    <location>
        <begin position="722"/>
        <end position="730"/>
    </location>
</feature>
<feature type="strand" evidence="84">
    <location>
        <begin position="740"/>
        <end position="742"/>
    </location>
</feature>
<feature type="helix" evidence="84">
    <location>
        <begin position="744"/>
        <end position="750"/>
    </location>
</feature>
<feature type="helix" evidence="84">
    <location>
        <begin position="755"/>
        <end position="762"/>
    </location>
</feature>
<feature type="strand" evidence="84">
    <location>
        <begin position="763"/>
        <end position="765"/>
    </location>
</feature>
<feature type="helix" evidence="84">
    <location>
        <begin position="768"/>
        <end position="780"/>
    </location>
</feature>
<feature type="strand" evidence="84">
    <location>
        <begin position="784"/>
        <end position="787"/>
    </location>
</feature>
<feature type="helix" evidence="84">
    <location>
        <begin position="788"/>
        <end position="794"/>
    </location>
</feature>
<feature type="turn" evidence="84">
    <location>
        <begin position="798"/>
        <end position="801"/>
    </location>
</feature>
<feature type="strand" evidence="84">
    <location>
        <begin position="802"/>
        <end position="804"/>
    </location>
</feature>
<feature type="helix" evidence="84">
    <location>
        <begin position="815"/>
        <end position="818"/>
    </location>
</feature>
<feature type="helix" evidence="84">
    <location>
        <begin position="819"/>
        <end position="821"/>
    </location>
</feature>
<feature type="helix" evidence="84">
    <location>
        <begin position="834"/>
        <end position="852"/>
    </location>
</feature>
<feature type="helix" evidence="79">
    <location>
        <begin position="913"/>
        <end position="917"/>
    </location>
</feature>
<feature type="strand" evidence="84">
    <location>
        <begin position="986"/>
        <end position="988"/>
    </location>
</feature>
<feature type="helix" evidence="84">
    <location>
        <begin position="998"/>
        <end position="1000"/>
    </location>
</feature>
<feature type="strand" evidence="84">
    <location>
        <begin position="1001"/>
        <end position="1003"/>
    </location>
</feature>
<feature type="turn" evidence="84">
    <location>
        <begin position="1005"/>
        <end position="1009"/>
    </location>
</feature>
<feature type="helix" evidence="84">
    <location>
        <begin position="1010"/>
        <end position="1012"/>
    </location>
</feature>
<feature type="strand" evidence="90">
    <location>
        <begin position="1014"/>
        <end position="1017"/>
    </location>
</feature>
<feature type="helix" evidence="84">
    <location>
        <begin position="1030"/>
        <end position="1032"/>
    </location>
</feature>
<feature type="helix" evidence="84">
    <location>
        <begin position="1054"/>
        <end position="1056"/>
    </location>
</feature>
<feature type="strand" evidence="84">
    <location>
        <begin position="1057"/>
        <end position="1059"/>
    </location>
</feature>
<feature type="strand" evidence="84">
    <location>
        <begin position="1087"/>
        <end position="1089"/>
    </location>
</feature>
<feature type="helix" evidence="84">
    <location>
        <begin position="1102"/>
        <end position="1105"/>
    </location>
</feature>
<feature type="strand" evidence="84">
    <location>
        <begin position="1111"/>
        <end position="1113"/>
    </location>
</feature>
<feature type="strand" evidence="90">
    <location>
        <begin position="1133"/>
        <end position="1135"/>
    </location>
</feature>
<feature type="turn" evidence="90">
    <location>
        <begin position="1146"/>
        <end position="1149"/>
    </location>
</feature>
<feature type="strand" evidence="90">
    <location>
        <begin position="1157"/>
        <end position="1159"/>
    </location>
</feature>
<feature type="strand" evidence="84">
    <location>
        <begin position="1177"/>
        <end position="1179"/>
    </location>
</feature>
<feature type="helix" evidence="84">
    <location>
        <begin position="1190"/>
        <end position="1193"/>
    </location>
</feature>
<feature type="strand" evidence="84">
    <location>
        <begin position="1200"/>
        <end position="1202"/>
    </location>
</feature>
<feature type="helix" evidence="84">
    <location>
        <begin position="1214"/>
        <end position="1216"/>
    </location>
</feature>
<feature type="strand" evidence="84">
    <location>
        <begin position="1224"/>
        <end position="1226"/>
    </location>
</feature>
<feature type="helix" evidence="84">
    <location>
        <begin position="1242"/>
        <end position="1244"/>
    </location>
</feature>
<feature type="strand" evidence="84">
    <location>
        <begin position="1249"/>
        <end position="1251"/>
    </location>
</feature>
<feature type="helix" evidence="84">
    <location>
        <begin position="1262"/>
        <end position="1266"/>
    </location>
</feature>
<feature type="strand" evidence="84">
    <location>
        <begin position="1272"/>
        <end position="1274"/>
    </location>
</feature>
<feature type="helix" evidence="84">
    <location>
        <begin position="1286"/>
        <end position="1290"/>
    </location>
</feature>
<feature type="strand" evidence="90">
    <location>
        <begin position="1310"/>
        <end position="1312"/>
    </location>
</feature>
<feature type="helix" evidence="84">
    <location>
        <begin position="1317"/>
        <end position="1327"/>
    </location>
</feature>
<feature type="strand" evidence="84">
    <location>
        <begin position="1329"/>
        <end position="1332"/>
    </location>
</feature>
<feature type="strand" evidence="82">
    <location>
        <begin position="1336"/>
        <end position="1341"/>
    </location>
</feature>
<feature type="helix" evidence="82">
    <location>
        <begin position="1347"/>
        <end position="1354"/>
    </location>
</feature>
<feature type="strand" evidence="82">
    <location>
        <begin position="1357"/>
        <end position="1359"/>
    </location>
</feature>
<feature type="strand" evidence="81">
    <location>
        <begin position="1365"/>
        <end position="1368"/>
    </location>
</feature>
<feature type="strand" evidence="82">
    <location>
        <begin position="1370"/>
        <end position="1378"/>
    </location>
</feature>
<feature type="strand" evidence="82">
    <location>
        <begin position="1382"/>
        <end position="1384"/>
    </location>
</feature>
<feature type="strand" evidence="82">
    <location>
        <begin position="1388"/>
        <end position="1395"/>
    </location>
</feature>
<feature type="helix" evidence="82">
    <location>
        <begin position="1398"/>
        <end position="1402"/>
    </location>
</feature>
<feature type="helix" evidence="82">
    <location>
        <begin position="1406"/>
        <end position="1410"/>
    </location>
</feature>
<feature type="strand" evidence="82">
    <location>
        <begin position="1411"/>
        <end position="1420"/>
    </location>
</feature>
<feature type="helix" evidence="82">
    <location>
        <begin position="1421"/>
        <end position="1423"/>
    </location>
</feature>
<feature type="helix" evidence="82">
    <location>
        <begin position="1426"/>
        <end position="1429"/>
    </location>
</feature>
<feature type="helix" evidence="82">
    <location>
        <begin position="1431"/>
        <end position="1441"/>
    </location>
</feature>
<feature type="strand" evidence="82">
    <location>
        <begin position="1447"/>
        <end position="1452"/>
    </location>
</feature>
<feature type="helix" evidence="82">
    <location>
        <begin position="1454"/>
        <end position="1456"/>
    </location>
</feature>
<feature type="helix" evidence="82">
    <location>
        <begin position="1459"/>
        <end position="1472"/>
    </location>
</feature>
<feature type="turn" evidence="82">
    <location>
        <begin position="1473"/>
        <end position="1475"/>
    </location>
</feature>
<feature type="strand" evidence="82">
    <location>
        <begin position="1482"/>
        <end position="1487"/>
    </location>
</feature>
<feature type="strand" evidence="84">
    <location>
        <begin position="1490"/>
        <end position="1492"/>
    </location>
</feature>
<feature type="helix" evidence="82">
    <location>
        <begin position="1495"/>
        <end position="1513"/>
    </location>
</feature>
<feature type="helix" evidence="84">
    <location>
        <begin position="1518"/>
        <end position="1520"/>
    </location>
</feature>
<feature type="strand" evidence="84">
    <location>
        <begin position="1521"/>
        <end position="1524"/>
    </location>
</feature>
<feature type="helix" evidence="91">
    <location>
        <begin position="1531"/>
        <end position="1539"/>
    </location>
</feature>
<feature type="strand" evidence="85">
    <location>
        <begin position="1543"/>
        <end position="1549"/>
    </location>
</feature>
<feature type="helix" evidence="91">
    <location>
        <begin position="1553"/>
        <end position="1557"/>
    </location>
</feature>
<feature type="helix" evidence="86">
    <location>
        <begin position="1564"/>
        <end position="1568"/>
    </location>
</feature>
<feature type="helix" evidence="88">
    <location>
        <begin position="1573"/>
        <end position="1579"/>
    </location>
</feature>
<feature type="strand" evidence="88">
    <location>
        <begin position="1581"/>
        <end position="1583"/>
    </location>
</feature>
<feature type="helix" evidence="88">
    <location>
        <begin position="1588"/>
        <end position="1590"/>
    </location>
</feature>
<feature type="turn" evidence="84">
    <location>
        <begin position="1591"/>
        <end position="1594"/>
    </location>
</feature>
<feature type="strand" evidence="91">
    <location>
        <begin position="1596"/>
        <end position="1599"/>
    </location>
</feature>
<feature type="helix" evidence="88">
    <location>
        <begin position="1600"/>
        <end position="1609"/>
    </location>
</feature>
<feature type="turn" evidence="86">
    <location>
        <begin position="1610"/>
        <end position="1612"/>
    </location>
</feature>
<feature type="helix" evidence="88">
    <location>
        <begin position="1628"/>
        <end position="1632"/>
    </location>
</feature>
<feature type="strand" evidence="86">
    <location>
        <begin position="1638"/>
        <end position="1640"/>
    </location>
</feature>
<feature type="helix" evidence="86">
    <location>
        <begin position="1643"/>
        <end position="1645"/>
    </location>
</feature>
<feature type="helix" evidence="88">
    <location>
        <begin position="1650"/>
        <end position="1655"/>
    </location>
</feature>
<feature type="strand" evidence="91">
    <location>
        <begin position="1661"/>
        <end position="1663"/>
    </location>
</feature>
<feature type="helix" evidence="91">
    <location>
        <begin position="1670"/>
        <end position="1672"/>
    </location>
</feature>
<feature type="helix" evidence="88">
    <location>
        <begin position="1687"/>
        <end position="1689"/>
    </location>
</feature>
<feature type="strand" evidence="88">
    <location>
        <begin position="1690"/>
        <end position="1699"/>
    </location>
</feature>
<feature type="turn" evidence="86">
    <location>
        <begin position="1701"/>
        <end position="1703"/>
    </location>
</feature>
<feature type="helix" evidence="88">
    <location>
        <begin position="1704"/>
        <end position="1715"/>
    </location>
</feature>
<feature type="helix" evidence="88">
    <location>
        <begin position="1716"/>
        <end position="1718"/>
    </location>
</feature>
<feature type="strand" evidence="88">
    <location>
        <begin position="1730"/>
        <end position="1733"/>
    </location>
</feature>
<feature type="strand" evidence="88">
    <location>
        <begin position="1735"/>
        <end position="1743"/>
    </location>
</feature>
<feature type="strand" evidence="88">
    <location>
        <begin position="1746"/>
        <end position="1753"/>
    </location>
</feature>
<feature type="strand" evidence="88">
    <location>
        <begin position="1761"/>
        <end position="1770"/>
    </location>
</feature>
<feature type="helix" evidence="88">
    <location>
        <begin position="1771"/>
        <end position="1791"/>
    </location>
</feature>
<feature type="helix" evidence="88">
    <location>
        <begin position="1793"/>
        <end position="1796"/>
    </location>
</feature>
<feature type="strand" evidence="90">
    <location>
        <begin position="1800"/>
        <end position="1802"/>
    </location>
</feature>
<feature type="strand" evidence="88">
    <location>
        <begin position="1809"/>
        <end position="1814"/>
    </location>
</feature>
<feature type="strand" evidence="84">
    <location>
        <begin position="1816"/>
        <end position="1819"/>
    </location>
</feature>
<feature type="strand" evidence="88">
    <location>
        <begin position="1823"/>
        <end position="1826"/>
    </location>
</feature>
<feature type="helix" evidence="88">
    <location>
        <begin position="1827"/>
        <end position="1835"/>
    </location>
</feature>
<feature type="strand" evidence="88">
    <location>
        <begin position="1838"/>
        <end position="1841"/>
    </location>
</feature>
<feature type="strand" evidence="87">
    <location>
        <begin position="1843"/>
        <end position="1845"/>
    </location>
</feature>
<feature type="strand" evidence="88">
    <location>
        <begin position="1849"/>
        <end position="1851"/>
    </location>
</feature>
<feature type="helix" evidence="88">
    <location>
        <begin position="1852"/>
        <end position="1854"/>
    </location>
</feature>
<feature type="turn" evidence="88">
    <location>
        <begin position="1857"/>
        <end position="1863"/>
    </location>
</feature>
<feature type="strand" evidence="88">
    <location>
        <begin position="1866"/>
        <end position="1868"/>
    </location>
</feature>
<feature type="helix" evidence="88">
    <location>
        <begin position="1872"/>
        <end position="1874"/>
    </location>
</feature>
<feature type="strand" evidence="86">
    <location>
        <begin position="1875"/>
        <end position="1877"/>
    </location>
</feature>
<feature type="helix" evidence="88">
    <location>
        <begin position="1881"/>
        <end position="1883"/>
    </location>
</feature>
<feature type="strand" evidence="88">
    <location>
        <begin position="1884"/>
        <end position="1887"/>
    </location>
</feature>
<feature type="strand" evidence="88">
    <location>
        <begin position="1889"/>
        <end position="1898"/>
    </location>
</feature>
<feature type="strand" evidence="88">
    <location>
        <begin position="1901"/>
        <end position="1908"/>
    </location>
</feature>
<feature type="strand" evidence="89">
    <location>
        <begin position="1910"/>
        <end position="1912"/>
    </location>
</feature>
<feature type="helix" evidence="88">
    <location>
        <begin position="1914"/>
        <end position="1924"/>
    </location>
</feature>
<feature type="strand" evidence="89">
    <location>
        <begin position="1935"/>
        <end position="1939"/>
    </location>
</feature>
<feature type="strand" evidence="88">
    <location>
        <begin position="1940"/>
        <end position="1942"/>
    </location>
</feature>
<feature type="strand" evidence="88">
    <location>
        <begin position="1946"/>
        <end position="1948"/>
    </location>
</feature>
<feature type="strand" evidence="83">
    <location>
        <begin position="1951"/>
        <end position="1954"/>
    </location>
</feature>
<feature type="helix" evidence="88">
    <location>
        <begin position="1955"/>
        <end position="1960"/>
    </location>
</feature>
<feature type="helix" evidence="89">
    <location>
        <begin position="1963"/>
        <end position="1965"/>
    </location>
</feature>
<feature type="helix" evidence="88">
    <location>
        <begin position="1968"/>
        <end position="1987"/>
    </location>
</feature>
<feature type="strand" evidence="88">
    <location>
        <begin position="1999"/>
        <end position="2003"/>
    </location>
</feature>
<feature type="strand" evidence="88">
    <location>
        <begin position="2013"/>
        <end position="2015"/>
    </location>
</feature>
<feature type="helix" evidence="84">
    <location>
        <begin position="2018"/>
        <end position="2025"/>
    </location>
</feature>
<feature type="strand" evidence="84">
    <location>
        <begin position="2036"/>
        <end position="2038"/>
    </location>
</feature>
<feature type="helix" evidence="88">
    <location>
        <begin position="2041"/>
        <end position="2045"/>
    </location>
</feature>
<feature type="strand" evidence="83">
    <location>
        <begin position="2046"/>
        <end position="2048"/>
    </location>
</feature>
<feature type="helix" evidence="88">
    <location>
        <begin position="2054"/>
        <end position="2068"/>
    </location>
</feature>
<feature type="turn" evidence="88">
    <location>
        <begin position="2069"/>
        <end position="2072"/>
    </location>
</feature>
<feature type="turn" evidence="91">
    <location>
        <begin position="2080"/>
        <end position="2082"/>
    </location>
</feature>
<feature type="helix" evidence="88">
    <location>
        <begin position="2085"/>
        <end position="2087"/>
    </location>
</feature>
<feature type="helix" evidence="88">
    <location>
        <begin position="2095"/>
        <end position="2099"/>
    </location>
</feature>
<feature type="turn" evidence="88">
    <location>
        <begin position="2105"/>
        <end position="2107"/>
    </location>
</feature>
<feature type="helix" evidence="88">
    <location>
        <begin position="2108"/>
        <end position="2114"/>
    </location>
</feature>
<feature type="turn" evidence="88">
    <location>
        <begin position="2119"/>
        <end position="2121"/>
    </location>
</feature>
<feature type="helix" evidence="88">
    <location>
        <begin position="2125"/>
        <end position="2132"/>
    </location>
</feature>
<feature type="helix" evidence="88">
    <location>
        <begin position="2135"/>
        <end position="2139"/>
    </location>
</feature>
<feature type="strand" evidence="80">
    <location>
        <begin position="2142"/>
        <end position="2145"/>
    </location>
</feature>
<feature type="strand" evidence="80">
    <location>
        <begin position="2152"/>
        <end position="2158"/>
    </location>
</feature>
<feature type="strand" evidence="80">
    <location>
        <begin position="2166"/>
        <end position="2171"/>
    </location>
</feature>
<feature type="strand" evidence="80">
    <location>
        <begin position="2173"/>
        <end position="2183"/>
    </location>
</feature>
<feature type="turn" evidence="80">
    <location>
        <begin position="2184"/>
        <end position="2186"/>
    </location>
</feature>
<feature type="strand" evidence="80">
    <location>
        <begin position="2189"/>
        <end position="2197"/>
    </location>
</feature>
<feature type="strand" evidence="80">
    <location>
        <begin position="2199"/>
        <end position="2207"/>
    </location>
</feature>
<feature type="turn" evidence="80">
    <location>
        <begin position="2208"/>
        <end position="2211"/>
    </location>
</feature>
<feature type="strand" evidence="80">
    <location>
        <begin position="2212"/>
        <end position="2219"/>
    </location>
</feature>
<feature type="strand" evidence="80">
    <location>
        <begin position="2224"/>
        <end position="2230"/>
    </location>
</feature>
<feature type="strand" evidence="80">
    <location>
        <begin position="2235"/>
        <end position="2237"/>
    </location>
</feature>
<feature type="strand" evidence="80">
    <location>
        <begin position="2245"/>
        <end position="2252"/>
    </location>
</feature>
<feature type="strand" evidence="84">
    <location>
        <begin position="2256"/>
        <end position="2258"/>
    </location>
</feature>
<feature type="strand" evidence="80">
    <location>
        <begin position="2262"/>
        <end position="2267"/>
    </location>
</feature>
<feature type="strand" evidence="80">
    <location>
        <begin position="2270"/>
        <end position="2276"/>
    </location>
</feature>
<feature type="helix" evidence="80">
    <location>
        <begin position="2278"/>
        <end position="2281"/>
    </location>
</feature>
<feature type="strand" evidence="84">
    <location>
        <begin position="2282"/>
        <end position="2284"/>
    </location>
</feature>
<feature type="strand" evidence="80">
    <location>
        <begin position="2288"/>
        <end position="2292"/>
    </location>
</feature>
<feature type="strand" evidence="80">
    <location>
        <begin position="2300"/>
        <end position="2304"/>
    </location>
</feature>
<feature type="strand" evidence="80">
    <location>
        <begin position="2315"/>
        <end position="2319"/>
    </location>
</feature>
<feature type="strand" evidence="80">
    <location>
        <begin position="2322"/>
        <end position="2330"/>
    </location>
</feature>
<feature type="strand" evidence="80">
    <location>
        <begin position="2335"/>
        <end position="2338"/>
    </location>
</feature>
<feature type="helix" evidence="80">
    <location>
        <begin position="2339"/>
        <end position="2343"/>
    </location>
</feature>
<feature type="helix" evidence="80">
    <location>
        <begin position="2347"/>
        <end position="2350"/>
    </location>
</feature>
<feature type="strand" evidence="80">
    <location>
        <begin position="2354"/>
        <end position="2367"/>
    </location>
</feature>
<feature type="strand" evidence="80">
    <location>
        <begin position="2371"/>
        <end position="2376"/>
    </location>
</feature>
<feature type="turn" evidence="80">
    <location>
        <begin position="2378"/>
        <end position="2380"/>
    </location>
</feature>
<feature type="strand" evidence="80">
    <location>
        <begin position="2382"/>
        <end position="2388"/>
    </location>
</feature>
<feature type="helix" evidence="80">
    <location>
        <begin position="2389"/>
        <end position="2393"/>
    </location>
</feature>
<feature type="turn" evidence="84">
    <location>
        <begin position="2397"/>
        <end position="2399"/>
    </location>
</feature>
<feature type="helix" evidence="84">
    <location>
        <begin position="2403"/>
        <end position="2406"/>
    </location>
</feature>
<feature type="strand" evidence="80">
    <location>
        <begin position="2414"/>
        <end position="2419"/>
    </location>
</feature>
<feature type="strand" evidence="80">
    <location>
        <begin position="2421"/>
        <end position="2423"/>
    </location>
</feature>
<feature type="strand" evidence="80">
    <location>
        <begin position="2425"/>
        <end position="2432"/>
    </location>
</feature>
<feature type="strand" evidence="80">
    <location>
        <begin position="2434"/>
        <end position="2437"/>
    </location>
</feature>
<feature type="turn" evidence="80">
    <location>
        <begin position="2439"/>
        <end position="2441"/>
    </location>
</feature>
<feature type="strand" evidence="80">
    <location>
        <begin position="2444"/>
        <end position="2448"/>
    </location>
</feature>
<feature type="strand" evidence="80">
    <location>
        <begin position="2451"/>
        <end position="2462"/>
    </location>
</feature>
<feature type="strand" evidence="80">
    <location>
        <begin position="2468"/>
        <end position="2475"/>
    </location>
</feature>
<feature type="helix" evidence="84">
    <location>
        <begin position="2482"/>
        <end position="2484"/>
    </location>
</feature>
<feature type="strand" evidence="80">
    <location>
        <begin position="2491"/>
        <end position="2497"/>
    </location>
</feature>
<feature type="helix" evidence="88">
    <location>
        <begin position="2500"/>
        <end position="2521"/>
    </location>
</feature>
<evidence type="ECO:0000250" key="1">
    <source>
        <dbReference type="UniProtKB" id="Q5S006"/>
    </source>
</evidence>
<evidence type="ECO:0000255" key="2"/>
<evidence type="ECO:0000255" key="3">
    <source>
        <dbReference type="PROSITE-ProRule" id="PRU00159"/>
    </source>
</evidence>
<evidence type="ECO:0000255" key="4">
    <source>
        <dbReference type="PROSITE-ProRule" id="PRU00758"/>
    </source>
</evidence>
<evidence type="ECO:0000255" key="5">
    <source>
        <dbReference type="PROSITE-ProRule" id="PRU10027"/>
    </source>
</evidence>
<evidence type="ECO:0000269" key="6">
    <source>
    </source>
</evidence>
<evidence type="ECO:0000269" key="7">
    <source>
    </source>
</evidence>
<evidence type="ECO:0000269" key="8">
    <source>
    </source>
</evidence>
<evidence type="ECO:0000269" key="9">
    <source>
    </source>
</evidence>
<evidence type="ECO:0000269" key="10">
    <source>
    </source>
</evidence>
<evidence type="ECO:0000269" key="11">
    <source>
    </source>
</evidence>
<evidence type="ECO:0000269" key="12">
    <source>
    </source>
</evidence>
<evidence type="ECO:0000269" key="13">
    <source>
    </source>
</evidence>
<evidence type="ECO:0000269" key="14">
    <source>
    </source>
</evidence>
<evidence type="ECO:0000269" key="15">
    <source>
    </source>
</evidence>
<evidence type="ECO:0000269" key="16">
    <source>
    </source>
</evidence>
<evidence type="ECO:0000269" key="17">
    <source>
    </source>
</evidence>
<evidence type="ECO:0000269" key="18">
    <source>
    </source>
</evidence>
<evidence type="ECO:0000269" key="19">
    <source>
    </source>
</evidence>
<evidence type="ECO:0000269" key="20">
    <source>
    </source>
</evidence>
<evidence type="ECO:0000269" key="21">
    <source>
    </source>
</evidence>
<evidence type="ECO:0000269" key="22">
    <source>
    </source>
</evidence>
<evidence type="ECO:0000269" key="23">
    <source>
    </source>
</evidence>
<evidence type="ECO:0000269" key="24">
    <source>
    </source>
</evidence>
<evidence type="ECO:0000269" key="25">
    <source>
    </source>
</evidence>
<evidence type="ECO:0000269" key="26">
    <source>
    </source>
</evidence>
<evidence type="ECO:0000269" key="27">
    <source>
    </source>
</evidence>
<evidence type="ECO:0000269" key="28">
    <source>
    </source>
</evidence>
<evidence type="ECO:0000269" key="29">
    <source>
    </source>
</evidence>
<evidence type="ECO:0000269" key="30">
    <source>
    </source>
</evidence>
<evidence type="ECO:0000269" key="31">
    <source>
    </source>
</evidence>
<evidence type="ECO:0000269" key="32">
    <source>
    </source>
</evidence>
<evidence type="ECO:0000269" key="33">
    <source>
    </source>
</evidence>
<evidence type="ECO:0000269" key="34">
    <source>
    </source>
</evidence>
<evidence type="ECO:0000269" key="35">
    <source>
    </source>
</evidence>
<evidence type="ECO:0000269" key="36">
    <source>
    </source>
</evidence>
<evidence type="ECO:0000269" key="37">
    <source>
    </source>
</evidence>
<evidence type="ECO:0000269" key="38">
    <source>
    </source>
</evidence>
<evidence type="ECO:0000269" key="39">
    <source>
    </source>
</evidence>
<evidence type="ECO:0000269" key="40">
    <source>
    </source>
</evidence>
<evidence type="ECO:0000269" key="41">
    <source>
    </source>
</evidence>
<evidence type="ECO:0000269" key="42">
    <source>
    </source>
</evidence>
<evidence type="ECO:0000269" key="43">
    <source>
    </source>
</evidence>
<evidence type="ECO:0000269" key="44">
    <source>
    </source>
</evidence>
<evidence type="ECO:0000269" key="45">
    <source>
    </source>
</evidence>
<evidence type="ECO:0000269" key="46">
    <source>
    </source>
</evidence>
<evidence type="ECO:0000269" key="47">
    <source>
    </source>
</evidence>
<evidence type="ECO:0000269" key="48">
    <source>
    </source>
</evidence>
<evidence type="ECO:0000269" key="49">
    <source>
    </source>
</evidence>
<evidence type="ECO:0000269" key="50">
    <source>
    </source>
</evidence>
<evidence type="ECO:0000269" key="51">
    <source>
    </source>
</evidence>
<evidence type="ECO:0000269" key="52">
    <source>
    </source>
</evidence>
<evidence type="ECO:0000269" key="53">
    <source>
    </source>
</evidence>
<evidence type="ECO:0000269" key="54">
    <source>
    </source>
</evidence>
<evidence type="ECO:0000269" key="55">
    <source>
    </source>
</evidence>
<evidence type="ECO:0000269" key="56">
    <source>
    </source>
</evidence>
<evidence type="ECO:0000269" key="57">
    <source>
    </source>
</evidence>
<evidence type="ECO:0000269" key="58">
    <source>
    </source>
</evidence>
<evidence type="ECO:0000269" key="59">
    <source>
    </source>
</evidence>
<evidence type="ECO:0000269" key="60">
    <source>
    </source>
</evidence>
<evidence type="ECO:0000269" key="61">
    <source>
    </source>
</evidence>
<evidence type="ECO:0000269" key="62">
    <source>
    </source>
</evidence>
<evidence type="ECO:0000269" key="63">
    <source>
    </source>
</evidence>
<evidence type="ECO:0000269" key="64">
    <source>
    </source>
</evidence>
<evidence type="ECO:0000269" key="65">
    <source>
    </source>
</evidence>
<evidence type="ECO:0000269" key="66">
    <source>
    </source>
</evidence>
<evidence type="ECO:0000269" key="67">
    <source>
    </source>
</evidence>
<evidence type="ECO:0000305" key="68"/>
<evidence type="ECO:0007744" key="69">
    <source>
        <dbReference type="PDB" id="2ZEJ"/>
    </source>
</evidence>
<evidence type="ECO:0007744" key="70">
    <source>
        <dbReference type="PDB" id="3D6T"/>
    </source>
</evidence>
<evidence type="ECO:0007744" key="71">
    <source>
        <dbReference type="PDB" id="5MY9"/>
    </source>
</evidence>
<evidence type="ECO:0007744" key="72">
    <source>
        <dbReference type="PDB" id="5MYC"/>
    </source>
</evidence>
<evidence type="ECO:0007744" key="73">
    <source>
        <dbReference type="PDB" id="6DLO"/>
    </source>
</evidence>
<evidence type="ECO:0007744" key="74">
    <source>
        <dbReference type="PDB" id="6DLP"/>
    </source>
</evidence>
<evidence type="ECO:0007744" key="75">
    <source>
        <dbReference type="PDB" id="8FO2"/>
    </source>
</evidence>
<evidence type="ECO:0007744" key="76">
    <source>
        <dbReference type="PDB" id="8FO8"/>
    </source>
</evidence>
<evidence type="ECO:0007744" key="77">
    <source>
        <dbReference type="PDB" id="8FO9"/>
    </source>
</evidence>
<evidence type="ECO:0007744" key="78">
    <source>
        <dbReference type="PDB" id="8SMC"/>
    </source>
</evidence>
<evidence type="ECO:0007829" key="79">
    <source>
        <dbReference type="PDB" id="5MYC"/>
    </source>
</evidence>
<evidence type="ECO:0007829" key="80">
    <source>
        <dbReference type="PDB" id="6DLO"/>
    </source>
</evidence>
<evidence type="ECO:0007829" key="81">
    <source>
        <dbReference type="PDB" id="6OJE"/>
    </source>
</evidence>
<evidence type="ECO:0007829" key="82">
    <source>
        <dbReference type="PDB" id="6OJF"/>
    </source>
</evidence>
<evidence type="ECO:0007829" key="83">
    <source>
        <dbReference type="PDB" id="6VP6"/>
    </source>
</evidence>
<evidence type="ECO:0007829" key="84">
    <source>
        <dbReference type="PDB" id="7LI4"/>
    </source>
</evidence>
<evidence type="ECO:0007829" key="85">
    <source>
        <dbReference type="PDB" id="8TXZ"/>
    </source>
</evidence>
<evidence type="ECO:0007829" key="86">
    <source>
        <dbReference type="PDB" id="8TYQ"/>
    </source>
</evidence>
<evidence type="ECO:0007829" key="87">
    <source>
        <dbReference type="PDB" id="8TZB"/>
    </source>
</evidence>
<evidence type="ECO:0007829" key="88">
    <source>
        <dbReference type="PDB" id="8TZC"/>
    </source>
</evidence>
<evidence type="ECO:0007829" key="89">
    <source>
        <dbReference type="PDB" id="8TZE"/>
    </source>
</evidence>
<evidence type="ECO:0007829" key="90">
    <source>
        <dbReference type="PDB" id="8TZF"/>
    </source>
</evidence>
<evidence type="ECO:0007829" key="91">
    <source>
        <dbReference type="PDB" id="8TZG"/>
    </source>
</evidence>